<feature type="signal peptide">
    <location>
        <begin position="1"/>
        <end position="22"/>
    </location>
</feature>
<feature type="propeptide" id="PRO_0000005719" description="N-terminal propeptide" evidence="72">
    <location>
        <begin position="23"/>
        <end position="161"/>
    </location>
</feature>
<feature type="chain" id="PRO_0000005720" description="Collagen alpha-1(I) chain">
    <location>
        <begin position="162"/>
        <end position="1218"/>
    </location>
</feature>
<feature type="propeptide" id="PRO_0000005721" description="C-terminal propeptide">
    <location>
        <begin position="1219"/>
        <end position="1464"/>
    </location>
</feature>
<feature type="domain" description="VWFC" evidence="7">
    <location>
        <begin position="38"/>
        <end position="96"/>
    </location>
</feature>
<feature type="domain" description="Fibrillar collagen NC1" evidence="8">
    <location>
        <begin position="1229"/>
        <end position="1464"/>
    </location>
</feature>
<feature type="region of interest" description="Disordered" evidence="9">
    <location>
        <begin position="98"/>
        <end position="1214"/>
    </location>
</feature>
<feature type="region of interest" description="Nonhelical region (N-terminal)">
    <location>
        <begin position="162"/>
        <end position="178"/>
    </location>
</feature>
<feature type="region of interest" description="Triple-helical region">
    <location>
        <begin position="179"/>
        <end position="1192"/>
    </location>
</feature>
<feature type="region of interest" description="Nonhelical region (C-terminal)">
    <location>
        <begin position="1193"/>
        <end position="1218"/>
    </location>
</feature>
<feature type="short sequence motif" description="Cell attachment site" evidence="6">
    <location>
        <begin position="745"/>
        <end position="747"/>
    </location>
</feature>
<feature type="short sequence motif" description="Cell attachment site" evidence="6">
    <location>
        <begin position="1093"/>
        <end position="1095"/>
    </location>
</feature>
<feature type="compositionally biased region" description="Pro residues" evidence="9">
    <location>
        <begin position="138"/>
        <end position="153"/>
    </location>
</feature>
<feature type="compositionally biased region" description="Low complexity" evidence="9">
    <location>
        <begin position="198"/>
        <end position="217"/>
    </location>
</feature>
<feature type="compositionally biased region" description="Basic and acidic residues" evidence="9">
    <location>
        <begin position="229"/>
        <end position="243"/>
    </location>
</feature>
<feature type="compositionally biased region" description="Low complexity" evidence="9">
    <location>
        <begin position="279"/>
        <end position="295"/>
    </location>
</feature>
<feature type="compositionally biased region" description="Low complexity" evidence="9">
    <location>
        <begin position="318"/>
        <end position="331"/>
    </location>
</feature>
<feature type="compositionally biased region" description="Pro residues" evidence="9">
    <location>
        <begin position="333"/>
        <end position="345"/>
    </location>
</feature>
<feature type="compositionally biased region" description="Low complexity" evidence="9">
    <location>
        <begin position="379"/>
        <end position="418"/>
    </location>
</feature>
<feature type="compositionally biased region" description="Low complexity" evidence="9">
    <location>
        <begin position="448"/>
        <end position="457"/>
    </location>
</feature>
<feature type="compositionally biased region" description="Gly residues" evidence="9">
    <location>
        <begin position="485"/>
        <end position="494"/>
    </location>
</feature>
<feature type="compositionally biased region" description="Low complexity" evidence="9">
    <location>
        <begin position="538"/>
        <end position="564"/>
    </location>
</feature>
<feature type="compositionally biased region" description="Low complexity" evidence="9">
    <location>
        <begin position="573"/>
        <end position="592"/>
    </location>
</feature>
<feature type="compositionally biased region" description="Low complexity" evidence="9">
    <location>
        <begin position="634"/>
        <end position="661"/>
    </location>
</feature>
<feature type="compositionally biased region" description="Low complexity" evidence="9">
    <location>
        <begin position="696"/>
        <end position="724"/>
    </location>
</feature>
<feature type="compositionally biased region" description="Low complexity" evidence="9">
    <location>
        <begin position="784"/>
        <end position="798"/>
    </location>
</feature>
<feature type="compositionally biased region" description="Low complexity" evidence="9">
    <location>
        <begin position="811"/>
        <end position="838"/>
    </location>
</feature>
<feature type="compositionally biased region" description="Pro residues" evidence="9">
    <location>
        <begin position="840"/>
        <end position="852"/>
    </location>
</feature>
<feature type="compositionally biased region" description="Low complexity" evidence="9">
    <location>
        <begin position="853"/>
        <end position="883"/>
    </location>
</feature>
<feature type="compositionally biased region" description="Low complexity" evidence="9">
    <location>
        <begin position="912"/>
        <end position="921"/>
    </location>
</feature>
<feature type="compositionally biased region" description="Low complexity" evidence="9">
    <location>
        <begin position="931"/>
        <end position="955"/>
    </location>
</feature>
<feature type="compositionally biased region" description="Pro residues" evidence="9">
    <location>
        <begin position="996"/>
        <end position="1006"/>
    </location>
</feature>
<feature type="compositionally biased region" description="Pro residues" evidence="9">
    <location>
        <begin position="1042"/>
        <end position="1057"/>
    </location>
</feature>
<feature type="compositionally biased region" description="Low complexity" evidence="9">
    <location>
        <begin position="1078"/>
        <end position="1092"/>
    </location>
</feature>
<feature type="compositionally biased region" description="Basic and acidic residues" evidence="9">
    <location>
        <begin position="1093"/>
        <end position="1107"/>
    </location>
</feature>
<feature type="compositionally biased region" description="Low complexity" evidence="9">
    <location>
        <begin position="1126"/>
        <end position="1159"/>
    </location>
</feature>
<feature type="compositionally biased region" description="Pro residues" evidence="9">
    <location>
        <begin position="1177"/>
        <end position="1192"/>
    </location>
</feature>
<feature type="binding site" evidence="1">
    <location>
        <position position="1277"/>
    </location>
    <ligand>
        <name>Ca(2+)</name>
        <dbReference type="ChEBI" id="CHEBI:29108"/>
    </ligand>
</feature>
<feature type="binding site" evidence="1">
    <location>
        <position position="1279"/>
    </location>
    <ligand>
        <name>Ca(2+)</name>
        <dbReference type="ChEBI" id="CHEBI:29108"/>
    </ligand>
</feature>
<feature type="binding site" evidence="1">
    <location>
        <position position="1280"/>
    </location>
    <ligand>
        <name>Ca(2+)</name>
        <dbReference type="ChEBI" id="CHEBI:29108"/>
    </ligand>
</feature>
<feature type="binding site" evidence="1">
    <location>
        <position position="1282"/>
    </location>
    <ligand>
        <name>Ca(2+)</name>
        <dbReference type="ChEBI" id="CHEBI:29108"/>
    </ligand>
</feature>
<feature type="binding site" evidence="1">
    <location>
        <position position="1285"/>
    </location>
    <ligand>
        <name>Ca(2+)</name>
        <dbReference type="ChEBI" id="CHEBI:29108"/>
    </ligand>
</feature>
<feature type="site" description="Cleavage; by procollagen N-endopeptidase">
    <location>
        <begin position="161"/>
        <end position="162"/>
    </location>
</feature>
<feature type="site" description="Cleavage; by collagenase" evidence="1">
    <location>
        <begin position="953"/>
        <end position="954"/>
    </location>
</feature>
<feature type="site" description="Cleavage; by procollagen C-endopeptidase">
    <location>
        <begin position="1218"/>
        <end position="1219"/>
    </location>
</feature>
<feature type="modified residue" description="Pyrrolidone carboxylic acid" evidence="72">
    <location>
        <position position="162"/>
    </location>
</feature>
<feature type="modified residue" description="Allysine" evidence="72">
    <location>
        <position position="170"/>
    </location>
</feature>
<feature type="modified residue" description="Phosphoserine" evidence="3">
    <location>
        <position position="171"/>
    </location>
</feature>
<feature type="modified residue" description="4-hydroxyproline" evidence="4">
    <location>
        <position position="190"/>
    </location>
</feature>
<feature type="modified residue" description="4-hydroxyproline" evidence="4">
    <location>
        <position position="193"/>
    </location>
</feature>
<feature type="modified residue" description="4-hydroxyproline" evidence="4">
    <location>
        <position position="196"/>
    </location>
</feature>
<feature type="modified residue" description="4-hydroxyproline" evidence="4">
    <location>
        <position position="205"/>
    </location>
</feature>
<feature type="modified residue" description="4-hydroxyproline" evidence="4">
    <location>
        <position position="208"/>
    </location>
</feature>
<feature type="modified residue" description="4-hydroxyproline" evidence="4">
    <location>
        <position position="211"/>
    </location>
</feature>
<feature type="modified residue" description="4-hydroxyproline" evidence="4">
    <location>
        <position position="226"/>
    </location>
</feature>
<feature type="modified residue" description="4-hydroxyproline" evidence="4">
    <location>
        <position position="241"/>
    </location>
</feature>
<feature type="modified residue" description="4-hydroxyproline" evidence="4">
    <location>
        <position position="247"/>
    </location>
</feature>
<feature type="modified residue" description="4-hydroxyproline" evidence="4">
    <location>
        <position position="256"/>
    </location>
</feature>
<feature type="modified residue" description="4-hydroxyproline" evidence="4">
    <location>
        <position position="262"/>
    </location>
</feature>
<feature type="modified residue" description="5-hydroxylysine; alternate" evidence="71">
    <location>
        <position position="265"/>
    </location>
</feature>
<feature type="modified residue" description="Phosphoserine" evidence="3">
    <location>
        <position position="271"/>
    </location>
</feature>
<feature type="modified residue" description="4-hydroxyproline" evidence="4">
    <location>
        <position position="289"/>
    </location>
</feature>
<feature type="modified residue" description="4-hydroxyproline" evidence="4">
    <location>
        <position position="292"/>
    </location>
</feature>
<feature type="modified residue" description="4-hydroxyproline" evidence="4">
    <location>
        <position position="298"/>
    </location>
</feature>
<feature type="modified residue" description="4-hydroxyproline" evidence="4">
    <location>
        <position position="307"/>
    </location>
</feature>
<feature type="modified residue" description="4-hydroxyproline" evidence="4">
    <location>
        <position position="313"/>
    </location>
</feature>
<feature type="modified residue" description="4-hydroxyproline" evidence="4">
    <location>
        <position position="334"/>
    </location>
</feature>
<feature type="modified residue" description="4-hydroxyproline" evidence="4">
    <location>
        <position position="343"/>
    </location>
</feature>
<feature type="modified residue" description="4-hydroxyproline" evidence="4">
    <location>
        <position position="346"/>
    </location>
</feature>
<feature type="modified residue" description="4-hydroxyproline" evidence="4">
    <location>
        <position position="373"/>
    </location>
</feature>
<feature type="modified residue" description="4-hydroxyproline" evidence="4">
    <location>
        <position position="376"/>
    </location>
</feature>
<feature type="modified residue" description="4-hydroxyproline" evidence="4">
    <location>
        <position position="388"/>
    </location>
</feature>
<feature type="modified residue" description="4-hydroxyproline" evidence="4">
    <location>
        <position position="394"/>
    </location>
</feature>
<feature type="modified residue" description="4-hydroxyproline" evidence="4">
    <location>
        <position position="403"/>
    </location>
</feature>
<feature type="modified residue" description="4-hydroxyproline" evidence="4">
    <location>
        <position position="409"/>
    </location>
</feature>
<feature type="modified residue" description="4-hydroxyproline" evidence="4">
    <location>
        <position position="412"/>
    </location>
</feature>
<feature type="modified residue" description="4-hydroxyproline" evidence="4">
    <location>
        <position position="427"/>
    </location>
</feature>
<feature type="modified residue" description="5-hydroxylysine" evidence="4">
    <location>
        <position position="430"/>
    </location>
</feature>
<feature type="modified residue" description="4-hydroxyproline" evidence="4">
    <location>
        <position position="436"/>
    </location>
</feature>
<feature type="modified residue" description="4-hydroxyproline" evidence="4">
    <location>
        <position position="439"/>
    </location>
</feature>
<feature type="modified residue" description="4-hydroxyproline" evidence="4">
    <location>
        <position position="451"/>
    </location>
</feature>
<feature type="modified residue" description="4-hydroxyproline" evidence="4">
    <location>
        <position position="460"/>
    </location>
</feature>
<feature type="modified residue" description="4-hydroxyproline" evidence="4">
    <location>
        <position position="475"/>
    </location>
</feature>
<feature type="modified residue" description="4-hydroxyproline" evidence="4">
    <location>
        <position position="481"/>
    </location>
</feature>
<feature type="modified residue" description="4-hydroxyproline" evidence="4">
    <location>
        <position position="490"/>
    </location>
</feature>
<feature type="modified residue" description="4-hydroxyproline" evidence="4">
    <location>
        <position position="496"/>
    </location>
</feature>
<feature type="modified residue" description="5-hydroxylysine" evidence="4">
    <location>
        <position position="505"/>
    </location>
</feature>
<feature type="modified residue" description="4-hydroxyproline" evidence="4">
    <location>
        <position position="514"/>
    </location>
</feature>
<feature type="modified residue" description="4-hydroxyproline" evidence="4">
    <location>
        <position position="523"/>
    </location>
</feature>
<feature type="modified residue" description="4-hydroxyproline" evidence="4">
    <location>
        <position position="529"/>
    </location>
</feature>
<feature type="modified residue" description="4-hydroxyproline" evidence="4">
    <location>
        <position position="535"/>
    </location>
</feature>
<feature type="modified residue" description="4-hydroxyproline" evidence="4">
    <location>
        <position position="544"/>
    </location>
</feature>
<feature type="modified residue" description="4-hydroxyproline" evidence="4">
    <location>
        <position position="547"/>
    </location>
</feature>
<feature type="modified residue" description="4-hydroxyproline" evidence="4">
    <location>
        <position position="556"/>
    </location>
</feature>
<feature type="modified residue" description="4-hydroxyproline" evidence="4">
    <location>
        <position position="565"/>
    </location>
</feature>
<feature type="modified residue" description="4-hydroxyproline" evidence="4">
    <location>
        <position position="571"/>
    </location>
</feature>
<feature type="modified residue" description="4-hydroxyproline" evidence="4">
    <location>
        <position position="583"/>
    </location>
</feature>
<feature type="modified residue" description="4-hydroxyproline" evidence="4">
    <location>
        <position position="592"/>
    </location>
</feature>
<feature type="modified residue" description="4-hydroxyproline" evidence="4">
    <location>
        <position position="601"/>
    </location>
</feature>
<feature type="modified residue" description="4-hydroxyproline" evidence="4">
    <location>
        <position position="604"/>
    </location>
</feature>
<feature type="modified residue" description="4-hydroxyproline" evidence="4">
    <location>
        <position position="622"/>
    </location>
</feature>
<feature type="modified residue" description="4-hydroxyproline" evidence="4">
    <location>
        <position position="640"/>
    </location>
</feature>
<feature type="modified residue" description="4-hydroxyproline" evidence="4">
    <location>
        <position position="646"/>
    </location>
</feature>
<feature type="modified residue" description="4-hydroxyproline" evidence="4">
    <location>
        <position position="652"/>
    </location>
</feature>
<feature type="modified residue" description="4-hydroxyproline" evidence="4">
    <location>
        <position position="658"/>
    </location>
</feature>
<feature type="modified residue" description="4-hydroxyproline" evidence="4">
    <location>
        <position position="664"/>
    </location>
</feature>
<feature type="modified residue" description="4-hydroxyproline" evidence="4">
    <location>
        <position position="670"/>
    </location>
</feature>
<feature type="modified residue" description="4-hydroxyproline" evidence="4">
    <location>
        <position position="682"/>
    </location>
</feature>
<feature type="modified residue" description="4-hydroxyproline" evidence="4">
    <location>
        <position position="691"/>
    </location>
</feature>
<feature type="modified residue" description="4-hydroxyproline" evidence="4">
    <location>
        <position position="703"/>
    </location>
</feature>
<feature type="modified residue" description="4-hydroxyproline" evidence="4">
    <location>
        <position position="715"/>
    </location>
</feature>
<feature type="modified residue" description="4-hydroxyproline" evidence="4">
    <location>
        <position position="718"/>
    </location>
</feature>
<feature type="modified residue" description="4-hydroxyproline" evidence="4">
    <location>
        <position position="724"/>
    </location>
</feature>
<feature type="modified residue" description="4-hydroxyproline" evidence="4">
    <location>
        <position position="730"/>
    </location>
</feature>
<feature type="modified residue" description="4-hydroxyproline" evidence="4">
    <location>
        <position position="739"/>
    </location>
</feature>
<feature type="modified residue" description="5-hydroxylysine" evidence="4">
    <location>
        <position position="751"/>
    </location>
</feature>
<feature type="modified residue" description="4-hydroxyproline" evidence="4">
    <location>
        <position position="757"/>
    </location>
</feature>
<feature type="modified residue" description="4-hydroxyproline" evidence="4">
    <location>
        <position position="772"/>
    </location>
</feature>
<feature type="modified residue" description="4-hydroxyproline" evidence="4">
    <location>
        <position position="778"/>
    </location>
</feature>
<feature type="modified residue" description="Phosphoserine" evidence="3">
    <location>
        <position position="787"/>
    </location>
</feature>
<feature type="modified residue" description="4-hydroxyproline" evidence="4">
    <location>
        <position position="799"/>
    </location>
</feature>
<feature type="modified residue" description="4-hydroxyproline" evidence="4">
    <location>
        <position position="805"/>
    </location>
</feature>
<feature type="modified residue" description="4-hydroxyproline" evidence="4">
    <location>
        <position position="808"/>
    </location>
</feature>
<feature type="modified residue" description="4-hydroxyproline" evidence="4">
    <location>
        <position position="817"/>
    </location>
</feature>
<feature type="modified residue" description="4-hydroxyproline" evidence="4">
    <location>
        <position position="823"/>
    </location>
</feature>
<feature type="modified residue" description="4-hydroxyproline" evidence="4">
    <location>
        <position position="841"/>
    </location>
</feature>
<feature type="modified residue" description="4-hydroxyproline" evidence="4">
    <location>
        <position position="850"/>
    </location>
</feature>
<feature type="modified residue" description="4-hydroxyproline" evidence="4">
    <location>
        <position position="859"/>
    </location>
</feature>
<feature type="modified residue" description="5-hydroxylysine" evidence="4">
    <location>
        <position position="862"/>
    </location>
</feature>
<feature type="modified residue" description="4-hydroxyproline" evidence="4">
    <location>
        <position position="871"/>
    </location>
</feature>
<feature type="modified residue" description="4-hydroxyproline" evidence="4">
    <location>
        <position position="877"/>
    </location>
</feature>
<feature type="modified residue" description="3-hydroxyproline" evidence="5">
    <location>
        <position position="885"/>
    </location>
</feature>
<feature type="modified residue" description="4-hydroxyproline" evidence="5">
    <location>
        <position position="886"/>
    </location>
</feature>
<feature type="modified residue" description="4-hydroxyproline" evidence="5">
    <location>
        <position position="895"/>
    </location>
</feature>
<feature type="modified residue" description="4-hydroxyproline" evidence="5">
    <location>
        <position position="898"/>
    </location>
</feature>
<feature type="modified residue" description="4-hydroxyproline" evidence="4">
    <location>
        <position position="919"/>
    </location>
</feature>
<feature type="modified residue" description="4-hydroxyproline" evidence="4">
    <location>
        <position position="928"/>
    </location>
</feature>
<feature type="modified residue" description="4-hydroxyproline" evidence="4">
    <location>
        <position position="937"/>
    </location>
</feature>
<feature type="modified residue" description="4-hydroxyproline" evidence="4">
    <location>
        <position position="946"/>
    </location>
</feature>
<feature type="modified residue" description="4-hydroxyproline" evidence="4">
    <location>
        <position position="964"/>
    </location>
</feature>
<feature type="modified residue" description="4-hydroxyproline" evidence="4">
    <location>
        <position position="973"/>
    </location>
</feature>
<feature type="modified residue" description="4-hydroxyproline" evidence="4">
    <location>
        <position position="976"/>
    </location>
</feature>
<feature type="modified residue" description="4-hydroxyproline" evidence="4">
    <location>
        <position position="982"/>
    </location>
</feature>
<feature type="modified residue" description="4-hydroxyproline" evidence="4">
    <location>
        <position position="997"/>
    </location>
</feature>
<feature type="modified residue" description="4-hydroxyproline" evidence="4">
    <location>
        <position position="1003"/>
    </location>
</feature>
<feature type="modified residue" description="4-hydroxyproline" evidence="4">
    <location>
        <position position="1009"/>
    </location>
</feature>
<feature type="modified residue" description="4-hydroxyproline" evidence="4">
    <location>
        <position position="1018"/>
    </location>
</feature>
<feature type="modified residue" description="4-hydroxyproline" evidence="4">
    <location>
        <position position="1024"/>
    </location>
</feature>
<feature type="modified residue" description="5-hydroxylysine" evidence="4">
    <location>
        <position position="1033"/>
    </location>
</feature>
<feature type="modified residue" description="4-hydroxyproline" evidence="4">
    <location>
        <position position="1045"/>
    </location>
</feature>
<feature type="modified residue" description="4-hydroxyproline" evidence="4">
    <location>
        <position position="1048"/>
    </location>
</feature>
<feature type="modified residue" description="4-hydroxyproline" evidence="4">
    <location>
        <position position="1051"/>
    </location>
</feature>
<feature type="modified residue" description="5-hydroxylysine" evidence="4">
    <location>
        <position position="1096"/>
    </location>
</feature>
<feature type="modified residue" description="5-hydroxylysine; alternate" evidence="4">
    <location>
        <position position="1108"/>
    </location>
</feature>
<feature type="modified residue" description="4-hydroxyproline" evidence="4">
    <location>
        <position position="1120"/>
    </location>
</feature>
<feature type="modified residue" description="4-hydroxyproline" evidence="4">
    <location>
        <position position="1123"/>
    </location>
</feature>
<feature type="modified residue" description="4-hydroxyproline" evidence="4">
    <location>
        <position position="1126"/>
    </location>
</feature>
<feature type="modified residue" description="4-hydroxyproline" evidence="4">
    <location>
        <position position="1144"/>
    </location>
</feature>
<feature type="modified residue" description="4-hydroxyproline" evidence="5">
    <location>
        <position position="1159"/>
    </location>
</feature>
<feature type="modified residue" description="3-hydroxyproline" evidence="5">
    <location>
        <position position="1164"/>
    </location>
</feature>
<feature type="modified residue" description="4-hydroxyproline" evidence="5">
    <location>
        <position position="1165"/>
    </location>
</feature>
<feature type="modified residue" description="3-hydroxyproline" evidence="5">
    <location>
        <position position="1179"/>
    </location>
</feature>
<feature type="modified residue" description="4-hydroxyproline" evidence="5">
    <location>
        <position position="1180"/>
    </location>
</feature>
<feature type="modified residue" description="3-hydroxyproline" evidence="5">
    <location>
        <position position="1182"/>
    </location>
</feature>
<feature type="modified residue" description="4-hydroxyproline" evidence="5">
    <location>
        <position position="1183"/>
    </location>
</feature>
<feature type="modified residue" description="3-hydroxyproline" evidence="5">
    <location>
        <position position="1185"/>
    </location>
</feature>
<feature type="modified residue" description="4-hydroxyproline" evidence="5">
    <location>
        <position position="1186"/>
    </location>
</feature>
<feature type="modified residue" description="4-hydroxyproline" evidence="5">
    <location>
        <position position="1189"/>
    </location>
</feature>
<feature type="modified residue" description="4-hydroxyproline" evidence="5">
    <location>
        <position position="1192"/>
    </location>
</feature>
<feature type="modified residue" description="Allysine" evidence="2">
    <location>
        <position position="1208"/>
    </location>
</feature>
<feature type="glycosylation site" description="O-linked (Gal...) hydroxylysine; alternate" evidence="71">
    <location>
        <position position="265"/>
    </location>
</feature>
<feature type="glycosylation site" description="O-linked (Gal...) hydroxylysine; alternate" evidence="4">
    <location>
        <position position="1108"/>
    </location>
</feature>
<feature type="glycosylation site" description="N-linked (GlcNAc...) asparagine">
    <location>
        <position position="1365"/>
    </location>
</feature>
<feature type="disulfide bond" evidence="8">
    <location>
        <begin position="1259"/>
        <end position="1291"/>
    </location>
</feature>
<feature type="disulfide bond" description="Interchain" evidence="8">
    <location>
        <position position="1265"/>
    </location>
</feature>
<feature type="disulfide bond" description="Interchain" evidence="8">
    <location>
        <position position="1282"/>
    </location>
</feature>
<feature type="disulfide bond" evidence="8">
    <location>
        <begin position="1299"/>
        <end position="1462"/>
    </location>
</feature>
<feature type="disulfide bond" evidence="8">
    <location>
        <begin position="1370"/>
        <end position="1415"/>
    </location>
</feature>
<feature type="sequence variant" id="VAR_063290" description="In OI2; dbSNP:rs72667007." evidence="26">
    <original>G</original>
    <variation>R</variation>
    <location>
        <position position="22"/>
    </location>
</feature>
<feature type="sequence variant" id="VAR_063291" description="In OI2; uncertain significance; dbSNP:rs756846639." evidence="40">
    <original>P</original>
    <variation>T</variation>
    <location>
        <position position="146"/>
    </location>
</feature>
<feature type="sequence variant" id="VAR_085148" description="In OIEDS1; decreased N-terminal propeptide processing; dbSNP:rs1114167408." evidence="52">
    <original>G</original>
    <variation>D</variation>
    <location>
        <position position="188"/>
    </location>
</feature>
<feature type="sequence variant" id="VAR_085149" description="In OIEDS1; severely decreased cleavage of N-terminal propeptide; affects collagen fibril organization; collagen dermal fibrils in patients have smaller diameters than in age-matched controls; dbSNP:rs67828806." evidence="19">
    <original>G</original>
    <variation>D</variation>
    <location>
        <position position="191"/>
    </location>
</feature>
<feature type="sequence variant" id="VAR_063292" description="In OI1; dbSNP:rs72667024." evidence="25">
    <original>G</original>
    <variation>R</variation>
    <location>
        <position position="194"/>
    </location>
</feature>
<feature type="sequence variant" id="VAR_001642" description="In dbSNP:rs8179178.">
    <original>G</original>
    <variation>C</variation>
    <location>
        <position position="197"/>
    </location>
</feature>
<feature type="sequence variant" id="VAR_089969" description="In OI1; dbSNP:rs72667028." evidence="60">
    <original>G</original>
    <variation>D</variation>
    <location>
        <position position="197"/>
    </location>
</feature>
<feature type="sequence variant" id="VAR_063293" description="In OI4." evidence="26">
    <original>G</original>
    <variation>R</variation>
    <location>
        <position position="197"/>
    </location>
</feature>
<feature type="sequence variant" id="VAR_063294" description="In OI1; patient diagnosed with OI1/OI4; dbSNP:rs72667029." evidence="37">
    <original>G</original>
    <variation>V</variation>
    <location>
        <position position="200"/>
    </location>
</feature>
<feature type="sequence variant" id="VAR_085150" description="In OIEDS1." evidence="52">
    <original>G</original>
    <variation>C</variation>
    <location>
        <position position="203"/>
    </location>
</feature>
<feature type="sequence variant" id="VAR_063295" description="In OI3 and OIEDS1; small decrease of N-terminal propeptide; affects collagen fibril organization; collagen dermal fibrils in patients have smaller diameters than in age-matched controls; dbSNP:rs72667031." evidence="19 27">
    <original>G</original>
    <variation>V</variation>
    <location>
        <position position="203"/>
    </location>
</feature>
<feature type="sequence variant" id="VAR_001643" description="In dbSNP:rs72667032." evidence="26">
    <original>P</original>
    <variation>A</variation>
    <location>
        <position position="205"/>
    </location>
</feature>
<feature type="sequence variant" id="VAR_085151" description="In OIEDS1; small decrease of N-terminal propeptide; affects collagen fibril organization; collagen dermal fibrils in patients have smaller diameters than in age-matched controls; dbSNP:rs72667034." evidence="19">
    <original>G</original>
    <variation>R</variation>
    <location>
        <position position="212"/>
    </location>
</feature>
<feature type="sequence variant" id="VAR_001644" description="In OI1; mild form; dbSNP:rs72667037." evidence="32">
    <original>G</original>
    <variation>C</variation>
    <location>
        <position position="221"/>
    </location>
</feature>
<feature type="sequence variant" id="VAR_001645" description="In OI1; mild phenotype; dbSNP:rs72667038." evidence="28">
    <original>G</original>
    <variation>C</variation>
    <location>
        <position position="224"/>
    </location>
</feature>
<feature type="sequence variant" id="VAR_063296" description="Found in a patient with unclassified osteogenesis imperfecta; likely pathogenic; dbSNP:rs72645315." evidence="25">
    <original>G</original>
    <variation>D</variation>
    <location>
        <position position="242"/>
    </location>
</feature>
<feature type="sequence variant" id="VAR_085152" description="In OIEDS1; affects collagen fibril organization; collagen dermal fibrils in patients have smaller diameters than in age-matched controls; dbSNP:rs72645320." evidence="19">
    <original>G</original>
    <variation>E</variation>
    <location>
        <position position="254"/>
    </location>
</feature>
<feature type="sequence variant" id="VAR_063297" description="In OI4; dbSNP:rs72645321." evidence="25 27">
    <original>G</original>
    <variation>R</variation>
    <location>
        <position position="257"/>
    </location>
</feature>
<feature type="sequence variant" id="VAR_001646" description="In OI1; mild form; dbSNP:rs72645323." evidence="29">
    <original>G</original>
    <variation>R</variation>
    <location>
        <position position="263"/>
    </location>
</feature>
<feature type="sequence variant" id="VAR_001647" description="In OI1; mild form; dbSNP:rs72645324." evidence="85">
    <original>G</original>
    <variation>V</variation>
    <location>
        <position position="263"/>
    </location>
</feature>
<feature type="sequence variant" id="VAR_063298" description="In OI1 and OIEDS1; affects collagen fibril organization; collagen dermal fibrils in patients have smaller diameters than in age-matched controls; dbSNP:rs72645325." evidence="19 34">
    <original>G</original>
    <variation>E</variation>
    <location>
        <position position="266"/>
    </location>
</feature>
<feature type="sequence variant" id="VAR_001648" description="In OI1; dbSNP:rs72645331." evidence="62">
    <original>G</original>
    <variation>C</variation>
    <location>
        <position position="272"/>
    </location>
</feature>
<feature type="sequence variant" id="VAR_001649" description="In OI2; results in slow procollagen cleavage by N-proteinase; dbSNP:rs72645333." evidence="14">
    <original>G</original>
    <variation>D</variation>
    <location>
        <position position="275"/>
    </location>
</feature>
<feature type="sequence variant" id="VAR_063299" description="In OI1; dbSNP:rs72645340." evidence="34">
    <original>G</original>
    <variation>S</variation>
    <location>
        <position position="287"/>
    </location>
</feature>
<feature type="sequence variant" id="VAR_063300" description="In OI1; uncertain significance; dbSNP:rs72645341." evidence="26">
    <original>E</original>
    <variation>K</variation>
    <location>
        <position position="288"/>
    </location>
</feature>
<feature type="sequence variant" id="VAR_063301" description="In OI2; uncertain significance." evidence="40">
    <original>E</original>
    <variation>V</variation>
    <location>
        <position position="288"/>
    </location>
</feature>
<feature type="sequence variant" id="VAR_089970" description="In OI3." evidence="60">
    <original>G</original>
    <variation>V</variation>
    <location>
        <position position="311"/>
    </location>
</feature>
<feature type="sequence variant" id="VAR_013579" description="In EDSCL1; dbSNP:rs72645347." evidence="12 31">
    <original>R</original>
    <variation>C</variation>
    <location>
        <position position="312"/>
    </location>
</feature>
<feature type="sequence variant" id="VAR_089971" description="In OI4." evidence="60">
    <original>G</original>
    <variation>S</variation>
    <location>
        <position position="317"/>
    </location>
</feature>
<feature type="sequence variant" id="VAR_089972" description="In OI4; dbSNP:rs72645353." evidence="60">
    <original>G</original>
    <variation>D</variation>
    <location>
        <position position="320"/>
    </location>
</feature>
<feature type="sequence variant" id="VAR_063302" description="In OI1; dbSNP:rs72645353." evidence="26">
    <original>G</original>
    <variation>V</variation>
    <location>
        <position position="320"/>
    </location>
</feature>
<feature type="sequence variant" id="VAR_089973" description="In OI1; dbSNP:rs72645356." evidence="60">
    <original>G</original>
    <variation>D</variation>
    <location>
        <position position="326"/>
    </location>
</feature>
<feature type="sequence variant" id="VAR_001650" description="In OI3; mild to moderate form; dbSNP:rs72645357." evidence="46 92">
    <original>G</original>
    <variation>R</variation>
    <location>
        <position position="332"/>
    </location>
</feature>
<feature type="sequence variant" id="VAR_063303" description="In OI4; dbSNP:rs66664580." evidence="26">
    <original>G</original>
    <variation>C</variation>
    <location>
        <position position="338"/>
    </location>
</feature>
<feature type="sequence variant" id="VAR_063304" description="In OI1; dbSNP:rs72645362." evidence="37">
    <original>V</original>
    <variation>F</variation>
    <location>
        <position position="349"/>
    </location>
</feature>
<feature type="sequence variant" id="VAR_001651" description="In OI3; dbSNP:rs72645363." evidence="82">
    <original>G</original>
    <variation>R</variation>
    <location>
        <position position="350"/>
    </location>
</feature>
<feature type="sequence variant" id="VAR_001652" description="In OI4; dbSNP:rs66721653." evidence="86">
    <original>G</original>
    <variation>C</variation>
    <location>
        <position position="353"/>
    </location>
</feature>
<feature type="sequence variant" id="VAR_063305" description="In OI2; dbSNP:rs1907519527." evidence="40">
    <original>G</original>
    <variation>D</variation>
    <location>
        <position position="353"/>
    </location>
</feature>
<feature type="sequence variant" id="VAR_063306" description="In OI4; dbSNP:rs66721653." evidence="34">
    <original>G</original>
    <variation>S</variation>
    <location>
        <position position="353"/>
    </location>
</feature>
<feature type="sequence variant" id="VAR_001653" description="In OI4; mild form; dbSNP:rs72645365." evidence="43">
    <original>G</original>
    <variation>C</variation>
    <location>
        <position position="356"/>
    </location>
</feature>
<feature type="sequence variant" id="VAR_089974" description="In OI4; dbSNP:rs72645367." evidence="60">
    <original>G</original>
    <variation>S</variation>
    <location>
        <position position="368"/>
    </location>
</feature>
<feature type="sequence variant" id="VAR_063307" description="In OI2; dbSNP:rs1555574151." evidence="40">
    <original>G</original>
    <variation>V</variation>
    <location>
        <position position="368"/>
    </location>
</feature>
<feature type="sequence variant" id="VAR_001654" description="In OI4, OI2 and OI3; dbSNP:rs67182491." evidence="28">
    <original>G</original>
    <variation>C</variation>
    <location>
        <position position="383"/>
    </location>
</feature>
<feature type="sequence variant" id="VAR_001655" description="In OI1; dbSNP:rs66548636." evidence="60">
    <original>G</original>
    <variation>C</variation>
    <location>
        <position position="389"/>
    </location>
</feature>
<feature type="sequence variant" id="VAR_001656" description="In OI2; dbSNP:rs66548636." evidence="75">
    <original>G</original>
    <variation>R</variation>
    <location>
        <position position="389"/>
    </location>
</feature>
<feature type="sequence variant" id="VAR_089975" description="In OI3; dbSNP:rs66548636." evidence="60">
    <original>G</original>
    <variation>S</variation>
    <location>
        <position position="389"/>
    </location>
</feature>
<feature type="sequence variant" id="VAR_063308" description="In OI2; uncertain significance; dbSNP:rs116794104." evidence="40">
    <original>A</original>
    <variation>T</variation>
    <location>
        <position position="390"/>
    </location>
</feature>
<feature type="sequence variant" id="VAR_001657" description="In OI4; dbSNP:rs66501246." evidence="102">
    <original>G</original>
    <variation>A</variation>
    <location>
        <position position="398"/>
    </location>
</feature>
<feature type="sequence variant" id="VAR_001658" description="In OI2; dbSNP:rs66501246." evidence="74">
    <original>G</original>
    <variation>D</variation>
    <location>
        <position position="398"/>
    </location>
</feature>
<feature type="sequence variant" id="VAR_001660" description="Found in a moderate form of ostegenesis imperfecta; likely pathogenic; dbSNP:rs66893386.">
    <original>G</original>
    <variation>C</variation>
    <location>
        <position position="404"/>
    </location>
</feature>
<feature type="sequence variant" id="VAR_001661" description="In OI2; dbSNP:rs72648328." evidence="104">
    <original>G</original>
    <variation>C</variation>
    <location>
        <position position="422"/>
    </location>
</feature>
<feature type="sequence variant" id="VAR_001662" description="In OI2; lethal form; dbSNP:rs72648330." evidence="40 77">
    <original>G</original>
    <variation>S</variation>
    <location>
        <position position="425"/>
    </location>
</feature>
<feature type="sequence variant" id="VAR_001663" description="In OI2; dbSNP:rs72648333." evidence="21 54">
    <original>G</original>
    <variation>V</variation>
    <location>
        <position position="434"/>
    </location>
</feature>
<feature type="sequence variant" id="VAR_089976" description="In OI3." evidence="60">
    <original>E</original>
    <variation>D</variation>
    <location>
        <position position="450"/>
    </location>
</feature>
<feature type="sequence variant" id="VAR_063309" description="In OI2." evidence="40">
    <original>G</original>
    <variation>D</variation>
    <location>
        <position position="455"/>
    </location>
</feature>
<feature type="sequence variant" id="VAR_063310" description="In OI2." evidence="40">
    <original>G</original>
    <variation>V</variation>
    <location>
        <position position="470"/>
    </location>
</feature>
<feature type="sequence variant" id="VAR_001664" description="In OI2; dbSNP:rs57377812." evidence="48">
    <original>G</original>
    <variation>R</variation>
    <location>
        <position position="476"/>
    </location>
</feature>
<feature type="sequence variant" id="VAR_063311" description="In OI2." evidence="40">
    <original>G</original>
    <variation>V</variation>
    <location>
        <position position="509"/>
    </location>
</feature>
<feature type="sequence variant" id="VAR_001665" description="In OI4; dbSNP:rs72648353." evidence="102">
    <original>G</original>
    <variation>C</variation>
    <location>
        <position position="527"/>
    </location>
</feature>
<feature type="sequence variant" id="VAR_001666" description="In OI2, OI3 and OI4; mild to lethal form; dbSNP:rs67682641." evidence="13 77 83 91">
    <original>G</original>
    <variation>S</variation>
    <location>
        <position position="530"/>
    </location>
</feature>
<feature type="sequence variant" id="VAR_001667" description="In OI2; dbSNP:rs72648356." evidence="78">
    <original>G</original>
    <variation>D</variation>
    <location>
        <position position="533"/>
    </location>
</feature>
<feature type="sequence variant" id="VAR_063312" description="In OI2." evidence="40">
    <original>G</original>
    <variation>A</variation>
    <location>
        <position position="548"/>
    </location>
</feature>
<feature type="sequence variant" id="VAR_063313" description="In OI1; dbSNP:rs72648359." evidence="26">
    <original>P</original>
    <variation>R</variation>
    <location>
        <position position="555"/>
    </location>
</feature>
<feature type="sequence variant" id="VAR_001669" description="In OI4; dbSNP:rs67507747." evidence="59">
    <original>G</original>
    <variation>C</variation>
    <location>
        <position position="560"/>
    </location>
</feature>
<feature type="sequence variant" id="VAR_001670" description="In OI2; dbSNP:rs67507747." evidence="95">
    <original>G</original>
    <variation>R</variation>
    <location>
        <position position="560"/>
    </location>
</feature>
<feature type="sequence variant" id="VAR_001668" description="In OI4; dbSNP:rs67507747." evidence="77">
    <original>G</original>
    <variation>S</variation>
    <location>
        <position position="560"/>
    </location>
</feature>
<feature type="sequence variant" id="VAR_001671" description="In dbSNP:rs1800211.">
    <original>R</original>
    <variation>H</variation>
    <location>
        <position position="564"/>
    </location>
</feature>
<feature type="sequence variant" id="VAR_001672" description="In OI2; dbSNP:rs72648363." evidence="65">
    <original>G</original>
    <variation>R</variation>
    <location>
        <position position="569"/>
    </location>
</feature>
<feature type="sequence variant" id="VAR_063314" description="Found in a patient with isolated osteopenia and vascular rupture; uncertain significance; dbSNP:rs72648365." evidence="31">
    <original>R</original>
    <variation>C</variation>
    <location>
        <position position="574"/>
    </location>
</feature>
<feature type="sequence variant" id="VAR_063315" description="In OI2; dbSNP:rs72648366." evidence="26">
    <original>G</original>
    <variation>R</variation>
    <location>
        <position position="581"/>
    </location>
</feature>
<feature type="sequence variant" id="VAR_001673" description="In OI3 and OI4; dbSNP:rs66527965." evidence="33">
    <original>G</original>
    <variation>C</variation>
    <location>
        <position position="593"/>
    </location>
</feature>
<feature type="sequence variant" id="VAR_001674" description="In OI2 and OI3; moderate to lethal form; dbSNP:rs66527965." evidence="13 89">
    <original>G</original>
    <variation>S</variation>
    <location>
        <position position="593"/>
    </location>
</feature>
<feature type="sequence variant" id="VAR_063316" description="In OI2; dbSNP:rs72651615." evidence="40">
    <original>G</original>
    <variation>R</variation>
    <location>
        <position position="602"/>
    </location>
</feature>
<feature type="sequence variant" id="VAR_063317" description="In OI2." evidence="40">
    <original>G</original>
    <variation>D</variation>
    <location>
        <position position="605"/>
    </location>
</feature>
<feature type="sequence variant" id="VAR_063318" description="In OI2." evidence="40">
    <original>G</original>
    <variation>R</variation>
    <location>
        <position position="614"/>
    </location>
</feature>
<feature type="sequence variant" id="VAR_063319" description="In OI1; dbSNP:rs72651627." evidence="26">
    <original>G</original>
    <variation>S</variation>
    <location>
        <position position="647"/>
    </location>
</feature>
<feature type="sequence variant" id="VAR_001676" description="In OI2; dbSNP:rs72651629." evidence="11">
    <original>G</original>
    <variation>S</variation>
    <location>
        <position position="656"/>
    </location>
</feature>
<feature type="sequence variant" id="VAR_063320" description="In OI4; dbSNP:rs72651636." evidence="27">
    <original>G</original>
    <variation>S</variation>
    <location>
        <position position="683"/>
    </location>
</feature>
<feature type="sequence variant" id="VAR_001677" description="In OI4; dbSNP:rs68114505." evidence="102">
    <original>G</original>
    <variation>C</variation>
    <location>
        <position position="701"/>
    </location>
</feature>
<feature type="sequence variant" id="VAR_001678" description="In OI3; dbSNP:rs67368147." evidence="62">
    <original>G</original>
    <variation>C</variation>
    <location>
        <position position="704"/>
    </location>
</feature>
<feature type="sequence variant" id="VAR_001679" description="In OI2; dbSNP:rs72651646." evidence="44">
    <original>G</original>
    <variation>D</variation>
    <location>
        <position position="719"/>
    </location>
</feature>
<feature type="sequence variant" id="VAR_001680" description="In OI3; dbSNP:rs72651645." evidence="77">
    <original>G</original>
    <variation>S</variation>
    <location>
        <position position="719"/>
    </location>
</feature>
<feature type="sequence variant" id="VAR_063321" description="In OI1; dbSNP:rs72651647." evidence="25">
    <original>G</original>
    <variation>S</variation>
    <location>
        <position position="722"/>
    </location>
</feature>
<feature type="sequence variant" id="VAR_001681" description="In OI2; results in slow procollagen cleavage by N-proteinase; dbSNP:rs72651648." evidence="14 51">
    <original>G</original>
    <variation>R</variation>
    <location>
        <position position="728"/>
    </location>
</feature>
<feature type="sequence variant" id="VAR_063322" description="In OI2; dbSNP:rs72651649." evidence="26">
    <original>G</original>
    <variation>V</variation>
    <location>
        <position position="734"/>
    </location>
</feature>
<feature type="sequence variant" id="VAR_001682" description="In OI2; dbSNP:rs72651651." evidence="28">
    <original>G</original>
    <variation>D</variation>
    <location>
        <position position="737"/>
    </location>
</feature>
<feature type="sequence variant" id="VAR_063323" description="In OI2." evidence="40">
    <original>G</original>
    <variation>R</variation>
    <location>
        <position position="740"/>
    </location>
</feature>
<feature type="sequence variant" id="VAR_001683" description="In OI2; dbSNP:rs72651652." evidence="13">
    <original>G</original>
    <variation>S</variation>
    <location>
        <position position="743"/>
    </location>
</feature>
<feature type="sequence variant" id="VAR_001684" description="In OI2; dbSNP:rs72651653." evidence="84">
    <original>G</original>
    <variation>V</variation>
    <location>
        <position position="743"/>
    </location>
</feature>
<feature type="sequence variant" id="VAR_089977" description="In OI4." evidence="60">
    <original>G</original>
    <variation>S</variation>
    <location>
        <position position="761"/>
    </location>
</feature>
<feature type="sequence variant" id="VAR_001685" description="In OI2; dbSNP:rs72651657." evidence="98">
    <original>G</original>
    <variation>V</variation>
    <location>
        <position position="764"/>
    </location>
</feature>
<feature type="sequence variant" id="VAR_001686" description="In OI3 and OI1; dbSNP:rs72651658." evidence="25 60 79">
    <original>G</original>
    <variation>S</variation>
    <location>
        <position position="767"/>
    </location>
</feature>
<feature type="sequence variant" id="VAR_074158" description="In OI2." evidence="57">
    <original>G</original>
    <variation>C</variation>
    <location>
        <position position="773"/>
    </location>
</feature>
<feature type="sequence variant" id="VAR_001687" description="In OI2; dbSNP:rs72651660." evidence="47">
    <original>G</original>
    <variation>S</variation>
    <location>
        <position position="776"/>
    </location>
</feature>
<feature type="sequence variant" id="VAR_001688" description="In OI2; dbSNP:rs72651663." evidence="40 47">
    <original>G</original>
    <variation>S</variation>
    <location>
        <position position="809"/>
    </location>
</feature>
<feature type="sequence variant" id="VAR_001689" description="In OI2; dbSNP:rs66929517." evidence="39">
    <original>G</original>
    <variation>V</variation>
    <location>
        <position position="815"/>
    </location>
</feature>
<feature type="sequence variant" id="VAR_001690" description="In OI3, OI1 and OI4; dbSNP:rs67693970." evidence="25 27 60 97">
    <original>G</original>
    <variation>S</variation>
    <location>
        <position position="821"/>
    </location>
</feature>
<feature type="sequence variant" id="VAR_001691" description="In dbSNP:rs1800214." evidence="77">
    <original>P</original>
    <variation>A</variation>
    <location>
        <position position="823"/>
    </location>
</feature>
<feature type="sequence variant" id="VAR_063324" description="In OI2." evidence="40">
    <original>G</original>
    <variation>R</variation>
    <location>
        <position position="824"/>
    </location>
</feature>
<feature type="sequence variant" id="VAR_063325" description="In OI2; dbSNP:rs67067133." evidence="23">
    <original>G</original>
    <variation>D</variation>
    <location>
        <position position="833"/>
    </location>
</feature>
<feature type="sequence variant" id="VAR_001692" description="In OI2; mild to moderate form; dbSNP:rs72653131." evidence="94">
    <original>G</original>
    <variation>S</variation>
    <location>
        <position position="839"/>
    </location>
</feature>
<feature type="sequence variant" id="VAR_001693" description="In OI2; dbSNP:rs72653134." evidence="69 74">
    <original>G</original>
    <variation>R</variation>
    <location>
        <position position="842"/>
    </location>
</feature>
<feature type="sequence variant" id="VAR_001694" description="In OI2; dbSNP:rs72653136." evidence="40">
    <original>G</original>
    <variation>R</variation>
    <location>
        <position position="845"/>
    </location>
</feature>
<feature type="sequence variant" id="VAR_063342" description="In OI2." evidence="40">
    <original>G</original>
    <variation>R</variation>
    <location>
        <position position="848"/>
    </location>
</feature>
<feature type="sequence variant" id="VAR_001695" description="In OI2; dbSNP:rs72653137." evidence="48">
    <original>G</original>
    <variation>D</variation>
    <location>
        <position position="851"/>
    </location>
</feature>
<feature type="sequence variant" id="VAR_063326" description="In OI2; uncertain significance." evidence="40">
    <original>N</original>
    <variation>H</variation>
    <location>
        <position position="855"/>
    </location>
</feature>
<feature type="sequence variant" id="VAR_008118" description="In OI3 and OI2; dbSNP:rs67445413." evidence="10 37 40 60">
    <original>G</original>
    <variation>S</variation>
    <location>
        <position position="866"/>
    </location>
</feature>
<feature type="sequence variant" id="VAR_001696" description="In OI2; dbSNP:rs72653143." evidence="42">
    <original>G</original>
    <variation>C</variation>
    <location>
        <position position="869"/>
    </location>
</feature>
<feature type="sequence variant" id="VAR_063327" description="In OI2; dbSNP:rs72653145." evidence="40">
    <original>G</original>
    <variation>S</variation>
    <location>
        <position position="875"/>
    </location>
</feature>
<feature type="sequence variant" id="VAR_001697" description="In OI2 and OI3; extremely severe form; dbSNP:rs1567755602." evidence="40">
    <original>G</original>
    <variation>S</variation>
    <location>
        <position position="884"/>
    </location>
</feature>
<feature type="sequence variant" id="VAR_001698" description="In OI2; results in slow procollagen cleavage by N-proteinase; dbSNP:rs72653152." evidence="14 62">
    <original>G</original>
    <variation>C</variation>
    <location>
        <position position="896"/>
    </location>
</feature>
<feature type="sequence variant" id="VAR_063328" description="In OI2." evidence="40">
    <original>G</original>
    <variation>D</variation>
    <location>
        <position position="896"/>
    </location>
</feature>
<feature type="sequence variant" id="VAR_063329" description="Found in a patient with mild osteogenesis imperfecta; uncertain significance; dbSNP:rs145446512." evidence="26">
    <original>G</original>
    <variation>S</variation>
    <location>
        <position position="906"/>
    </location>
</feature>
<feature type="sequence variant" id="VAR_001699" description="In OI2; dbSNP:rs72653154." evidence="45 70">
    <original>G</original>
    <variation>C</variation>
    <location>
        <position position="926"/>
    </location>
</feature>
<feature type="sequence variant" id="VAR_063330" description="In OI2; dbSNP:rs72653159." evidence="40">
    <original>G</original>
    <variation>C</variation>
    <location>
        <position position="947"/>
    </location>
</feature>
<feature type="sequence variant" id="VAR_063331" description="In OI2." evidence="40">
    <original>G</original>
    <variation>D</variation>
    <location>
        <position position="977"/>
    </location>
</feature>
<feature type="sequence variant" id="VAR_001700" description="In OI2; dbSNP:rs72653166." evidence="17">
    <original>G</original>
    <variation>V</variation>
    <location>
        <position position="980"/>
    </location>
</feature>
<feature type="sequence variant" id="VAR_063332" description="In OI2; dbSNP:rs72653167." evidence="40">
    <original>G</original>
    <variation>C</variation>
    <location>
        <position position="1001"/>
    </location>
</feature>
<feature type="sequence variant" id="VAR_001701" description="In OI4; dbSNP:rs72653169." evidence="58">
    <original>G</original>
    <variation>S</variation>
    <location>
        <position position="1010"/>
    </location>
</feature>
<feature type="sequence variant" id="VAR_033097" description="In CAFYD; dbSNP:rs72653170." evidence="20">
    <original>R</original>
    <variation>C</variation>
    <location>
        <position position="1014"/>
    </location>
</feature>
<feature type="sequence variant" id="VAR_030013" description="In dbSNP:rs1135348." evidence="73 103">
    <original>G</original>
    <variation>A</variation>
    <location>
        <position position="1019"/>
    </location>
</feature>
<feature type="sequence variant" id="VAR_001702" description="In OI3; severe form; dbSNP:rs66523073." evidence="56">
    <original>G</original>
    <variation>S</variation>
    <location>
        <position position="1022"/>
    </location>
</feature>
<feature type="sequence variant" id="VAR_001703" description="In OI2; dbSNP:rs67771061." evidence="40">
    <original>G</original>
    <variation>V</variation>
    <location>
        <position position="1022"/>
    </location>
</feature>
<feature type="sequence variant" id="VAR_001704" description="In OI2; dbSNP:rs72653172." evidence="50">
    <original>G</original>
    <variation>R</variation>
    <location>
        <position position="1025"/>
    </location>
</feature>
<feature type="sequence variant" id="VAR_001705" description="In OI2 and OI3; moderate to lethal form; dbSNP:rs72653178." evidence="37 97">
    <original>G</original>
    <variation>S</variation>
    <location>
        <position position="1040"/>
    </location>
</feature>
<feature type="sequence variant" id="VAR_001707" description="In OI2." evidence="15 41">
    <location>
        <begin position="1046"/>
        <end position="1048"/>
    </location>
</feature>
<feature type="sequence variant" id="VAR_001708" description="In OI3; dbSNP:rs67641695." evidence="97">
    <original>G</original>
    <variation>S</variation>
    <location>
        <position position="1049"/>
    </location>
</feature>
<feature type="sequence variant" id="VAR_063333" description="In OI2.">
    <original>G</original>
    <variation>GAPG</variation>
    <location>
        <position position="1052"/>
    </location>
</feature>
<feature type="sequence variant" id="VAR_063334" description="In OI2; dbSNP:rs1906761196." evidence="40">
    <original>G</original>
    <variation>D</variation>
    <location>
        <position position="1055"/>
    </location>
</feature>
<feature type="sequence variant" id="VAR_001709" description="In OI3 and OI4; mild form; dbSNP:rs72654795." evidence="25 97">
    <original>G</original>
    <variation>S</variation>
    <location>
        <position position="1058"/>
    </location>
</feature>
<feature type="sequence variant" id="VAR_001710" description="In OI2; results in slow procollagen cleavage by N-proteinase; dbSNP:rs72654797." evidence="14">
    <original>G</original>
    <variation>D</variation>
    <location>
        <position position="1061"/>
    </location>
</feature>
<feature type="sequence variant" id="VAR_001711" description="In OI4; dbSNP:rs72654796." evidence="81">
    <original>G</original>
    <variation>S</variation>
    <location>
        <position position="1061"/>
    </location>
</feature>
<feature type="sequence variant" id="VAR_063335" description="In OIEDS1; affects dimer formation, helix stability and organization of collagen fibrils; dbSNP:rs72654799." evidence="30">
    <original>R</original>
    <variation>C</variation>
    <location>
        <position position="1066"/>
    </location>
</feature>
<feature type="sequence variant" id="VAR_001712" description="In dbSNP:rs1800215." evidence="38">
    <original>A</original>
    <variation>T</variation>
    <location>
        <position position="1075"/>
    </location>
</feature>
<feature type="sequence variant" id="VAR_001713" description="In OI3 and OI4; dbSNP:rs67394386." evidence="60 97">
    <original>G</original>
    <variation>S</variation>
    <location>
        <position position="1076"/>
    </location>
</feature>
<feature type="sequence variant" id="VAR_001714" description="In OI1 and OI2; mild to moderate form; dbSNP:rs72654802." evidence="22">
    <original>G</original>
    <variation>S</variation>
    <location>
        <position position="1079"/>
    </location>
</feature>
<feature type="sequence variant" id="VAR_001715" description="In OI2; dbSNP:rs72656303." evidence="63">
    <original>G</original>
    <variation>C</variation>
    <location>
        <position position="1082"/>
    </location>
</feature>
<feature type="sequence variant" id="VAR_001716" description="In OI2; dbSNP:rs72656305." evidence="76">
    <original>G</original>
    <variation>A</variation>
    <location>
        <position position="1088"/>
    </location>
</feature>
<feature type="sequence variant" id="VAR_074159" description="In OI1; uncertain significance." evidence="53">
    <original>G</original>
    <variation>E</variation>
    <location>
        <position position="1088"/>
    </location>
</feature>
<feature type="sequence variant" id="VAR_001717" description="In OI2; dbSNP:rs72656306." evidence="105">
    <original>G</original>
    <variation>S</variation>
    <location>
        <position position="1091"/>
    </location>
</feature>
<feature type="sequence variant" id="VAR_063336" description="Found in a patient with isolated osteopenia and vascular rupture; uncertain significance; dbSNP:rs72656307." evidence="31">
    <original>R</original>
    <variation>C</variation>
    <location>
        <position position="1093"/>
    </location>
</feature>
<feature type="sequence variant" id="VAR_063337" description="In OI2." evidence="40">
    <original>G</original>
    <variation>S</variation>
    <location>
        <position position="1094"/>
    </location>
</feature>
<feature type="sequence variant" id="VAR_001718" description="In OI2; dbSNP:rs72656308." evidence="40">
    <original>G</original>
    <variation>D</variation>
    <location>
        <position position="1100"/>
    </location>
</feature>
<feature type="sequence variant" id="VAR_001719" description="In OI2; dbSNP:rs72656311." evidence="61">
    <original>G</original>
    <variation>A</variation>
    <location>
        <position position="1106"/>
    </location>
</feature>
<feature type="sequence variant" id="VAR_001720" description="In OI2; dbSNP:rs72656312." evidence="80">
    <original>G</original>
    <variation>C</variation>
    <location>
        <position position="1124"/>
    </location>
</feature>
<feature type="sequence variant" id="VAR_033778" description="In dbSNP:rs41316713." evidence="35">
    <original>R</original>
    <variation>Q</variation>
    <location>
        <position position="1141"/>
    </location>
</feature>
<feature type="sequence variant" id="VAR_001721" description="In OI2; dbSNP:rs72656317." evidence="28">
    <original>G</original>
    <variation>S</variation>
    <location>
        <position position="1142"/>
    </location>
</feature>
<feature type="sequence variant" id="VAR_001722" description="In OI3; dbSNP:rs72656320." evidence="55">
    <original>G</original>
    <variation>S</variation>
    <location>
        <position position="1151"/>
    </location>
</feature>
<feature type="sequence variant" id="VAR_001723" description="In OI2; dbSNP:rs72656321." evidence="21 61">
    <original>G</original>
    <variation>V</variation>
    <location>
        <position position="1151"/>
    </location>
</feature>
<feature type="sequence variant" id="VAR_001724" description="In OI2; dbSNP:rs72656322." evidence="61">
    <original>G</original>
    <variation>R</variation>
    <location>
        <position position="1154"/>
    </location>
</feature>
<feature type="sequence variant" id="VAR_063338" description="In OI1; dbSNP:rs72656323." evidence="24">
    <original>G</original>
    <variation>D</variation>
    <location>
        <position position="1157"/>
    </location>
</feature>
<feature type="sequence variant" id="VAR_001725" description="In OI2; dbSNP:rs72656324." evidence="64">
    <original>G</original>
    <variation>C</variation>
    <location>
        <position position="1166"/>
    </location>
</feature>
<feature type="sequence variant" id="VAR_001726" description="In OI2; dbSNP:rs72656325." evidence="11">
    <original>G</original>
    <variation>D</variation>
    <location>
        <position position="1172"/>
    </location>
</feature>
<feature type="sequence variant" id="VAR_033779" description="In dbSNP:rs41316719." evidence="35">
    <original>V</original>
    <variation>I</variation>
    <location>
        <position position="1177"/>
    </location>
</feature>
<feature type="sequence variant" id="VAR_001727" description="In OI2; dbSNP:rs72656330." evidence="46 105">
    <original>G</original>
    <variation>S</variation>
    <location>
        <position position="1181"/>
    </location>
</feature>
<feature type="sequence variant" id="VAR_001728" description="In OI2; dbSNP:rs72656331." evidence="21 61">
    <original>G</original>
    <variation>V</variation>
    <location>
        <position position="1184"/>
    </location>
</feature>
<feature type="sequence variant" id="VAR_001729" description="In OI2 and OI3; extremely severe form; dbSNP:rs72656332." evidence="105">
    <original>G</original>
    <variation>S</variation>
    <location>
        <position position="1187"/>
    </location>
</feature>
<feature type="sequence variant" id="VAR_001730" description="In OI2; dbSNP:rs66948146." evidence="105">
    <original>G</original>
    <variation>V</variation>
    <location>
        <position position="1187"/>
    </location>
</feature>
<feature type="sequence variant" id="VAR_001731" description="In OI1; mild form; dbSNP:rs72656334." evidence="66 67">
    <original>G</original>
    <variation>C</variation>
    <location>
        <position position="1195"/>
    </location>
</feature>
<feature type="sequence variant" id="VAR_063339" description="In OI1; dbSNP:rs72656339." evidence="26">
    <original>D</original>
    <variation>E</variation>
    <location>
        <position position="1219"/>
    </location>
</feature>
<feature type="sequence variant" id="VAR_066385" description="Found in a patient with mild osteogenesis imperfecta and increased bone mineral density; results in defective type I procollagen processing; incorporation of the immature procollagen into the matrix leads to increased bone matrix mineralization and altered collagen fibril structure; dbSNP:rs72656338." evidence="49">
    <original>D</original>
    <variation>N</variation>
    <location>
        <position position="1219"/>
    </location>
</feature>
<feature type="sequence variant" id="VAR_030014" description="In dbSNP:rs3205325." evidence="87">
    <original>S</original>
    <variation>T</variation>
    <location>
        <position position="1251"/>
    </location>
</feature>
<feature type="sequence variant" id="VAR_001732" description="In OI2; impaired pro-alpha chain association; dbSNP:rs72656342." evidence="87">
    <original>D</original>
    <variation>H</variation>
    <location>
        <position position="1277"/>
    </location>
</feature>
<feature type="sequence variant" id="VAR_001733" description="In OI2; dbSNP:rs72656343." evidence="90">
    <original>W</original>
    <variation>C</variation>
    <location>
        <position position="1312"/>
    </location>
</feature>
<feature type="sequence variant" id="VAR_001734" description="In OI2; impaired pro-alpha chain association." evidence="87">
    <location>
        <begin position="1337"/>
        <end position="1338"/>
    </location>
</feature>
<feature type="sequence variant" id="VAR_063340" description="In dbSNP:rs149820303." evidence="26">
    <original>R</original>
    <variation>H</variation>
    <location>
        <position position="1356"/>
    </location>
</feature>
<feature type="sequence variant" id="VAR_001735" description="In OI2; impaired pro-alpha chain association; dbSNP:rs72656348." evidence="87">
    <original>L</original>
    <variation>R</variation>
    <location>
        <position position="1388"/>
    </location>
</feature>
<feature type="sequence variant" id="VAR_030015" description="In dbSNP:rs2586486." evidence="68 100 103">
    <original>Q</original>
    <variation>K</variation>
    <location>
        <position position="1391"/>
    </location>
</feature>
<feature type="sequence variant" id="VAR_063341" description="In OI2; dbSNP:rs72656349." evidence="26 40">
    <original>D</original>
    <variation>N</variation>
    <location>
        <position position="1413"/>
    </location>
</feature>
<feature type="sequence variant" id="VAR_033780" description="In dbSNP:rs1059454.">
    <original>K</original>
    <variation>N</variation>
    <location>
        <position position="1430"/>
    </location>
</feature>
<feature type="sequence variant" id="VAR_033781" description="In dbSNP:rs1059454.">
    <original>T</original>
    <variation>P</variation>
    <location>
        <position position="1431"/>
    </location>
</feature>
<feature type="sequence variant" id="VAR_001736" description="In dbSNP:rs1800220." evidence="87 103">
    <original>T</original>
    <variation>S</variation>
    <location>
        <position position="1434"/>
    </location>
</feature>
<feature type="sequence variant" id="VAR_030016" description="In dbSNP:rs17857117." evidence="18">
    <original>P</original>
    <variation>R</variation>
    <location>
        <position position="1438"/>
    </location>
</feature>
<feature type="sequence variant" id="VAR_030017" description="In dbSNP:rs17853657." evidence="18">
    <original>P</original>
    <variation>H</variation>
    <location>
        <position position="1460"/>
    </location>
</feature>
<feature type="sequence variant" id="VAR_001737" description="In OI3 and OI1; dbSNP:rs72656353." evidence="60 93">
    <original>L</original>
    <variation>P</variation>
    <location>
        <position position="1464"/>
    </location>
</feature>
<feature type="sequence conflict" description="In Ref. 8; CAA25394." evidence="106" ref="8">
    <original>R</original>
    <variation>Q</variation>
    <location>
        <position position="59"/>
    </location>
</feature>
<feature type="sequence conflict" description="In Ref. 2; AAB94054." evidence="106" ref="2">
    <location>
        <begin position="112"/>
        <end position="114"/>
    </location>
</feature>
<feature type="sequence conflict" description="In Ref. 15; AA sequence." evidence="106" ref="15">
    <original>E</original>
    <variation>P</variation>
    <location>
        <position position="288"/>
    </location>
</feature>
<feature type="sequence conflict" description="In Ref. 6; AAB59373." evidence="106" ref="6">
    <original>R</original>
    <variation>L</variation>
    <location>
        <position position="370"/>
    </location>
</feature>
<feature type="sequence conflict" description="In Ref. 19; AAA52289." evidence="106" ref="19">
    <original>P</original>
    <variation>L</variation>
    <location>
        <position position="484"/>
    </location>
</feature>
<feature type="sequence conflict" description="In Ref. 20; AAA51847." evidence="106" ref="20">
    <original>A</original>
    <variation>R</variation>
    <location>
        <position position="595"/>
    </location>
</feature>
<feature type="sequence conflict" description="In Ref. 22; no nucleotide entry." evidence="106" ref="22">
    <original>Q</original>
    <variation>E</variation>
    <location>
        <position position="721"/>
    </location>
</feature>
<feature type="sequence conflict" description="In Ref. 22; no nucleotide entry." evidence="106" ref="22">
    <original>L</original>
    <variation>E</variation>
    <location>
        <position position="738"/>
    </location>
</feature>
<feature type="sequence conflict" description="In Ref. 19; AAA52291." evidence="106" ref="19">
    <original>LP</original>
    <variation>PL</variation>
    <location>
        <begin position="975"/>
        <end position="976"/>
    </location>
</feature>
<feature type="sequence conflict" description="In Ref. 18; AAA51995." evidence="106" ref="18">
    <original>V</original>
    <variation>A</variation>
    <location>
        <position position="1081"/>
    </location>
</feature>
<feature type="sequence conflict" description="In Ref. 25; AAB27856." evidence="106" ref="25">
    <original>S</original>
    <variation>T</variation>
    <location>
        <position position="1329"/>
    </location>
</feature>
<feature type="strand" evidence="108">
    <location>
        <begin position="264"/>
        <end position="266"/>
    </location>
</feature>
<feature type="strand" evidence="107">
    <location>
        <begin position="966"/>
        <end position="968"/>
    </location>
</feature>
<feature type="helix" evidence="109">
    <location>
        <begin position="1227"/>
        <end position="1246"/>
    </location>
</feature>
<feature type="strand" evidence="109">
    <location>
        <begin position="1251"/>
        <end position="1254"/>
    </location>
</feature>
<feature type="helix" evidence="109">
    <location>
        <begin position="1259"/>
        <end position="1265"/>
    </location>
</feature>
<feature type="strand" evidence="109">
    <location>
        <begin position="1271"/>
        <end position="1276"/>
    </location>
</feature>
<feature type="helix" evidence="109">
    <location>
        <begin position="1283"/>
        <end position="1285"/>
    </location>
</feature>
<feature type="strand" evidence="109">
    <location>
        <begin position="1287"/>
        <end position="1292"/>
    </location>
</feature>
<feature type="turn" evidence="109">
    <location>
        <begin position="1293"/>
        <end position="1296"/>
    </location>
</feature>
<feature type="strand" evidence="109">
    <location>
        <begin position="1297"/>
        <end position="1300"/>
    </location>
</feature>
<feature type="strand" evidence="109">
    <location>
        <begin position="1306"/>
        <end position="1310"/>
    </location>
</feature>
<feature type="helix" evidence="109">
    <location>
        <begin position="1326"/>
        <end position="1329"/>
    </location>
</feature>
<feature type="helix" evidence="109">
    <location>
        <begin position="1345"/>
        <end position="1357"/>
    </location>
</feature>
<feature type="strand" evidence="109">
    <location>
        <begin position="1362"/>
        <end position="1372"/>
    </location>
</feature>
<feature type="turn" evidence="109">
    <location>
        <begin position="1379"/>
        <end position="1382"/>
    </location>
</feature>
<feature type="strand" evidence="109">
    <location>
        <begin position="1389"/>
        <end position="1391"/>
    </location>
</feature>
<feature type="strand" evidence="109">
    <location>
        <begin position="1397"/>
        <end position="1403"/>
    </location>
</feature>
<feature type="strand" evidence="109">
    <location>
        <begin position="1409"/>
        <end position="1413"/>
    </location>
</feature>
<feature type="strand" evidence="109">
    <location>
        <begin position="1420"/>
        <end position="1432"/>
    </location>
</feature>
<feature type="helix" evidence="109">
    <location>
        <begin position="1434"/>
        <end position="1436"/>
    </location>
</feature>
<feature type="strand" evidence="109">
    <location>
        <begin position="1441"/>
        <end position="1443"/>
    </location>
</feature>
<feature type="strand" evidence="109">
    <location>
        <begin position="1453"/>
        <end position="1463"/>
    </location>
</feature>
<dbReference type="EMBL" id="Z74615">
    <property type="protein sequence ID" value="CAA98968.1"/>
    <property type="molecule type" value="mRNA"/>
</dbReference>
<dbReference type="EMBL" id="AF017178">
    <property type="protein sequence ID" value="AAB94054.3"/>
    <property type="molecule type" value="Genomic_DNA"/>
</dbReference>
<dbReference type="EMBL" id="AB209597">
    <property type="protein sequence ID" value="BAD92834.1"/>
    <property type="status" value="ALT_INIT"/>
    <property type="molecule type" value="mRNA"/>
</dbReference>
<dbReference type="EMBL" id="BC036531">
    <property type="protein sequence ID" value="AAH36531.1"/>
    <property type="molecule type" value="mRNA"/>
</dbReference>
<dbReference type="EMBL" id="M20789">
    <property type="protein sequence ID" value="AAB59373.1"/>
    <property type="molecule type" value="Genomic_DNA"/>
</dbReference>
<dbReference type="EMBL" id="M36546">
    <property type="protein sequence ID" value="AAA60150.1"/>
    <property type="molecule type" value="mRNA"/>
</dbReference>
<dbReference type="EMBL" id="X07884">
    <property type="protein sequence ID" value="CAA30731.1"/>
    <property type="molecule type" value="mRNA"/>
</dbReference>
<dbReference type="EMBL" id="X00820">
    <property type="protein sequence ID" value="CAA25394.1"/>
    <property type="molecule type" value="Genomic_DNA"/>
</dbReference>
<dbReference type="EMBL" id="J02829">
    <property type="protein sequence ID" value="AAA51993.1"/>
    <property type="molecule type" value="Genomic_DNA"/>
</dbReference>
<dbReference type="EMBL" id="M10627">
    <property type="protein sequence ID" value="AAA51992.1"/>
    <property type="molecule type" value="Genomic_DNA"/>
</dbReference>
<dbReference type="EMBL" id="J03559">
    <property type="protein sequence ID" value="AAA52052.1"/>
    <property type="molecule type" value="Genomic_DNA"/>
</dbReference>
<dbReference type="EMBL" id="K01228">
    <property type="protein sequence ID" value="AAA51995.1"/>
    <property type="molecule type" value="mRNA"/>
</dbReference>
<dbReference type="EMBL" id="J00110">
    <property type="protein sequence ID" value="AAA52289.1"/>
    <property type="molecule type" value="mRNA"/>
</dbReference>
<dbReference type="EMBL" id="J00111">
    <property type="protein sequence ID" value="AAA52290.1"/>
    <property type="molecule type" value="mRNA"/>
</dbReference>
<dbReference type="EMBL" id="J00112">
    <property type="protein sequence ID" value="AAA52291.1"/>
    <property type="molecule type" value="mRNA"/>
</dbReference>
<dbReference type="EMBL" id="J00113">
    <property type="protein sequence ID" value="AAN86574.1"/>
    <property type="molecule type" value="mRNA"/>
</dbReference>
<dbReference type="EMBL" id="K03179">
    <property type="protein sequence ID" value="AAA51847.1"/>
    <property type="molecule type" value="Genomic_DNA"/>
</dbReference>
<dbReference type="EMBL" id="M11162">
    <property type="protein sequence ID" value="AAA75386.1"/>
    <property type="molecule type" value="Genomic_DNA"/>
</dbReference>
<dbReference type="EMBL" id="L47667">
    <property type="protein sequence ID" value="AAB59576.1"/>
    <property type="molecule type" value="Genomic_DNA"/>
</dbReference>
<dbReference type="EMBL" id="S64596">
    <property type="protein sequence ID" value="AAB27856.1"/>
    <property type="molecule type" value="mRNA"/>
</dbReference>
<dbReference type="EMBL" id="M23213">
    <property type="protein sequence ID" value="AAB59363.1"/>
    <property type="molecule type" value="Genomic_DNA"/>
</dbReference>
<dbReference type="EMBL" id="X06269">
    <property type="protein sequence ID" value="CAA29605.1"/>
    <property type="molecule type" value="mRNA"/>
</dbReference>
<dbReference type="EMBL" id="M32798">
    <property type="protein sequence ID" value="AAA52049.1"/>
    <property type="molecule type" value="mRNA"/>
</dbReference>
<dbReference type="EMBL" id="M55998">
    <property type="protein sequence ID" value="AAA52036.1"/>
    <property type="molecule type" value="Genomic_DNA"/>
</dbReference>
<dbReference type="CCDS" id="CCDS11561.1"/>
<dbReference type="PIR" id="I60114">
    <property type="entry name" value="CGHU1S"/>
</dbReference>
<dbReference type="RefSeq" id="NP_000079.2">
    <property type="nucleotide sequence ID" value="NM_000088.4"/>
</dbReference>
<dbReference type="PDB" id="1Q7D">
    <property type="method" value="X-ray"/>
    <property type="resolution" value="1.80 A"/>
    <property type="chains" value="A/B/C=680-685"/>
</dbReference>
<dbReference type="PDB" id="2LLP">
    <property type="method" value="NMR"/>
    <property type="chains" value="A/B/C=949-965"/>
</dbReference>
<dbReference type="PDB" id="3EJH">
    <property type="method" value="X-ray"/>
    <property type="resolution" value="2.10 A"/>
    <property type="chains" value="E/F=956-977"/>
</dbReference>
<dbReference type="PDB" id="3GXE">
    <property type="method" value="X-ray"/>
    <property type="resolution" value="2.60 A"/>
    <property type="chains" value="E/F=254-275"/>
</dbReference>
<dbReference type="PDB" id="5CTD">
    <property type="method" value="X-ray"/>
    <property type="resolution" value="1.60 A"/>
    <property type="chains" value="A=572-583, C=554-583"/>
</dbReference>
<dbReference type="PDB" id="5CTI">
    <property type="method" value="X-ray"/>
    <property type="resolution" value="1.90 A"/>
    <property type="chains" value="A=572-583, C=565-583, C=893-904"/>
</dbReference>
<dbReference type="PDB" id="5CVA">
    <property type="method" value="X-ray"/>
    <property type="resolution" value="2.10 A"/>
    <property type="chains" value="B/C/E/F=554-583, B/E=593-629"/>
</dbReference>
<dbReference type="PDB" id="5CVB">
    <property type="method" value="X-ray"/>
    <property type="resolution" value="2.25 A"/>
    <property type="chains" value="A/D=572-583, B/C/E/F=554-583, B/E=593-606"/>
</dbReference>
<dbReference type="PDB" id="5K31">
    <property type="method" value="X-ray"/>
    <property type="resolution" value="2.20 A"/>
    <property type="chains" value="A/B/C/D/E/F=1219-1464"/>
</dbReference>
<dbReference type="PDB" id="5OU8">
    <property type="method" value="X-ray"/>
    <property type="resolution" value="2.50 A"/>
    <property type="chains" value="C/D/E=1178-1192"/>
</dbReference>
<dbReference type="PDB" id="5OU9">
    <property type="method" value="X-ray"/>
    <property type="resolution" value="2.50 A"/>
    <property type="chains" value="C/D/E=1172-1192"/>
</dbReference>
<dbReference type="PDB" id="7E7B">
    <property type="method" value="EM"/>
    <property type="resolution" value="2.60 A"/>
    <property type="chains" value="A/B/C=1156-1462"/>
</dbReference>
<dbReference type="PDB" id="7E7D">
    <property type="method" value="EM"/>
    <property type="resolution" value="3.20 A"/>
    <property type="chains" value="A/B/C=1156-1462"/>
</dbReference>
<dbReference type="PDBsum" id="1Q7D"/>
<dbReference type="PDBsum" id="2LLP"/>
<dbReference type="PDBsum" id="3EJH"/>
<dbReference type="PDBsum" id="3GXE"/>
<dbReference type="PDBsum" id="5CTD"/>
<dbReference type="PDBsum" id="5CTI"/>
<dbReference type="PDBsum" id="5CVA"/>
<dbReference type="PDBsum" id="5CVB"/>
<dbReference type="PDBsum" id="5K31"/>
<dbReference type="PDBsum" id="5OU8"/>
<dbReference type="PDBsum" id="5OU9"/>
<dbReference type="PDBsum" id="7E7B"/>
<dbReference type="PDBsum" id="7E7D"/>
<dbReference type="EMDB" id="EMD-30998"/>
<dbReference type="EMDB" id="EMD-30999"/>
<dbReference type="SMR" id="P02452"/>
<dbReference type="BioGRID" id="107674">
    <property type="interactions" value="136"/>
</dbReference>
<dbReference type="ComplexPortal" id="CPX-1650">
    <property type="entry name" value="Collagen type I trimer"/>
</dbReference>
<dbReference type="ComplexPortal" id="CPX-4108">
    <property type="entry name" value="Collagen type I homotrimer"/>
</dbReference>
<dbReference type="CORUM" id="P02452"/>
<dbReference type="DIP" id="DIP-36077N"/>
<dbReference type="FunCoup" id="P02452">
    <property type="interactions" value="1002"/>
</dbReference>
<dbReference type="IntAct" id="P02452">
    <property type="interactions" value="118"/>
</dbReference>
<dbReference type="MINT" id="P02452"/>
<dbReference type="STRING" id="9606.ENSP00000225964"/>
<dbReference type="BindingDB" id="P02452"/>
<dbReference type="ChEMBL" id="CHEMBL3030"/>
<dbReference type="DrugBank" id="DB11338">
    <property type="generic name" value="Clove oil"/>
</dbReference>
<dbReference type="DrugBank" id="DB00048">
    <property type="generic name" value="Collagenase clostridium histolyticum"/>
</dbReference>
<dbReference type="DrugBank" id="DB04866">
    <property type="generic name" value="Halofuginone"/>
</dbReference>
<dbReference type="DrugBank" id="DB06037">
    <property type="generic name" value="PR-15"/>
</dbReference>
<dbReference type="DrugBank" id="DB13133">
    <property type="generic name" value="Von Willebrand factor human"/>
</dbReference>
<dbReference type="DrugBank" id="DB12872">
    <property type="generic name" value="Vonicog alfa"/>
</dbReference>
<dbReference type="GlyConnect" id="1125">
    <property type="glycosylation" value="7 N-Linked glycans (1 site)"/>
</dbReference>
<dbReference type="GlyCosmos" id="P02452">
    <property type="glycosylation" value="6 sites, 8 glycans"/>
</dbReference>
<dbReference type="GlyGen" id="P02452">
    <property type="glycosylation" value="14 sites, 18 N-linked glycans (1 site), 3 O-linked glycans (7 sites)"/>
</dbReference>
<dbReference type="iPTMnet" id="P02452"/>
<dbReference type="MetOSite" id="P02452"/>
<dbReference type="PhosphoSitePlus" id="P02452"/>
<dbReference type="BioMuta" id="COL1A1"/>
<dbReference type="DMDM" id="296439504"/>
<dbReference type="jPOST" id="P02452"/>
<dbReference type="MassIVE" id="P02452"/>
<dbReference type="PaxDb" id="9606-ENSP00000225964"/>
<dbReference type="PeptideAtlas" id="P02452"/>
<dbReference type="PRIDE" id="P02452"/>
<dbReference type="ProteomicsDB" id="51518"/>
<dbReference type="Pumba" id="P02452"/>
<dbReference type="ABCD" id="P02452">
    <property type="antibodies" value="3 sequenced antibodies"/>
</dbReference>
<dbReference type="Antibodypedia" id="1980">
    <property type="antibodies" value="887 antibodies from 44 providers"/>
</dbReference>
<dbReference type="DNASU" id="1277"/>
<dbReference type="Ensembl" id="ENST00000225964.10">
    <property type="protein sequence ID" value="ENSP00000225964.6"/>
    <property type="gene ID" value="ENSG00000108821.14"/>
</dbReference>
<dbReference type="GeneID" id="1277"/>
<dbReference type="KEGG" id="hsa:1277"/>
<dbReference type="MANE-Select" id="ENST00000225964.10">
    <property type="protein sequence ID" value="ENSP00000225964.6"/>
    <property type="RefSeq nucleotide sequence ID" value="NM_000088.4"/>
    <property type="RefSeq protein sequence ID" value="NP_000079.2"/>
</dbReference>
<dbReference type="UCSC" id="uc002iqm.4">
    <property type="organism name" value="human"/>
</dbReference>
<dbReference type="AGR" id="HGNC:2197"/>
<dbReference type="CTD" id="1277"/>
<dbReference type="DisGeNET" id="1277"/>
<dbReference type="GeneCards" id="COL1A1"/>
<dbReference type="GeneReviews" id="COL1A1"/>
<dbReference type="HGNC" id="HGNC:2197">
    <property type="gene designation" value="COL1A1"/>
</dbReference>
<dbReference type="HPA" id="ENSG00000108821">
    <property type="expression patterns" value="Tissue enhanced (cervix, gallbladder, ovary)"/>
</dbReference>
<dbReference type="MalaCards" id="COL1A1"/>
<dbReference type="MIM" id="114000">
    <property type="type" value="phenotype"/>
</dbReference>
<dbReference type="MIM" id="120150">
    <property type="type" value="gene"/>
</dbReference>
<dbReference type="MIM" id="130000">
    <property type="type" value="phenotype"/>
</dbReference>
<dbReference type="MIM" id="130060">
    <property type="type" value="phenotype"/>
</dbReference>
<dbReference type="MIM" id="166200">
    <property type="type" value="phenotype"/>
</dbReference>
<dbReference type="MIM" id="166210">
    <property type="type" value="phenotype"/>
</dbReference>
<dbReference type="MIM" id="166220">
    <property type="type" value="phenotype"/>
</dbReference>
<dbReference type="MIM" id="166710">
    <property type="type" value="phenotype"/>
</dbReference>
<dbReference type="MIM" id="259420">
    <property type="type" value="phenotype"/>
</dbReference>
<dbReference type="MIM" id="607907">
    <property type="type" value="phenotype"/>
</dbReference>
<dbReference type="MIM" id="619115">
    <property type="type" value="phenotype"/>
</dbReference>
<dbReference type="neXtProt" id="NX_P02452"/>
<dbReference type="OpenTargets" id="ENSG00000108821"/>
<dbReference type="Orphanet" id="1899">
    <property type="disease" value="Arthrochalasia Ehlers-Danlos syndrome"/>
</dbReference>
<dbReference type="Orphanet" id="1310">
    <property type="disease" value="Caffey disease"/>
</dbReference>
<dbReference type="Orphanet" id="287">
    <property type="disease" value="Classical Ehlers-Danlos syndrome"/>
</dbReference>
<dbReference type="Orphanet" id="31112">
    <property type="disease" value="Dermatofibrosarcoma protuberans"/>
</dbReference>
<dbReference type="Orphanet" id="230857">
    <property type="disease" value="Ehlers-Danlos/osteogenesis imperfecta syndrome"/>
</dbReference>
<dbReference type="Orphanet" id="314029">
    <property type="disease" value="High bone mass osteogenesis imperfecta"/>
</dbReference>
<dbReference type="Orphanet" id="216796">
    <property type="disease" value="Osteogenesis imperfecta type 1"/>
</dbReference>
<dbReference type="Orphanet" id="216804">
    <property type="disease" value="Osteogenesis imperfecta type 2"/>
</dbReference>
<dbReference type="Orphanet" id="216812">
    <property type="disease" value="Osteogenesis imperfecta type 3"/>
</dbReference>
<dbReference type="Orphanet" id="216820">
    <property type="disease" value="Osteogenesis imperfecta type 4"/>
</dbReference>
<dbReference type="PharmGKB" id="PA35041"/>
<dbReference type="VEuPathDB" id="HostDB:ENSG00000108821"/>
<dbReference type="eggNOG" id="KOG3544">
    <property type="taxonomic scope" value="Eukaryota"/>
</dbReference>
<dbReference type="GeneTree" id="ENSGT00940000156584"/>
<dbReference type="HOGENOM" id="CLU_001074_2_3_1"/>
<dbReference type="InParanoid" id="P02452"/>
<dbReference type="OMA" id="YYDRDVW"/>
<dbReference type="OrthoDB" id="8939548at2759"/>
<dbReference type="PAN-GO" id="P02452">
    <property type="GO annotations" value="11 GO annotations based on evolutionary models"/>
</dbReference>
<dbReference type="PhylomeDB" id="P02452"/>
<dbReference type="TreeFam" id="TF344135"/>
<dbReference type="PathwayCommons" id="P02452"/>
<dbReference type="Reactome" id="R-HSA-114604">
    <property type="pathway name" value="GPVI-mediated activation cascade"/>
</dbReference>
<dbReference type="Reactome" id="R-HSA-1442490">
    <property type="pathway name" value="Collagen degradation"/>
</dbReference>
<dbReference type="Reactome" id="R-HSA-1474244">
    <property type="pathway name" value="Extracellular matrix organization"/>
</dbReference>
<dbReference type="Reactome" id="R-HSA-1650814">
    <property type="pathway name" value="Collagen biosynthesis and modifying enzymes"/>
</dbReference>
<dbReference type="Reactome" id="R-HSA-198933">
    <property type="pathway name" value="Immunoregulatory interactions between a Lymphoid and a non-Lymphoid cell"/>
</dbReference>
<dbReference type="Reactome" id="R-HSA-2022090">
    <property type="pathway name" value="Assembly of collagen fibrils and other multimeric structures"/>
</dbReference>
<dbReference type="Reactome" id="R-HSA-202733">
    <property type="pathway name" value="Cell surface interactions at the vascular wall"/>
</dbReference>
<dbReference type="Reactome" id="R-HSA-216083">
    <property type="pathway name" value="Integrin cell surface interactions"/>
</dbReference>
<dbReference type="Reactome" id="R-HSA-2214320">
    <property type="pathway name" value="Anchoring fibril formation"/>
</dbReference>
<dbReference type="Reactome" id="R-HSA-2243919">
    <property type="pathway name" value="Crosslinking of collagen fibrils"/>
</dbReference>
<dbReference type="Reactome" id="R-HSA-3000170">
    <property type="pathway name" value="Syndecan interactions"/>
</dbReference>
<dbReference type="Reactome" id="R-HSA-3000171">
    <property type="pathway name" value="Non-integrin membrane-ECM interactions"/>
</dbReference>
<dbReference type="Reactome" id="R-HSA-3000178">
    <property type="pathway name" value="ECM proteoglycans"/>
</dbReference>
<dbReference type="Reactome" id="R-HSA-3000480">
    <property type="pathway name" value="Scavenging by Class A Receptors"/>
</dbReference>
<dbReference type="Reactome" id="R-HSA-430116">
    <property type="pathway name" value="GP1b-IX-V activation signalling"/>
</dbReference>
<dbReference type="Reactome" id="R-HSA-75892">
    <property type="pathway name" value="Platelet Adhesion to exposed collagen"/>
</dbReference>
<dbReference type="Reactome" id="R-HSA-76009">
    <property type="pathway name" value="Platelet Aggregation (Plug Formation)"/>
</dbReference>
<dbReference type="Reactome" id="R-HSA-8874081">
    <property type="pathway name" value="MET activates PTK2 signaling"/>
</dbReference>
<dbReference type="Reactome" id="R-HSA-8940973">
    <property type="pathway name" value="RUNX2 regulates osteoblast differentiation"/>
</dbReference>
<dbReference type="Reactome" id="R-HSA-8948216">
    <property type="pathway name" value="Collagen chain trimerization"/>
</dbReference>
<dbReference type="Reactome" id="R-HSA-9845619">
    <property type="pathway name" value="Enhanced cleavage of VWF variant by ADAMTS13"/>
</dbReference>
<dbReference type="Reactome" id="R-HSA-9845620">
    <property type="pathway name" value="Enhanced binding of GP1BA variant to VWF multimer:collagen"/>
</dbReference>
<dbReference type="Reactome" id="R-HSA-9845621">
    <property type="pathway name" value="Defective VWF cleavage by ADAMTS13 variant"/>
</dbReference>
<dbReference type="Reactome" id="R-HSA-9845622">
    <property type="pathway name" value="Defective VWF binding to collagen type I"/>
</dbReference>
<dbReference type="Reactome" id="R-HSA-9846298">
    <property type="pathway name" value="Defective binding of VWF variant to GPIb:IX:V"/>
</dbReference>
<dbReference type="SignaLink" id="P02452"/>
<dbReference type="SIGNOR" id="P02452"/>
<dbReference type="BioGRID-ORCS" id="1277">
    <property type="hits" value="23 hits in 1153 CRISPR screens"/>
</dbReference>
<dbReference type="ChiTaRS" id="COL1A1">
    <property type="organism name" value="human"/>
</dbReference>
<dbReference type="EvolutionaryTrace" id="P02452"/>
<dbReference type="GeneWiki" id="Collagen,_type_I,_alpha_1"/>
<dbReference type="GenomeRNAi" id="1277"/>
<dbReference type="Pharos" id="P02452">
    <property type="development level" value="Tbio"/>
</dbReference>
<dbReference type="PRO" id="PR:P02452"/>
<dbReference type="Proteomes" id="UP000005640">
    <property type="component" value="Chromosome 17"/>
</dbReference>
<dbReference type="RNAct" id="P02452">
    <property type="molecule type" value="protein"/>
</dbReference>
<dbReference type="Bgee" id="ENSG00000108821">
    <property type="expression patterns" value="Expressed in stromal cell of endometrium and 220 other cell types or tissues"/>
</dbReference>
<dbReference type="ExpressionAtlas" id="P02452">
    <property type="expression patterns" value="baseline and differential"/>
</dbReference>
<dbReference type="GO" id="GO:0005584">
    <property type="term" value="C:collagen type I trimer"/>
    <property type="evidence" value="ECO:0000314"/>
    <property type="project" value="CAFA"/>
</dbReference>
<dbReference type="GO" id="GO:0062023">
    <property type="term" value="C:collagen-containing extracellular matrix"/>
    <property type="evidence" value="ECO:0007005"/>
    <property type="project" value="UniProtKB"/>
</dbReference>
<dbReference type="GO" id="GO:0005788">
    <property type="term" value="C:endoplasmic reticulum lumen"/>
    <property type="evidence" value="ECO:0000304"/>
    <property type="project" value="Reactome"/>
</dbReference>
<dbReference type="GO" id="GO:0005576">
    <property type="term" value="C:extracellular region"/>
    <property type="evidence" value="ECO:0007005"/>
    <property type="project" value="BHF-UCL"/>
</dbReference>
<dbReference type="GO" id="GO:0005615">
    <property type="term" value="C:extracellular space"/>
    <property type="evidence" value="ECO:0000315"/>
    <property type="project" value="UniProtKB"/>
</dbReference>
<dbReference type="GO" id="GO:0030141">
    <property type="term" value="C:secretory granule"/>
    <property type="evidence" value="ECO:0007669"/>
    <property type="project" value="Ensembl"/>
</dbReference>
<dbReference type="GO" id="GO:0030020">
    <property type="term" value="F:extracellular matrix structural constituent conferring tensile strength"/>
    <property type="evidence" value="ECO:0007005"/>
    <property type="project" value="BHF-UCL"/>
</dbReference>
<dbReference type="GO" id="GO:0042802">
    <property type="term" value="F:identical protein binding"/>
    <property type="evidence" value="ECO:0000314"/>
    <property type="project" value="UniProtKB"/>
</dbReference>
<dbReference type="GO" id="GO:0046872">
    <property type="term" value="F:metal ion binding"/>
    <property type="evidence" value="ECO:0007669"/>
    <property type="project" value="UniProtKB-KW"/>
</dbReference>
<dbReference type="GO" id="GO:0048407">
    <property type="term" value="F:platelet-derived growth factor binding"/>
    <property type="evidence" value="ECO:0000314"/>
    <property type="project" value="MGI"/>
</dbReference>
<dbReference type="GO" id="GO:0002020">
    <property type="term" value="F:protease binding"/>
    <property type="evidence" value="ECO:0000353"/>
    <property type="project" value="CAFA"/>
</dbReference>
<dbReference type="GO" id="GO:0001568">
    <property type="term" value="P:blood vessel development"/>
    <property type="evidence" value="ECO:0000315"/>
    <property type="project" value="UniProtKB"/>
</dbReference>
<dbReference type="GO" id="GO:0060346">
    <property type="term" value="P:bone trabecula formation"/>
    <property type="evidence" value="ECO:0007669"/>
    <property type="project" value="Ensembl"/>
</dbReference>
<dbReference type="GO" id="GO:0060351">
    <property type="term" value="P:cartilage development involved in endochondral bone morphogenesis"/>
    <property type="evidence" value="ECO:0007669"/>
    <property type="project" value="Ensembl"/>
</dbReference>
<dbReference type="GO" id="GO:0071230">
    <property type="term" value="P:cellular response to amino acid stimulus"/>
    <property type="evidence" value="ECO:0007669"/>
    <property type="project" value="Ensembl"/>
</dbReference>
<dbReference type="GO" id="GO:0071364">
    <property type="term" value="P:cellular response to epidermal growth factor stimulus"/>
    <property type="evidence" value="ECO:0007669"/>
    <property type="project" value="Ensembl"/>
</dbReference>
<dbReference type="GO" id="GO:0044344">
    <property type="term" value="P:cellular response to fibroblast growth factor stimulus"/>
    <property type="evidence" value="ECO:0007669"/>
    <property type="project" value="Ensembl"/>
</dbReference>
<dbReference type="GO" id="GO:1902618">
    <property type="term" value="P:cellular response to fluoride"/>
    <property type="evidence" value="ECO:0007669"/>
    <property type="project" value="Ensembl"/>
</dbReference>
<dbReference type="GO" id="GO:0071333">
    <property type="term" value="P:cellular response to glucose stimulus"/>
    <property type="evidence" value="ECO:0007669"/>
    <property type="project" value="Ensembl"/>
</dbReference>
<dbReference type="GO" id="GO:0071260">
    <property type="term" value="P:cellular response to mechanical stimulus"/>
    <property type="evidence" value="ECO:0007669"/>
    <property type="project" value="Ensembl"/>
</dbReference>
<dbReference type="GO" id="GO:0071300">
    <property type="term" value="P:cellular response to retinoic acid"/>
    <property type="evidence" value="ECO:0007669"/>
    <property type="project" value="Ensembl"/>
</dbReference>
<dbReference type="GO" id="GO:0071560">
    <property type="term" value="P:cellular response to transforming growth factor beta stimulus"/>
    <property type="evidence" value="ECO:0007669"/>
    <property type="project" value="Ensembl"/>
</dbReference>
<dbReference type="GO" id="GO:0071356">
    <property type="term" value="P:cellular response to tumor necrosis factor"/>
    <property type="evidence" value="ECO:0007669"/>
    <property type="project" value="Ensembl"/>
</dbReference>
<dbReference type="GO" id="GO:0071306">
    <property type="term" value="P:cellular response to vitamin E"/>
    <property type="evidence" value="ECO:0007669"/>
    <property type="project" value="Ensembl"/>
</dbReference>
<dbReference type="GO" id="GO:0032964">
    <property type="term" value="P:collagen biosynthetic process"/>
    <property type="evidence" value="ECO:0000315"/>
    <property type="project" value="UniProtKB"/>
</dbReference>
<dbReference type="GO" id="GO:0030199">
    <property type="term" value="P:collagen fibril organization"/>
    <property type="evidence" value="ECO:0000315"/>
    <property type="project" value="UniProtKB"/>
</dbReference>
<dbReference type="GO" id="GO:0038063">
    <property type="term" value="P:collagen-activated tyrosine kinase receptor signaling pathway"/>
    <property type="evidence" value="ECO:0007669"/>
    <property type="project" value="Ensembl"/>
</dbReference>
<dbReference type="GO" id="GO:0048706">
    <property type="term" value="P:embryonic skeletal system development"/>
    <property type="evidence" value="ECO:0000315"/>
    <property type="project" value="UniProtKB"/>
</dbReference>
<dbReference type="GO" id="GO:0001958">
    <property type="term" value="P:endochondral ossification"/>
    <property type="evidence" value="ECO:0007669"/>
    <property type="project" value="Ensembl"/>
</dbReference>
<dbReference type="GO" id="GO:0060325">
    <property type="term" value="P:face morphogenesis"/>
    <property type="evidence" value="ECO:0007669"/>
    <property type="project" value="Ensembl"/>
</dbReference>
<dbReference type="GO" id="GO:0001957">
    <property type="term" value="P:intramembranous ossification"/>
    <property type="evidence" value="ECO:0007669"/>
    <property type="project" value="Ensembl"/>
</dbReference>
<dbReference type="GO" id="GO:0010812">
    <property type="term" value="P:negative regulation of cell-substrate adhesion"/>
    <property type="evidence" value="ECO:0007669"/>
    <property type="project" value="Ensembl"/>
</dbReference>
<dbReference type="GO" id="GO:0001649">
    <property type="term" value="P:osteoblast differentiation"/>
    <property type="evidence" value="ECO:0007669"/>
    <property type="project" value="Ensembl"/>
</dbReference>
<dbReference type="GO" id="GO:0090263">
    <property type="term" value="P:positive regulation of canonical Wnt signaling pathway"/>
    <property type="evidence" value="ECO:0000314"/>
    <property type="project" value="UniProtKB"/>
</dbReference>
<dbReference type="GO" id="GO:0030335">
    <property type="term" value="P:positive regulation of cell migration"/>
    <property type="evidence" value="ECO:0000314"/>
    <property type="project" value="UniProtKB"/>
</dbReference>
<dbReference type="GO" id="GO:0045893">
    <property type="term" value="P:positive regulation of DNA-templated transcription"/>
    <property type="evidence" value="ECO:0000314"/>
    <property type="project" value="UniProtKB"/>
</dbReference>
<dbReference type="GO" id="GO:0010718">
    <property type="term" value="P:positive regulation of epithelial to mesenchymal transition"/>
    <property type="evidence" value="ECO:0000314"/>
    <property type="project" value="UniProtKB"/>
</dbReference>
<dbReference type="GO" id="GO:0034504">
    <property type="term" value="P:protein localization to nucleus"/>
    <property type="evidence" value="ECO:0000314"/>
    <property type="project" value="UniProtKB"/>
</dbReference>
<dbReference type="GO" id="GO:0015031">
    <property type="term" value="P:protein transport"/>
    <property type="evidence" value="ECO:0007669"/>
    <property type="project" value="Ensembl"/>
</dbReference>
<dbReference type="GO" id="GO:0051591">
    <property type="term" value="P:response to cAMP"/>
    <property type="evidence" value="ECO:0007669"/>
    <property type="project" value="Ensembl"/>
</dbReference>
<dbReference type="GO" id="GO:0032355">
    <property type="term" value="P:response to estradiol"/>
    <property type="evidence" value="ECO:0007669"/>
    <property type="project" value="Ensembl"/>
</dbReference>
<dbReference type="GO" id="GO:0042542">
    <property type="term" value="P:response to hydrogen peroxide"/>
    <property type="evidence" value="ECO:0007669"/>
    <property type="project" value="Ensembl"/>
</dbReference>
<dbReference type="GO" id="GO:0055093">
    <property type="term" value="P:response to hyperoxia"/>
    <property type="evidence" value="ECO:0007669"/>
    <property type="project" value="Ensembl"/>
</dbReference>
<dbReference type="GO" id="GO:0032868">
    <property type="term" value="P:response to insulin"/>
    <property type="evidence" value="ECO:0007669"/>
    <property type="project" value="Ensembl"/>
</dbReference>
<dbReference type="GO" id="GO:0048545">
    <property type="term" value="P:response to steroid hormone"/>
    <property type="evidence" value="ECO:0007669"/>
    <property type="project" value="Ensembl"/>
</dbReference>
<dbReference type="GO" id="GO:0009410">
    <property type="term" value="P:response to xenobiotic stimulus"/>
    <property type="evidence" value="ECO:0007669"/>
    <property type="project" value="Ensembl"/>
</dbReference>
<dbReference type="GO" id="GO:0007605">
    <property type="term" value="P:sensory perception of sound"/>
    <property type="evidence" value="ECO:0000315"/>
    <property type="project" value="UniProtKB"/>
</dbReference>
<dbReference type="GO" id="GO:0001501">
    <property type="term" value="P:skeletal system development"/>
    <property type="evidence" value="ECO:0000315"/>
    <property type="project" value="UniProtKB"/>
</dbReference>
<dbReference type="GO" id="GO:0043589">
    <property type="term" value="P:skin morphogenesis"/>
    <property type="evidence" value="ECO:0000315"/>
    <property type="project" value="UniProtKB"/>
</dbReference>
<dbReference type="GO" id="GO:0034505">
    <property type="term" value="P:tooth mineralization"/>
    <property type="evidence" value="ECO:0000315"/>
    <property type="project" value="UniProtKB"/>
</dbReference>
<dbReference type="GO" id="GO:0007601">
    <property type="term" value="P:visual perception"/>
    <property type="evidence" value="ECO:0000315"/>
    <property type="project" value="UniProtKB"/>
</dbReference>
<dbReference type="FunFam" id="2.60.120.1000:FF:000001">
    <property type="entry name" value="Collagen alpha-1 type I chain"/>
    <property type="match status" value="1"/>
</dbReference>
<dbReference type="FunFam" id="2.10.70.10:FF:000013">
    <property type="entry name" value="Collagen, type I, alpha 1"/>
    <property type="match status" value="1"/>
</dbReference>
<dbReference type="Gene3D" id="2.60.120.1000">
    <property type="match status" value="1"/>
</dbReference>
<dbReference type="Gene3D" id="1.20.5.320">
    <property type="entry name" value="6-Phosphogluconate Dehydrogenase, domain 3"/>
    <property type="match status" value="1"/>
</dbReference>
<dbReference type="Gene3D" id="2.10.70.10">
    <property type="entry name" value="Complement Module, domain 1"/>
    <property type="match status" value="1"/>
</dbReference>
<dbReference type="InterPro" id="IPR008160">
    <property type="entry name" value="Collagen"/>
</dbReference>
<dbReference type="InterPro" id="IPR050149">
    <property type="entry name" value="Collagen_superfamily"/>
</dbReference>
<dbReference type="InterPro" id="IPR000885">
    <property type="entry name" value="Fib_collagen_C"/>
</dbReference>
<dbReference type="InterPro" id="IPR001007">
    <property type="entry name" value="VWF_dom"/>
</dbReference>
<dbReference type="PANTHER" id="PTHR24023">
    <property type="entry name" value="COLLAGEN ALPHA"/>
    <property type="match status" value="1"/>
</dbReference>
<dbReference type="PANTHER" id="PTHR24023:SF1082">
    <property type="entry name" value="COLLAGEN TRIPLE HELIX REPEAT"/>
    <property type="match status" value="1"/>
</dbReference>
<dbReference type="Pfam" id="PF01410">
    <property type="entry name" value="COLFI"/>
    <property type="match status" value="1"/>
</dbReference>
<dbReference type="Pfam" id="PF01391">
    <property type="entry name" value="Collagen"/>
    <property type="match status" value="12"/>
</dbReference>
<dbReference type="Pfam" id="PF00093">
    <property type="entry name" value="VWC"/>
    <property type="match status" value="1"/>
</dbReference>
<dbReference type="SMART" id="SM00038">
    <property type="entry name" value="COLFI"/>
    <property type="match status" value="1"/>
</dbReference>
<dbReference type="SMART" id="SM00214">
    <property type="entry name" value="VWC"/>
    <property type="match status" value="1"/>
</dbReference>
<dbReference type="SUPFAM" id="SSF57603">
    <property type="entry name" value="FnI-like domain"/>
    <property type="match status" value="1"/>
</dbReference>
<dbReference type="PROSITE" id="PS51461">
    <property type="entry name" value="NC1_FIB"/>
    <property type="match status" value="1"/>
</dbReference>
<dbReference type="PROSITE" id="PS01208">
    <property type="entry name" value="VWFC_1"/>
    <property type="match status" value="1"/>
</dbReference>
<dbReference type="PROSITE" id="PS50184">
    <property type="entry name" value="VWFC_2"/>
    <property type="match status" value="1"/>
</dbReference>
<reference key="1">
    <citation type="submission" date="1996-07" db="EMBL/GenBank/DDBJ databases">
        <authorList>
            <person name="Dalgleish R."/>
        </authorList>
    </citation>
    <scope>NUCLEOTIDE SEQUENCE [MRNA]</scope>
    <scope>VARIANTS ALA-1019; LYS-1391 AND SER-1434</scope>
</reference>
<reference key="2">
    <citation type="journal article" date="1998" name="Am. J. Hum. Genet.">
        <title>Analysis of the COL1A1 and COL1A2 genes by PCR amplification and scanning by conformation-sensitive gel electrophoresis identifies only COL1A1 mutations in 15 patients with osteogenesis imperfecta type I: identification of common sequences of null-allele mutations.</title>
        <authorList>
            <person name="Korkko J.M."/>
            <person name="Ala-Kokko L."/>
            <person name="De Paepe A."/>
            <person name="Nuytinck L."/>
            <person name="Earley J.J."/>
            <person name="Prockop D.J."/>
        </authorList>
    </citation>
    <scope>NUCLEOTIDE SEQUENCE [GENOMIC DNA]</scope>
    <scope>VARIANT LYS-1391</scope>
</reference>
<reference key="3">
    <citation type="submission" date="1999-05" db="EMBL/GenBank/DDBJ databases">
        <authorList>
            <person name="Korkko J.M."/>
            <person name="Earley J.J."/>
            <person name="Nuytinck L."/>
            <person name="DePaepe A."/>
            <person name="Prockop D.J."/>
            <person name="Ala-Kokko L."/>
        </authorList>
    </citation>
    <scope>SEQUENCE REVISION TO 1049</scope>
</reference>
<reference key="4">
    <citation type="submission" date="2005-03" db="EMBL/GenBank/DDBJ databases">
        <authorList>
            <person name="Totoki Y."/>
            <person name="Toyoda A."/>
            <person name="Takeda T."/>
            <person name="Sakaki Y."/>
            <person name="Tanaka A."/>
            <person name="Yokoyama S."/>
            <person name="Ohara O."/>
            <person name="Nagase T."/>
            <person name="Kikuno R.F."/>
        </authorList>
    </citation>
    <scope>NUCLEOTIDE SEQUENCE [LARGE SCALE MRNA]</scope>
    <source>
        <tissue>Spleen</tissue>
    </source>
</reference>
<reference key="5">
    <citation type="journal article" date="2004" name="Genome Res.">
        <title>The status, quality, and expansion of the NIH full-length cDNA project: the Mammalian Gene Collection (MGC).</title>
        <authorList>
            <consortium name="The MGC Project Team"/>
        </authorList>
    </citation>
    <scope>NUCLEOTIDE SEQUENCE [LARGE SCALE MRNA]</scope>
    <scope>VARIANTS ARG-1438 AND HIS-1460</scope>
    <source>
        <tissue>Brain</tissue>
    </source>
</reference>
<reference key="6">
    <citation type="journal article" date="1988" name="Gene">
        <title>Complete nucleotide sequence of the region encompassing the first twenty-five exons of the human pro alpha 1(I) collagen gene (COL1A1).</title>
        <authorList>
            <person name="D'Alessio M."/>
            <person name="Bernard M.P."/>
            <person name="Pretorius P.J."/>
            <person name="de Wet W."/>
            <person name="Ramirez F."/>
            <person name="Pretorious P.J."/>
        </authorList>
    </citation>
    <scope>NUCLEOTIDE SEQUENCE [GENOMIC DNA] OF 1-589</scope>
</reference>
<reference key="7">
    <citation type="journal article" date="1988" name="Biochem. J.">
        <title>Structure of a full-length cDNA clone for the prepro alpha 1(I) chain of human type I procollagen.</title>
        <authorList>
            <person name="Tromp G."/>
            <person name="Kuivaniemi H."/>
            <person name="Stacey A."/>
            <person name="Shikata H."/>
            <person name="Baldwin C.T."/>
            <person name="Jaenisch R."/>
            <person name="Prockup D.J."/>
        </authorList>
    </citation>
    <scope>NUCLEOTIDE SEQUENCE [MRNA] OF 1-472</scope>
</reference>
<reference key="8">
    <citation type="journal article" date="1984" name="Nature">
        <title>Human pro alpha 1(I) collagen gene structure reveals evolutionary conservation of a pattern of introns and exons.</title>
        <authorList>
            <person name="Chu M.-L."/>
            <person name="de Wet W.J."/>
            <person name="Bernard M.P."/>
            <person name="Ding J.-F."/>
            <person name="Morabito M."/>
            <person name="Myers J."/>
            <person name="Williams C."/>
            <person name="Ramirez F."/>
        </authorList>
    </citation>
    <scope>NUCLEOTIDE SEQUENCE [GENOMIC DNA] OF 1-181</scope>
</reference>
<reference key="9">
    <citation type="journal article" date="1987" name="J. Biol. Chem.">
        <title>DNA sequences in the first intron of the human pro-alpha 1(I) collagen gene enhance transcription.</title>
        <authorList>
            <person name="Rossouw C.M.S."/>
            <person name="Vergeer W.P."/>
            <person name="du Plooy S.J."/>
            <person name="Bernard M.P."/>
            <person name="Ramirez F."/>
            <person name="de Wet W."/>
        </authorList>
    </citation>
    <scope>NUCLEOTIDE SEQUENCE [GENOMIC DNA] OF 1-44</scope>
</reference>
<reference key="10">
    <citation type="journal article" date="1985" name="J. Biol. Chem.">
        <title>Fine structural analysis of the human pro-alpha 1 (I) collagen gene. Promoter structure, AluI repeats, and polymorphic transcripts.</title>
        <authorList>
            <person name="Chu M.-L."/>
            <person name="de Wet W."/>
            <person name="Bernard M.P."/>
            <person name="Ramirez F."/>
        </authorList>
    </citation>
    <scope>NUCLEOTIDE SEQUENCE [GENOMIC DNA] OF 1-34</scope>
</reference>
<reference key="11">
    <citation type="journal article" date="1987" name="Proc. Natl. Acad. Sci. U.S.A.">
        <title>Regulatory elements in the first intron contribute to transcriptional control of the human alpha 1(I) collagen gene.</title>
        <authorList>
            <person name="Bornstein P."/>
            <person name="McKay J."/>
            <person name="Morishima J.K."/>
            <person name="Devarayalu S."/>
            <person name="Gelinas R.E."/>
        </authorList>
    </citation>
    <scope>NUCLEOTIDE SEQUENCE [GENOMIC DNA] OF 1-34</scope>
</reference>
<reference key="12">
    <citation type="journal article" date="1990" name="J. Biol. Chem.">
        <title>In vivo and in vitro noncovalent association of excised alpha 1 (I) amino-terminal propeptides with mutant pN alpha 2(I) collagen chains in native mutant collagen in a case of Ehlers-Danlos syndrome, type VII.</title>
        <authorList>
            <person name="Wirtz M.K."/>
            <person name="Keene D.R."/>
            <person name="Hori H."/>
            <person name="Glanville R.W."/>
            <person name="Steinmann B."/>
            <person name="Rao V.H."/>
            <person name="Hollister D.W."/>
        </authorList>
    </citation>
    <scope>PROTEIN SEQUENCE OF 33-52</scope>
</reference>
<reference key="13">
    <citation type="journal article" date="1989" name="EMBO J.">
        <title>A base substitution in the exon of a collagen gene causes alternative splicing and generates a structurally abnormal polypeptide in a patient with Ehlers-Danlos syndrome type VII.</title>
        <authorList>
            <person name="Weil D."/>
            <person name="D'Alessio M."/>
            <person name="Ramirez F."/>
            <person name="de Wet W."/>
            <person name="Cole W.G."/>
            <person name="Chan D."/>
            <person name="Bateman J.F."/>
        </authorList>
    </citation>
    <scope>NUCLEOTIDE SEQUENCE OF 156-183</scope>
</reference>
<reference key="14">
    <citation type="journal article" date="1970" name="Biochemistry">
        <title>Isolation and characterization of the cyanogen bromide peptides from the alpha 1 and alpha 2 chains of human skin collagen.</title>
        <authorList>
            <person name="Click E.M."/>
            <person name="Bornstein P."/>
        </authorList>
    </citation>
    <scope>PROTEIN SEQUENCE OF 162-301</scope>
    <scope>ALLYSINE AT LYS-170</scope>
    <scope>PYROGLUTAMATE FORMATION AT GLN-162</scope>
    <source>
        <tissue>Skin</tissue>
    </source>
</reference>
<reference key="15">
    <citation type="journal article" date="1990" name="Eur. J. Biochem.">
        <title>A critical crosslink region in human-bone-derived collagen type I. Specific cleavage site at residue Leu95.</title>
        <authorList>
            <person name="Baetge B."/>
            <person name="Notbohm H."/>
            <person name="Diebold J."/>
            <person name="Lehmann H."/>
            <person name="Bodo M."/>
            <person name="Deutzmann R."/>
            <person name="Muller P.K."/>
        </authorList>
    </citation>
    <scope>PROTEIN SEQUENCE OF 175-187 AND 274-289</scope>
</reference>
<reference key="16">
    <citation type="journal article" date="1970" name="J. Biol. Chem.">
        <title>A comparative study of glycopeptides derived from selected vertebrate collagens. A possible role of the carbohydrate in fibril formation.</title>
        <authorList>
            <person name="Morgan P.H."/>
            <person name="Jacobs H.G."/>
            <person name="Segrest J.P."/>
            <person name="Cunningham L.W."/>
        </authorList>
    </citation>
    <scope>PROTEIN SEQUENCE OF 263-268</scope>
    <scope>HYDROXYLATION AT LYS-265</scope>
    <scope>GLYCOSYLATION AT LYS-265</scope>
    <source>
        <tissue>Skin</tissue>
    </source>
</reference>
<reference key="17">
    <citation type="journal article" date="1990" name="Matrix">
        <title>Segmental amplification of the entire helical and telopeptide regions of the cDNA for human alpha 1 (I) collagen.</title>
        <authorList>
            <person name="Labhard M.E."/>
            <person name="Hollister D.W."/>
        </authorList>
    </citation>
    <scope>NUCLEOTIDE SEQUENCE OF 281-302; 402-420; 823-842; 924-944; 1026-1045 AND 1143-1162</scope>
</reference>
<reference key="18">
    <citation type="journal article" date="1983" name="Biochemistry">
        <title>Nucleotide sequences of complementary deoxyribonucleic acids for the pro alpha 1 chain of human type I procollagen. Statistical evaluation of structures that are conserved during evolution.</title>
        <authorList>
            <person name="Bernard M.P."/>
            <person name="Chu M.-L."/>
            <person name="Myers J.C."/>
            <person name="Ramirez F."/>
            <person name="Eikenberry E.F."/>
            <person name="Prockop D.J."/>
        </authorList>
    </citation>
    <scope>NUCLEOTIDE SEQUENCE [MRNA] OF 425-1464</scope>
    <scope>VARIANT ALA-1019</scope>
</reference>
<reference key="19">
    <citation type="journal article" date="1982" name="Nucleic Acids Res.">
        <title>Cloning and characterization of five overlapping cDNAs specific for the human pro alpha 1(I) collagen chain.</title>
        <authorList>
            <person name="Chu M.-L."/>
            <person name="Myers J.C."/>
            <person name="Bernard M.P."/>
            <person name="Ding J.-F."/>
            <person name="Ramirez F."/>
        </authorList>
    </citation>
    <scope>NUCLEOTIDE SEQUENCE [MRNA] OF 425-490; 965-1024; 999-1039 AND 1453-1464</scope>
</reference>
<reference key="20">
    <citation type="journal article" date="1985" name="J. Biol. Chem.">
        <title>Multiexon deletion in an osteogenesis imperfecta variant with increased type III collagen mRNA.</title>
        <authorList>
            <person name="Chu M.-L."/>
            <person name="Gargiulo V."/>
            <person name="Williams C.J."/>
            <person name="Ramirez F."/>
        </authorList>
    </citation>
    <scope>NUCLEOTIDE SEQUENCE [GENOMIC DNA] OF 472-607</scope>
</reference>
<reference key="21">
    <citation type="journal article" date="1985" name="Proc. Natl. Acad. Sci. U.S.A.">
        <title>Intron-mediated recombination may cause a deletion in an alpha 1 type I collagen chain in a lethal form of osteogenesis imperfecta.</title>
        <authorList>
            <person name="Barsh G.S."/>
            <person name="Roush C.L."/>
            <person name="Bonadio J."/>
            <person name="Byers P.H."/>
            <person name="Gelinas R.E."/>
        </authorList>
    </citation>
    <scope>NUCLEOTIDE SEQUENCE [GENOMIC DNA] OF 488-625</scope>
</reference>
<reference key="22">
    <citation type="journal article" date="1990" name="Am. J. Hum. Genet.">
        <title>Variable expression of osteogenesis imperfecta in a nuclear family is explained by somatic mosaicism for a lethal point mutation in the alpha 1(I) gene (COL1A1) of type I collagen in a parent.</title>
        <authorList>
            <person name="Wallis G.A."/>
            <person name="Starman B.J."/>
            <person name="Zinn A.B."/>
            <person name="Byers P.H."/>
        </authorList>
    </citation>
    <scope>NUCLEOTIDE SEQUENCE OF 710-745</scope>
    <scope>VARIANT OI2 ARG-728</scope>
</reference>
<reference key="23">
    <citation type="journal article" date="1994" name="Hum. Mol. Genet.">
        <title>Severe (type III) osteogenesis imperfecta due to glycine substitutions in the central domain of the collagen triple helix.</title>
        <authorList>
            <person name="Forlino A."/>
            <person name="Zolezzi F."/>
            <person name="Valli M."/>
            <person name="Pignatti P.F."/>
            <person name="Cetta G."/>
            <person name="Brunelli P.C."/>
            <person name="Mottes M."/>
        </authorList>
    </citation>
    <scope>NUCLEOTIDE SEQUENCE [GENOMIC DNA] OF 746-781</scope>
    <scope>VARIANT OI3 SER-767</scope>
</reference>
<reference key="24">
    <citation type="submission" date="2008-12" db="UniProtKB">
        <authorList>
            <person name="Lubec G."/>
            <person name="Chen W.-Q."/>
            <person name="Sun Y."/>
        </authorList>
    </citation>
    <scope>PROTEIN SEQUENCE OF 1063-1084</scope>
    <scope>IDENTIFICATION BY MASS SPECTROMETRY</scope>
    <source>
        <tissue>Fetal brain cortex</tissue>
    </source>
</reference>
<reference key="25">
    <citation type="journal article" date="1993" name="J. Biol. Chem.">
        <title>Mutations in the carboxyl-terminal propeptide of the pro alpha 1(I) chain of type I collagen result in defective chain association and produce lethal osteogenesis imperfecta.</title>
        <authorList>
            <person name="Chessler S.D."/>
            <person name="Wallis G.A."/>
            <person name="Byers P.H."/>
        </authorList>
    </citation>
    <scope>NUCLEOTIDE SEQUENCE [MRNA] OF 1179-1464</scope>
    <scope>VARIANTS OI2 HIS-1277; ARG-1388 AND 1337-GLU-TYR-1338 DEL</scope>
    <scope>VARIANTS THR-1251 AND SER-1434</scope>
</reference>
<reference key="26">
    <citation type="journal article" date="1988" name="J. Biol. Chem.">
        <title>Substitution of cysteine for glycine within the carboxyl-terminal telopeptide of the alpha 1 chain of type I collagen produces mild osteogenesis imperfecta.</title>
        <authorList>
            <person name="Cohn D.H."/>
            <person name="Apone S."/>
            <person name="Eyre D.R."/>
            <person name="Starman B.J."/>
            <person name="Andreassen P."/>
            <person name="Charbonneau H."/>
            <person name="Nicholls A.C."/>
            <person name="Pope F.M."/>
            <person name="Byers P.H."/>
        </authorList>
    </citation>
    <scope>NUCLEOTIDE SEQUENCE [GENOMIC DNA] OF 1187-1220</scope>
    <scope>VARIANT CYS-1195</scope>
</reference>
<reference key="27">
    <citation type="journal article" date="1988" name="Nucleic Acids Res.">
        <title>Human pro alpha 1(I) collagen: cDNA sequence for the C-propeptide domain.</title>
        <authorList>
            <person name="Maekelae J.K."/>
            <person name="Raassina M."/>
            <person name="Virta A."/>
            <person name="Vuorio E."/>
        </authorList>
    </citation>
    <scope>NUCLEOTIDE SEQUENCE [MRNA] OF 1229-1454</scope>
    <scope>VARIANT LYS-1391</scope>
    <source>
        <tissue>Bone</tissue>
    </source>
</reference>
<reference key="28">
    <citation type="journal article" date="1990" name="J. Clin. Invest.">
        <title>Frameshift mutation near the 3' end of the COL1A1 gene of type I collagen predicts an elongated Pro alpha 1(I) chain and results in osteogenesis imperfecta type I.</title>
        <authorList>
            <person name="Willing M.C."/>
            <person name="Cohn D.H."/>
            <person name="Byers P.H."/>
        </authorList>
    </citation>
    <scope>NUCLEOTIDE SEQUENCE [MRNA] OF 1440-1464</scope>
</reference>
<reference key="29">
    <citation type="journal article" date="1991" name="FEBS Lett.">
        <title>Highly conserved sequences in the 3'-untranslated region of the COL1A1 gene bind cell-specific nuclear proteins.</title>
        <authorList>
            <person name="Maatta A."/>
            <person name="Bornstein P."/>
            <person name="Penttinen R.P."/>
        </authorList>
    </citation>
    <scope>NUCLEOTIDE SEQUENCE [GENOMIC DNA] OF 1454-1464</scope>
</reference>
<reference key="30">
    <citation type="journal article" date="1991" name="FASEB J.">
        <title>Mutations in collagen genes: causes of rare and some common diseases in humans.</title>
        <authorList>
            <person name="Kuivaniemi H."/>
            <person name="Tromp G."/>
            <person name="Prockop D.J."/>
        </authorList>
    </citation>
    <scope>REVIEW ON VARIANTS</scope>
</reference>
<reference key="31">
    <citation type="journal article" date="1997" name="Am. J. Med. Genet.">
        <title>Ehlers-Danlos syndrome type VIIA and VIIB result from splice-junction mutations or genomic deletions that involve exon 6 in the COL1A1 and COL1A2 genes of type I collagen.</title>
        <authorList>
            <person name="Byers P.H."/>
            <person name="Duvic M."/>
            <person name="Atkinson M."/>
            <person name="Robinow M."/>
            <person name="Smith L.T."/>
            <person name="Krane S.M."/>
            <person name="Greally M.T."/>
            <person name="Ludman M."/>
            <person name="Matalon R."/>
            <person name="Pauker S."/>
            <person name="Quanbeck D."/>
            <person name="Schwarze U."/>
        </authorList>
    </citation>
    <scope>INVOLVEMENT IN EDSARTH1</scope>
</reference>
<reference key="32">
    <citation type="journal article" date="1997" name="Hum. Mutat.">
        <title>Mutations in fibrillar collagens (types I, II, III, and XI), fibril-associated collagen (type IX), and network-forming collagen (type X) cause a spectrum of diseases of bone, cartilage, and blood vessels.</title>
        <authorList>
            <person name="Kuivaniemi H."/>
            <person name="Tromp G."/>
            <person name="Prockop D.J."/>
        </authorList>
    </citation>
    <scope>REVIEW ON VARIANTS</scope>
</reference>
<reference key="33">
    <citation type="journal article" date="1991" name="J. Med. Genet.">
        <title>Osteogenesis imperfecta: translation of mutation to phenotype.</title>
        <authorList>
            <person name="Byers P.H."/>
            <person name="Wallis G.A."/>
            <person name="Willing M.C."/>
        </authorList>
    </citation>
    <scope>REVIEW ON VARIANTS</scope>
</reference>
<reference key="34">
    <citation type="journal article" date="2004" name="Mol. Cell. Biol.">
        <title>TRAM2 protein interacts with endoplasmic reticulum Ca2+ pump Serca2b and is necessary for collagen type I synthesis.</title>
        <authorList>
            <person name="Stefanovic B."/>
            <person name="Stefanovic L."/>
            <person name="Schnabl B."/>
            <person name="Bataller R."/>
            <person name="Brenner D.A."/>
        </authorList>
    </citation>
    <scope>INTERACTION WITH TRAM2</scope>
</reference>
<reference key="35">
    <citation type="journal article" date="2008" name="Am. J. Med. Genet. A">
        <title>The arthrochalasia type of Ehlers-Danlos syndrome (EDS VIIA and VIIB): the diagnostic value of collagen fibril ultrastructure.</title>
        <authorList>
            <person name="Giunta C."/>
            <person name="Chambaz C."/>
            <person name="Pedemonte M."/>
            <person name="Scapolan S."/>
            <person name="Steinmann B."/>
        </authorList>
    </citation>
    <scope>INVOLVEMENT IN EDSARTH1</scope>
</reference>
<reference key="36">
    <citation type="journal article" date="2012" name="J. Proteome Res.">
        <title>Resveratrol-induced changes of the human adipocyte secretion profile.</title>
        <authorList>
            <person name="Rosenow A."/>
            <person name="Noben J.P."/>
            <person name="Jocken J."/>
            <person name="Kallendrusch S."/>
            <person name="Fischer-Posovszky P."/>
            <person name="Mariman E.C."/>
            <person name="Renes J."/>
        </authorList>
    </citation>
    <scope>IDENTIFICATION BY MASS SPECTROMETRY [LARGE SCALE ANALYSIS]</scope>
</reference>
<reference key="37">
    <citation type="journal article" date="2014" name="J. Proteomics">
        <title>An enzyme assisted RP-RPLC approach for in-depth analysis of human liver phosphoproteome.</title>
        <authorList>
            <person name="Bian Y."/>
            <person name="Song C."/>
            <person name="Cheng K."/>
            <person name="Dong M."/>
            <person name="Wang F."/>
            <person name="Huang J."/>
            <person name="Sun D."/>
            <person name="Wang L."/>
            <person name="Ye M."/>
            <person name="Zou H."/>
        </authorList>
    </citation>
    <scope>IDENTIFICATION BY MASS SPECTROMETRY [LARGE SCALE ANALYSIS]</scope>
    <source>
        <tissue>Liver</tissue>
    </source>
</reference>
<reference key="38">
    <citation type="journal article" date="1986" name="Proc. Natl. Acad. Sci. U.S.A.">
        <title>Lethal osteogenesis imperfecta resulting from a single nucleotide change in one human pro alpha 1(I) collagen allele.</title>
        <authorList>
            <person name="Cohn D.H."/>
            <person name="Byers P.H."/>
            <person name="Steinmann B."/>
            <person name="Gelinas R.E."/>
        </authorList>
    </citation>
    <scope>VARIANT OI2 CYS-1166</scope>
</reference>
<reference key="39">
    <citation type="journal article" date="1987" name="J. Biol. Chem.">
        <title>Lethal perinatal osteogenesis imperfecta due to the substitution of arginine for glycine at residue 391 of the alpha 1(I) chain of type I collagen.</title>
        <authorList>
            <person name="Bateman J.F."/>
            <person name="Chan D."/>
            <person name="Walkers I.D."/>
            <person name="Rogers J.G."/>
            <person name="Cole W.G."/>
        </authorList>
    </citation>
    <scope>VARIANT OI2 ARG-569</scope>
</reference>
<reference key="40">
    <citation type="journal article" date="1987" name="J. Biol. Chem.">
        <title>A point mutation in a type I procollagen gene converts glycine 748 of the alpha 1 chain to cysteine and destabilizes the triple helix in a lethal variant of osteogenesis imperfecta.</title>
        <authorList>
            <person name="Vogel B.E."/>
            <person name="Minor R.R."/>
            <person name="Freund M."/>
            <person name="Prockop D.J."/>
        </authorList>
    </citation>
    <scope>VARIANT OI2 CYS-926</scope>
</reference>
<reference key="41">
    <citation type="journal article" date="1988" name="J. Biol. Chem.">
        <title>Substitution of arginine for glycine 664 in the collagen alpha 1(I) chain in lethal perinatal osteogenesis imperfecta. Demonstration of the peptide defect by in vitro expression of the mutant cDNA.</title>
        <authorList>
            <person name="Bateman J.F."/>
            <person name="Lamande S.R."/>
            <person name="Dahl H.-H.M."/>
            <person name="Chan D."/>
            <person name="Cole W.G."/>
        </authorList>
    </citation>
    <scope>VARIANT OI2 ARG-842</scope>
</reference>
<reference key="42">
    <citation type="journal article" date="1988" name="Mol. Biol. Med.">
        <title>A cysteine for glycine substitution at position 1017 in an alpha 1(I) chain of type I collagen in a patient with mild dominantly inherited osteogenesis imperfecta.</title>
        <authorList>
            <person name="Labhard M.E."/>
            <person name="Wirtz M.K."/>
            <person name="Pope F.M."/>
            <person name="Nicholls A.C."/>
            <person name="Hollister D.W."/>
        </authorList>
    </citation>
    <scope>VARIANT OI1 CYS-1195</scope>
</reference>
<reference key="43">
    <citation type="journal article" date="1989" name="J. Biol. Chem.">
        <title>RNA sequence analysis of a perinatal lethal osteogenesis imperfecta mutation.</title>
        <authorList>
            <person name="Patterson E."/>
            <person name="Smiley E."/>
            <person name="Bonadio J."/>
        </authorList>
    </citation>
    <scope>VARIANT OI2 VAL-434</scope>
</reference>
<reference key="44">
    <citation type="journal article" date="1989" name="J. Biol. Chem.">
        <title>Osteogenesis imperfecta type IV. Detection of a point mutation in one alpha 1(I) collagen allele (COL1A1) by RNA/RNA hybrid analysis.</title>
        <authorList>
            <person name="Marini J.C."/>
            <person name="Grange D.K."/>
            <person name="Gottesman G.S."/>
            <person name="Lewis M.B."/>
            <person name="Koeplin D.A."/>
        </authorList>
    </citation>
    <scope>VARIANT OI4 SER-1010</scope>
</reference>
<reference key="45">
    <citation type="journal article" date="1989" name="J. Biol. Chem.">
        <title>Characterization of point mutations in the collagen COL1A1 and COL1A2 genes causing lethal perinatal osteogenesis imperfecta.</title>
        <authorList>
            <person name="Lamande S.R."/>
            <person name="Dahl H.-H.M."/>
            <person name="Cole W.G."/>
            <person name="Bateman J.F."/>
        </authorList>
    </citation>
    <scope>VARIANTS OI2 ALA-1106; VAL-1151; ARG-1154 AND VAL-1184</scope>
</reference>
<reference key="46">
    <citation type="journal article" date="1989" name="J. Biol. Chem.">
        <title>Substitution of serine for alpha 1(I)-glycine 844 in a severe variant of osteogenesis imperfecta minimally destabilizes the triple helix of type I procollagen. The effects of glycine substitutions on thermal stability are either position of amino acid specific.</title>
        <authorList>
            <person name="Pack M."/>
            <person name="Constantinou C.D."/>
            <person name="Kalia K."/>
            <person name="Nielsen K.B."/>
            <person name="Prockop D.J."/>
        </authorList>
    </citation>
    <scope>VARIANT OI3 SER-1022</scope>
</reference>
<reference key="47">
    <citation type="journal article" date="1989" name="J. Clin. Invest.">
        <title>A lethal variant of osteogenesis imperfecta has a single base mutation that substitutes cysteine for glycine 904 of the alpha 1(I) chain of type I procollagen. The asymptomatic mother has an unidentified mutation producing an overmodified and unstable type I procollagen.</title>
        <authorList>
            <person name="Constantinou C.D."/>
            <person name="Nielsen K.B."/>
            <person name="Prockop D.J."/>
        </authorList>
    </citation>
    <scope>VARIANT OI2 CYS-1082</scope>
</reference>
<reference key="48">
    <citation type="journal article" date="1989" name="J. Clin. Invest.">
        <title>Osteogenesis imperfecta. The position of substitution for glycine by cysteine in the triple helical domain of the pro alpha 1(I) chains of type I collagen determines the clinical phenotype.</title>
        <authorList>
            <person name="Starman B.J."/>
            <person name="Eyre D.R."/>
            <person name="Charbonneau H."/>
            <person name="Harrylock M."/>
            <person name="Weis M.A."/>
            <person name="Weiss L."/>
            <person name="Graham J.M. Jr."/>
            <person name="Byers P.H."/>
        </authorList>
    </citation>
    <scope>VARIANT OI1 CYS-272</scope>
    <scope>VARIANT OI3 CYS-704</scope>
    <scope>VARIANT OI2 CYS-896</scope>
</reference>
<reference key="49">
    <citation type="journal article" date="1990" name="Am. J. Hum. Genet.">
        <title>Two cysteine substitutions in the type I procollagen genes (COL1A1 and COL1A2) that cause lethal osteogenesis imperfecta. The location of glycine substitutions does not in any simple way predict their effects on protein function or phenotype.</title>
        <authorList>
            <person name="Fertala A."/>
            <person name="Westerhausen A."/>
            <person name="Morris G.M."/>
            <person name="Rooney J.E."/>
            <person name="Prockop D.J."/>
        </authorList>
    </citation>
    <scope>VARIANT OI2 CYS-422</scope>
</reference>
<reference key="50">
    <citation type="journal article" date="1990" name="J. Biol. Chem.">
        <title>Mutations that substitute serine for glycine alpha 1-598 and glycine alpha 1-631 in type I procollagen. The effects on thermal unfolding of the triple helix are position-specific and demonstrate that the protein unfolds through a series of cooperative blocks.</title>
        <authorList>
            <person name="Westerhausen A."/>
            <person name="Kishi J."/>
            <person name="Prockop D.J."/>
        </authorList>
    </citation>
    <scope>VARIANTS OI2 SER-776 AND SER-809</scope>
</reference>
<reference key="51">
    <citation type="journal article" date="1990" name="J. Biol. Chem.">
        <title>Substitution of arginine for glycine at position 847 in the triple-helical domain of the alpha 1 (I) chain of type I collagen produces lethal osteogenesis imperfecta. Molecules that contain one or two abnormal chains differ in stability and secretion.</title>
        <authorList>
            <person name="Wallis G.A."/>
            <person name="Starman B.J."/>
            <person name="Schwartz M.F."/>
            <person name="Byers P.H."/>
        </authorList>
    </citation>
    <scope>VARIANT OI2 ARG-1025</scope>
</reference>
<reference key="52">
    <citation type="journal article" date="1990" name="Matrix">
        <title>Serine for glycine substitutions in the alpha1(I) chain of type I collagen: biological plasticity in the Gly-Pro-Hyp clamp at the carboxyl-terminal end of triple helicalH domain.</title>
        <authorList>
            <person name="Cohn D.H."/>
            <person name="Wallis G.A."/>
            <person name="Zhang X."/>
            <person name="Byers P.H."/>
        </authorList>
    </citation>
    <scope>VARIANTS OI2 SER-1091; SER-1181; SER-1187 AND VAL-1187</scope>
</reference>
<reference key="53">
    <citation type="journal article" date="1991" name="Am. J. Hum. Genet.">
        <title>A single base mutation in type I procollagen (COL1A1) that converts glycine alpha 1-541 to aspartate in a lethal variant of osteogenesis imperfecta: detection of the mutation with a carbodiimide reaction of DNA heteroduplexes and direct sequencing of products of the PCR.</title>
        <authorList>
            <person name="Zhuang J."/>
            <person name="Constantinou C.D."/>
            <person name="Ganguly A."/>
            <person name="Prockop D.J."/>
        </authorList>
    </citation>
    <scope>VARIANT OI2 ASP-719</scope>
</reference>
<reference key="54">
    <citation type="journal article" date="1991" name="Biochem. J.">
        <title>Substitution of cysteine for glycine-alpha 1-691 in the pro alpha 1(I) chain of type I procollagen in a proband with lethal osteogenesis imperfecta destabilizes the triple helix at a site C-terminal to the substitution.</title>
        <authorList>
            <person name="Steinmann B."/>
            <person name="Westerhausen A."/>
            <person name="Constantinou C.D."/>
            <person name="Superti-Furga A."/>
            <person name="Prockop D.J."/>
        </authorList>
    </citation>
    <scope>VARIANT OI2 CYS-869</scope>
</reference>
<reference key="55">
    <citation type="journal article" date="1991" name="Biochemistry">
        <title>A type I collagen with substitution of a cysteine for glycine-748 in the alpha 1(I) chain copolymerizes with normal type I collagen and can generate fractallike structures.</title>
        <authorList>
            <person name="Kadler K.E."/>
            <person name="Torre-Blanco A."/>
            <person name="Adachi E."/>
            <person name="Vogel B.E."/>
            <person name="Hojima Y."/>
            <person name="Prockop D.J."/>
        </authorList>
    </citation>
    <scope>VARIANT OI2 CYS-926</scope>
</reference>
<reference key="56">
    <citation type="journal article" date="1991" name="Hum. Genet.">
        <title>Osteogenesis imperfecta due to recurrent point mutations at CpG dinucleotides in the COL1A1 gene of type I collagen.</title>
        <authorList>
            <person name="Pruchno C.J."/>
            <person name="Cohn D.H."/>
            <person name="Wallis G.A."/>
            <person name="Willing M.C."/>
            <person name="Starman B.J."/>
            <person name="Zhang X."/>
            <person name="Byers P.H."/>
        </authorList>
    </citation>
    <scope>VARIANT OI3 ARG-332</scope>
    <scope>VARIANT OI2 SER-1181</scope>
</reference>
<reference key="57">
    <citation type="journal article" date="1991" name="J. Biol. Chem.">
        <title>A de novo G to T transversion in a pro-alpha 1 (I) collagen gene for a moderate case of osteogenesis imperfecta. Substitution of cysteine for glycine 178 in the triple helical domain.</title>
        <authorList>
            <person name="Valli M."/>
            <person name="Mottes M."/>
            <person name="Tenni R."/>
            <person name="Sangalli A."/>
            <person name="Gomez Lira M."/>
            <person name="Rossi A."/>
            <person name="Antoniazzi F."/>
            <person name="Cetta G."/>
            <person name="Pignatti P.F."/>
        </authorList>
    </citation>
    <scope>VARIANT OI4 CYS-356</scope>
</reference>
<reference key="58">
    <citation type="journal article" date="1991" name="J. Biol. Chem.">
        <title>Substitutions for glycine alpha 1-637 and glycine alpha 2-694 of type I procollagen in lethal osteogenesis imperfecta. The conformational strain on the triple helix introduced by a glycine substitution can be transmitted along the helix.</title>
        <authorList>
            <person name="Tsuneyoshi T."/>
            <person name="Westerhausen A."/>
            <person name="Constantinou C.D."/>
            <person name="Prockop D.J."/>
        </authorList>
    </citation>
    <scope>VARIANT OI2 VAL-815</scope>
</reference>
<reference key="59">
    <citation type="journal article" date="1991" name="J. Biol. Chem.">
        <title>The substitution of arginine for glycine 85 of the alpha 1(I) procollagen chain results in mild osteogenesis imperfecta. The mutation provides direct evidence for three discrete domains of cooperative melting of intact type I collagen.</title>
        <authorList>
            <person name="Deak S.B."/>
            <person name="Scholz P.M."/>
            <person name="Amenta P.S."/>
            <person name="Constantinou C.D."/>
            <person name="Levi-Minzi S.A."/>
            <person name="Gonzalez-Lavin L."/>
            <person name="MacKenzie J.W."/>
        </authorList>
    </citation>
    <scope>VARIANT OI1 ARG-263</scope>
</reference>
<reference key="60">
    <citation type="journal article" date="1991" name="J. Biol. Chem.">
        <title>A 9-base pair deletion in COL1A1 in a lethal variant of osteogenesis imperfecta.</title>
        <authorList>
            <person name="Hawkins J.R."/>
            <person name="Superti-Furga A."/>
            <person name="Steinmann B."/>
            <person name="Dalgleish R."/>
        </authorList>
    </citation>
    <scope>VARIANT OI2 1046-GLY--PRO-1048 DEL</scope>
</reference>
<reference key="61">
    <citation type="journal article" date="1991" name="J. Med. Genet.">
        <title>Substitution of cysteine for glycine at residue 415 of one allele of the alpha 1(I) chain of type I procollagen in type III/IV osteogenesis imperfecta.</title>
        <authorList>
            <person name="Nicholls A.C."/>
            <person name="Oliver J.E."/>
            <person name="Renouf D.V."/>
            <person name="Keston M."/>
            <person name="Pope F.M."/>
        </authorList>
    </citation>
    <scope>VARIANT OI3 CYS-593</scope>
    <scope>VARIANT OI4 CYS-593</scope>
</reference>
<reference key="62">
    <citation type="journal article" date="1991" name="Nucleic Acids Res.">
        <title>G to A polymorphism in exon 45 of the COL1A1 gene.</title>
        <authorList>
            <person name="Sokolov B.P."/>
            <person name="Constantinou C.D."/>
            <person name="Tsuneyoshi T."/>
            <person name="Zhuang J."/>
            <person name="Prockop D.J."/>
        </authorList>
    </citation>
    <scope>VARIANT THR-1075</scope>
</reference>
<reference key="63">
    <citation type="journal article" date="1992" name="Biochem. J.">
        <title>Characterization of three osteogenesis imperfecta collagen alpha 1(I) glycine to serine mutations demonstrating a position-dependent gradient of phenotypic severity.</title>
        <authorList>
            <person name="Bateman J.F."/>
            <person name="Moeller I."/>
            <person name="Hannagan M."/>
            <person name="Chan D."/>
            <person name="Cole W.G."/>
        </authorList>
    </citation>
    <scope>VARIANT OI4 SER-530</scope>
    <scope>VARIANT OI3 SER-593</scope>
    <scope>VARIANT OI2 SER-743</scope>
</reference>
<reference key="64">
    <citation type="journal article" date="1992" name="J. Biol. Chem.">
        <title>Type I procollagens containing substitutions of aspartate, arginine, and cysteine for glycine in the pro alpha 1 (I) chain are cleaved slowly by N-proteinase, but only the cysteine substitution introduces a kink in the molecule.</title>
        <authorList>
            <person name="Lightfoot S.J."/>
            <person name="Holmes D.F."/>
            <person name="Brass A."/>
            <person name="Grant M.E."/>
            <person name="Byers P.H."/>
            <person name="Kadler K.E."/>
        </authorList>
    </citation>
    <scope>VARIANTS OI2 ASP-275; ARG-728; CYS-896 AND ASP-1061</scope>
    <scope>CHARACTERIZATION OF VARIANTS OI2 ASP-275; ARG-728; CYS-896 AND ASP-1061</scope>
</reference>
<reference key="65">
    <citation type="journal article" date="1992" name="Hum. Genet.">
        <title>Mild dominant osteogenesis imperfecta with intrafamilial variability: the cause is a serine for glycine alpha 1(I) 901 substitution in a type-I collagen gene.</title>
        <authorList>
            <person name="Mottes M."/>
            <person name="Sangalli A."/>
            <person name="Valli M."/>
            <person name="Gomez Lira M."/>
            <person name="Tenni R."/>
            <person name="Buttitta P."/>
            <person name="Pignatti P.F."/>
            <person name="Cetta G."/>
        </authorList>
    </citation>
    <scope>VARIANT OI1 SER-1079</scope>
</reference>
<reference key="66">
    <citation type="journal article" date="1992" name="Hum. Genet.">
        <title>A dominant mutation in the COL1A1 gene that substitutes glycine for valine causes recurrent lethal osteogenesis imperfecta.</title>
        <authorList>
            <person name="Bonaventure J."/>
            <person name="Cohen-Solal L."/>
            <person name="Lasselin C."/>
            <person name="Maroteaux P."/>
        </authorList>
    </citation>
    <scope>VARIANT OI2 VAL-980</scope>
</reference>
<reference key="67">
    <citation type="journal article" date="1992" name="J. Biol. Chem.">
        <title>A tripeptide deletion in the triple-helical domain of the pro alpha 1(I) chain of type I procollagen in a patient with lethal osteogenesis imperfecta does not alter cleavage of the molecule by N-proteinase.</title>
        <authorList>
            <person name="Wallis G.A."/>
            <person name="Kadler K.E."/>
            <person name="Starman B.J."/>
            <person name="Byers P.H."/>
        </authorList>
    </citation>
    <scope>VARIANT OI2 1046-GLY--PRO-1048 DEL</scope>
</reference>
<reference key="68">
    <citation type="journal article" date="1992" name="J. Clin. Invest.">
        <title>An osteopenic nonfracture syndrome with features of mild osteogenesis imperfecta associated with the substitution of a cysteine for glycine at triple helix position 43 in the pro alpha 1(I) chain of type I collagen.</title>
        <authorList>
            <person name="Shapiro J.R."/>
            <person name="Stover M.L."/>
            <person name="Burn V.E."/>
            <person name="McKinstry M.B."/>
            <person name="Burshell A.L."/>
            <person name="Chipman S.D."/>
            <person name="Rowe D.W."/>
        </authorList>
    </citation>
    <scope>VARIANT OI1 CYS-221</scope>
</reference>
<reference key="69">
    <citation type="journal article" date="1992" name="J. Med. Genet.">
        <title>The clinicopathological features of three babies with osteogenesis imperfecta resulting from the substitution of glycine by valine in the pro alpha 1 (I) chain of type I procollagen.</title>
        <authorList>
            <person name="Cole W.G."/>
            <person name="Patterson E."/>
            <person name="Bonadio J."/>
            <person name="Campbell P.E."/>
            <person name="Fortune D.W."/>
        </authorList>
    </citation>
    <scope>VARIANTS OI2 VAL-434; VAL-1151 AND VAL-1184</scope>
</reference>
<reference key="70">
    <citation type="journal article" date="1993" name="Am. J. Med. Genet.">
        <title>Chemical cleavage method for the detection of RNA base changes: experience in the application to collagen mutations in osteogenesis imperfecta.</title>
        <authorList>
            <person name="Bateman J.F."/>
            <person name="Lamande S.R."/>
            <person name="Hannagan M."/>
            <person name="Moeller I."/>
            <person name="Dahl H.-H.M."/>
            <person name="Cole W.G."/>
        </authorList>
    </citation>
    <scope>VARIANT OI2 CYS-1312</scope>
</reference>
<reference key="71">
    <citation type="journal article" date="1993" name="Am. J. Med. Genet.">
        <title>Moderately severe osteogenesis imperfecta associated with substitutions of serine for glycine in the alpha 1(I) chain of type I collagen.</title>
        <authorList>
            <person name="Marini J.C."/>
            <person name="Lewis M.B."/>
            <person name="Chen K.J."/>
        </authorList>
    </citation>
    <scope>VARIANT OI3 SER-530</scope>
</reference>
<reference key="72">
    <citation type="journal article" date="1993" name="Connect. Tissue Res.">
        <title>A cysteine for glycine substitution at position 175 in an alpha 1 (I) chain of type I collagen produces a clinically heterogeneous form of osteogenesis imperfecta.</title>
        <authorList>
            <person name="Wirtz M.K."/>
            <person name="Rao V.H."/>
            <person name="Glanville R.W."/>
            <person name="Labhard M.E."/>
            <person name="Pretorius P.J."/>
            <person name="de Vries W.N."/>
            <person name="de Wet W."/>
            <person name="Hollister D.W."/>
        </authorList>
    </citation>
    <scope>VARIANT OI4 CYS-353</scope>
</reference>
<reference key="73">
    <citation type="journal article" date="1993" name="Eur. J. Biochem.">
        <title>Osteogenesis imperfecta and type-I collagen mutations. A lethal variant caused by a Gly910--&gt;Ala substitution in the alpha 1 (I) chain.</title>
        <authorList>
            <person name="Valli M."/>
            <person name="Sangalli A."/>
            <person name="Rossi A."/>
            <person name="Mottes M."/>
            <person name="Forlino A."/>
            <person name="Tenni R."/>
            <person name="Pignatti P.F."/>
            <person name="Cetta G."/>
        </authorList>
    </citation>
    <scope>VARIANT OI2 ALA-1088</scope>
</reference>
<reference key="74">
    <citation type="journal article" date="1993" name="Eur. J. Biochem.">
        <title>Gly85 to Val substitution in pro alpha 1(I) chain causes mild osteogenesis imperfecta and introduces a susceptibility to protease digestion.</title>
        <authorList>
            <person name="Valli M."/>
            <person name="Zolezzi F."/>
            <person name="Mottes M."/>
            <person name="Antoniazzi F."/>
            <person name="Stanzial F."/>
            <person name="Tenni R."/>
            <person name="Pignatti P.F."/>
            <person name="Cetta G."/>
        </authorList>
    </citation>
    <scope>VARIANT OI1 VAL-263</scope>
</reference>
<reference key="75">
    <citation type="journal article" date="1993" name="Hum. Genet.">
        <title>SSCP detection of a Gly565Val substitution in the pro alpha 1(I) collagen chain resulting in osteogenesis imperfecta type II.</title>
        <authorList>
            <person name="Mackay K."/>
            <person name="Lund A.M."/>
            <person name="Raghunath M."/>
            <person name="Steinmann B."/>
            <person name="Dalgleish R."/>
        </authorList>
    </citation>
    <scope>VARIANT OI2 VAL-743</scope>
</reference>
<reference key="76">
    <citation type="journal article" date="1993" name="Hum. Mol. Genet.">
        <title>An RT-PCR-SSCP screening strategy for detection of mutations in the gene encoding the alpha 1 chain of type I collagen: application to four patients with osteogenesis imperfecta.</title>
        <authorList>
            <person name="Mackay K."/>
            <person name="Byers P.H."/>
            <person name="Dalgleish R."/>
        </authorList>
    </citation>
    <scope>VARIANTS OI2 SER-425 AND SER-530</scope>
    <scope>VARIANT OI4 SER-560</scope>
    <scope>VARIANT OI3 SER-719</scope>
    <scope>VARIANT ALA-823</scope>
</reference>
<reference key="77">
    <citation type="journal article" date="1993" name="Hum. Mutat.">
        <title>Paternal mosaicism for a COL1A1 dominant mutation (alpha 1 Ser-415) causes recurrent osteogenesis imperfecta.</title>
        <authorList>
            <person name="Mottes M."/>
            <person name="Gomez Lira M."/>
            <person name="Valli M."/>
            <person name="Scarano G."/>
            <person name="Lonardo F."/>
            <person name="Forlino A."/>
            <person name="Cetta G."/>
            <person name="Pignatti P.F."/>
        </authorList>
    </citation>
    <scope>VARIANT OI2 SER-593</scope>
    <scope>VARIANT OI3 SER-593</scope>
</reference>
<reference key="78">
    <citation type="journal article" date="1993" name="J. Biol. Chem.">
        <title>Serine for glycine substitutions in type I collagen in two cases of type IV osteogenesis imperfecta (OI). Additional evidence for a regional model of OI pathophysiology.</title>
        <authorList>
            <person name="Marini J.C."/>
            <person name="Lewis M.B."/>
            <person name="Wang Q."/>
            <person name="Chen K.J."/>
            <person name="Orrison B.M."/>
        </authorList>
    </citation>
    <scope>VARIANT OI4 SER-530</scope>
</reference>
<reference key="79">
    <citation type="journal article" date="1993" name="J. Biol. Chem.">
        <title>BiP binds type I procollagen pro alpha chains with mutations in the carboxyl-terminal propeptide synthesized by cells from patients with osteogenesis imperfecta.</title>
        <authorList>
            <person name="Chessler S.D."/>
            <person name="Byers P.H."/>
        </authorList>
    </citation>
    <scope>VARIANTS OI2</scope>
</reference>
<reference key="80">
    <citation type="journal article" date="1994" name="Bone">
        <title>Osteogenesis imperfecta: comparison of molecular defects with bone histological changes.</title>
        <authorList>
            <person name="Sztrolovics R."/>
            <person name="Glorieux F.H."/>
            <person name="Travers R."/>
            <person name="van der Rest M."/>
            <person name="Roughley P.J."/>
        </authorList>
    </citation>
    <scope>VARIANT OI2 ARG-389</scope>
</reference>
<reference key="81">
    <citation type="journal article" date="1994" name="Hum. Mutat.">
        <title>Substitution of glycine-172 by arginine in the alpha 1 chain of type I collagen in a patient with osteogenesis imperfecta, type III.</title>
        <authorList>
            <person name="Mackay K."/>
            <person name="de Paepe A."/>
            <person name="Nuytinck L."/>
            <person name="Dalgleish R."/>
        </authorList>
    </citation>
    <scope>VARIANT OI3 ARG-350</scope>
</reference>
<reference key="82">
    <citation type="journal article" date="1994" name="J. Biochem.">
        <title>Substitution of cysteine for glycine-946 in the alpha 1(I) chain of type I procollagen causes lethal osteogenesis imperfecta.</title>
        <authorList>
            <person name="Kurosaka D."/>
            <person name="Hattori S."/>
            <person name="Hori H."/>
            <person name="Yamaguchi N."/>
            <person name="Hasegawa T."/>
            <person name="Akimoto H."/>
            <person name="Nagai Y."/>
        </authorList>
    </citation>
    <scope>VARIANT OI2 CYS-1124</scope>
</reference>
<reference key="83">
    <citation type="journal article" date="1994" name="J. Biol. Chem.">
        <title>Substitution of serine for glycine 883 in the triple helix of the pro alpha 1 (I) chain of type I procollagen produces osteogenesis imperfecta type IV and introduces a structural change in the triple helix that does not alter cleavage of the molecule by procollagen N-proteinase.</title>
        <authorList>
            <person name="Lightfoot S.J."/>
            <person name="Atkinson M.S."/>
            <person name="Murphy G."/>
            <person name="Byers P.H."/>
            <person name="Kadler K.E."/>
        </authorList>
    </citation>
    <scope>VARIANT OI4 SER-1061</scope>
</reference>
<reference key="84">
    <citation type="journal article" date="1994" name="Pediatr. Res.">
        <title>Prenatal diagnosis of collagen disorders by direct biochemical analysis of chorionic villus biopsies.</title>
        <authorList>
            <person name="Raghunath M."/>
            <person name="Steinmann B."/>
            <person name="Delozier-Blanchet C."/>
            <person name="Extermann P."/>
            <person name="Superti-Furga A."/>
        </authorList>
    </citation>
    <scope>VARIANT OI2 ASP-533</scope>
</reference>
<reference key="85">
    <citation type="journal article" date="1995" name="Biochem. J.">
        <title>Substitutions of aspartic acid for glycine-220 and of arginine for glycine-664 in the triple helix of the pro alpha 1(I) chain of type I procollagen produce lethal osteogenesis imperfecta and disrupt the ability of collagen fibrils to incorporate crystalline hydroxyapatite.</title>
        <authorList>
            <person name="Culbert A.A."/>
            <person name="Lowe M.P."/>
            <person name="Atkinson M."/>
            <person name="Byers P.H."/>
            <person name="Wallis G.A."/>
            <person name="Kadler K.E."/>
        </authorList>
    </citation>
    <scope>VARIANTS OI2 ASP-398 AND ARG-842</scope>
</reference>
<reference key="86">
    <citation type="journal article" date="1996" name="Am. J. Med. Genet.">
        <title>Substitution of arginine for glycine at position 154 of the alpha 1 chain of type I collagen in a variant of osteogenesis imperfecta: comparison to previous cases with the same mutation.</title>
        <authorList>
            <person name="Zhuang J."/>
            <person name="Tromp G."/>
            <person name="Kuivaniemi H."/>
            <person name="Castells S."/>
            <person name="Prockop D.J."/>
        </authorList>
    </citation>
    <scope>VARIANT OI3 ARG-332</scope>
</reference>
<reference key="87">
    <citation type="journal article" date="1996" name="Hum. Genet.">
        <title>Substitution of glycine-661 by serine in the alpha1(I) and alpha2(I) chains of type I collagen results in different clinical and biochemical phenotypes.</title>
        <authorList>
            <person name="Nuytinck L."/>
            <person name="Dalgleish R."/>
            <person name="Spotila L."/>
            <person name="Renard J.-P."/>
            <person name="van Regemorter N."/>
            <person name="de Paepe A."/>
        </authorList>
    </citation>
    <scope>VARIANT OI2 SER-839</scope>
</reference>
<reference key="88">
    <citation type="journal article" date="1996" name="Hum. Mutat.">
        <title>Mutation in the carboxy-terminal propeptide of the Pro alpha 1(I) chain of type I collagen in a child with severe osteogenesis imperfecta (OI type III): possible implications for protein folding.</title>
        <authorList>
            <person name="Oliver J.E."/>
            <person name="Thompson E.M."/>
            <person name="Pope F.M."/>
            <person name="Nicholls A.C."/>
        </authorList>
    </citation>
    <scope>VARIANT OI3 PRO-1464</scope>
</reference>
<reference key="89">
    <citation type="journal article" date="1996" name="Mol. Cell. Probes">
        <title>Intrafamilial variable expressivity of osteogenesis imperfecta due to mosaicism for a lethal G382R substitution in the COL1A1 gene.</title>
        <authorList>
            <person name="Cohen-Solal L."/>
            <person name="Zolezzi F."/>
            <person name="Pignatti P.F."/>
            <person name="Mottes M."/>
        </authorList>
    </citation>
    <scope>VARIANT OI2 ARG-560</scope>
</reference>
<reference key="90">
    <citation type="journal article" date="1996" name="Nat. Genet.">
        <title>Reduced bone density and osteoporosis associated with a polymorphic Sp1 binding site in the collagen type I alpha 1 gene.</title>
        <authorList>
            <person name="Grant S.F.A."/>
            <person name="Reid D.M."/>
            <person name="Blake G."/>
            <person name="Herd R."/>
            <person name="Fogelman I."/>
            <person name="Ralston S.H."/>
        </authorList>
    </citation>
    <scope>INVOLVEMENT IN OSTEOPOROSIS</scope>
</reference>
<reference key="91">
    <citation type="journal article" date="1997" name="Hum. Mutat.">
        <title>Serine for glycine substitutions in the C-terminal third of the alpha 1(I) chain of collagen I in five patients with nonlethal osteogenesis imperfecta.</title>
        <authorList>
            <person name="Lund A.M."/>
            <person name="Skovby F."/>
            <person name="Schwartz M."/>
        </authorList>
    </citation>
    <scope>VARIANTS OI3 SER-821; SER-1040; SER-1049; SER-1058 AND SER-1076</scope>
</reference>
<reference key="92">
    <citation type="journal article" date="1997" name="Hum. Mutat.">
        <title>(G586V) substitutions in the alpha 1 and alpha 2 chains of collagen I: effect of alpha-chain stoichiometry on the phenotype of osteogenesis imperfecta?</title>
        <authorList>
            <person name="Lund A.M."/>
            <person name="Skovby F."/>
            <person name="Schwartz M."/>
        </authorList>
    </citation>
    <scope>VARIANT OI2 VAL-764</scope>
</reference>
<reference key="93">
    <citation type="journal article" date="1998" name="Hum. Mutat.">
        <title>Three novel type I collagen mutations in osteogenesis imperfecta type IV probands are associated with discrepancies between electrophoretic migration of osteoblast and fibroblast collagen.</title>
        <authorList>
            <person name="Sarafova A.P."/>
            <person name="Choi H."/>
            <person name="Forlino A."/>
            <person name="Gajko A."/>
            <person name="Cabral W.A."/>
            <person name="Tosi L."/>
            <person name="Reing C.M."/>
            <person name="Marini J.C."/>
        </authorList>
    </citation>
    <scope>VARIANTS OI4 ALA-398; CYS-527 AND CYS-701</scope>
</reference>
<reference key="94">
    <citation type="journal article" date="1998" name="Hum. Mutat.">
        <title>Four new cases of lethal osteogenesis imperfecta due to glycine substitutions in COL1A1 and genes.</title>
        <authorList>
            <person name="Mottes M."/>
            <person name="Gomez Lira M."/>
            <person name="Zolezzi F."/>
            <person name="Valli M."/>
            <person name="Lisi V."/>
            <person name="Freising P."/>
        </authorList>
    </citation>
    <scope>VARIANTS OI2 SER-656 AND ASP-1172</scope>
</reference>
<reference key="95">
    <citation type="journal article" date="1998" name="N. Engl. J. Med.">
        <title>Relation of alleles of the collagen type Ialpha1 gene to bone density and the risk of osteoporotic fractures in postmenopausal women.</title>
        <authorList>
            <person name="Uitterlinden A.G."/>
            <person name="Burger H."/>
            <person name="Huang Q."/>
            <person name="Yue F."/>
            <person name="McGuigan F.E.A."/>
            <person name="Grant S.F.A."/>
            <person name="Hofman A."/>
            <person name="van Leeuwen J.P.T.M."/>
            <person name="Pols H.A.P."/>
            <person name="Ralston S.H."/>
        </authorList>
    </citation>
    <scope>INVOLVEMENT IN INVOLUTIONAL OSTEOPOROSIS</scope>
</reference>
<reference key="96">
    <citation type="journal article" date="1999" name="Hum. Mutat.">
        <title>Osteogenesis imperfecta: mosaicism and refinement of the genotype-phenotype map in OI type III.</title>
        <authorList>
            <person name="Lund A.M."/>
            <person name="Astroem E."/>
            <person name="Soederhaell S."/>
            <person name="Schwartz M."/>
            <person name="Skovby F."/>
        </authorList>
    </citation>
    <scope>VARIANT OI3 SER-866</scope>
</reference>
<reference key="97">
    <citation type="journal article" date="2000" name="Am. J. Hum. Genet.">
        <title>Classical Ehlers-Danlos syndrome caused by a mutation in type I collagen.</title>
        <authorList>
            <person name="Nuytinck L."/>
            <person name="Freund M."/>
            <person name="Lagae L."/>
            <person name="Pierard G.E."/>
            <person name="Hermanns-Le T."/>
            <person name="De Paepe A."/>
        </authorList>
    </citation>
    <scope>VARIANT EDSCL1 CYS-312</scope>
</reference>
<reference key="98">
    <citation type="journal article" date="1997" name="Nat. Genet.">
        <title>Deregulation of the platelet-derived growth factor B-chain gene via fusion with collagen gene COL1A1 in dermatofibrosarcoma protuberans and giant-cell fibroblastoma.</title>
        <authorList>
            <person name="Simon M.-P."/>
            <person name="Pedeutour F."/>
            <person name="Sirvent N."/>
            <person name="Grosgeorge J."/>
            <person name="Minoletti F."/>
            <person name="Coindre J.-M."/>
            <person name="Terrier-Lacombe M.-J."/>
            <person name="Mandahl N."/>
            <person name="Craver R.D."/>
            <person name="Blin N."/>
            <person name="Sozzi G."/>
            <person name="Turc-Carel C."/>
            <person name="O'Brien K.P."/>
            <person name="Kedra D."/>
            <person name="Fransson I."/>
            <person name="Guilbaud C."/>
            <person name="Dumanski J.P."/>
        </authorList>
    </citation>
    <scope>DISEASE</scope>
    <scope>CHROMOSOMAL TRANSLOCATION WITH PDGFB</scope>
</reference>
<reference key="99">
    <citation type="journal article" date="2003" name="Cancer Genet. Cytogenet.">
        <title>Dermatofibrosarcoma protuberans of breast.</title>
        <authorList>
            <person name="Sandberg A.A."/>
            <person name="Anderson W.D."/>
            <person name="Fredenberg C."/>
            <person name="Hashimoto H."/>
        </authorList>
    </citation>
    <scope>DISEASE</scope>
    <scope>CHROMOSOMAL TRANSLOCATION WITH PDGFB</scope>
</reference>
<reference key="100">
    <citation type="journal article" date="2005" name="J. Biol. Chem.">
        <title>Mutations near amino end of alpha1(I) collagen cause combined osteogenesis imperfecta/Ehlers-Danlos syndrome by interference with N-propeptide processing.</title>
        <authorList>
            <person name="Cabral W.A."/>
            <person name="Makareeva E."/>
            <person name="Colige A."/>
            <person name="Letocha A.D."/>
            <person name="Ty J.M."/>
            <person name="Yeowell H.N."/>
            <person name="Pals G."/>
            <person name="Leikin S."/>
            <person name="Marini J.C."/>
        </authorList>
    </citation>
    <scope>INVOLVEMENT IN OIEDS1</scope>
    <scope>VARIANTS OIEDS1 ASP-191; VAL-203; ARG-212; GLU-254 AND GLU-266</scope>
    <scope>CHARACTERIZATION OF VARIANTS OIEDS1 ASP-191; VAL-203; ARG-212; GLU-254 AND GLU-266</scope>
</reference>
<reference key="101">
    <citation type="journal article" date="2005" name="J. Clin. Invest.">
        <title>A novel COL1A1 mutation in infantile cortical hyperostosis (Caffey disease) expands the spectrum of collagen-related disorders.</title>
        <authorList>
            <person name="Gensure R.C."/>
            <person name="Maekitie O."/>
            <person name="Barclay C."/>
            <person name="Chan C."/>
            <person name="Depalma S.R."/>
            <person name="Bastepe M."/>
            <person name="Abuzahra H."/>
            <person name="Couper R."/>
            <person name="Mundlos S."/>
            <person name="Sillence D."/>
            <person name="Ala-Kokko L."/>
            <person name="Seidman J.G."/>
            <person name="Cole W.G."/>
            <person name="Jueppner H."/>
        </authorList>
    </citation>
    <scope>VARIANT CAFYD CYS-1014</scope>
</reference>
<reference key="102">
    <citation type="journal article" date="2006" name="Clin. Genet.">
        <title>Osteogenesis imperfecta: clinical, biochemical and molecular findings.</title>
        <authorList>
            <person name="Venturi G."/>
            <person name="Tedeschi E."/>
            <person name="Mottes M."/>
            <person name="Valli M."/>
            <person name="Camilot M."/>
            <person name="Viglio S."/>
            <person name="Antoniazzi F."/>
            <person name="Tato L."/>
        </authorList>
    </citation>
    <scope>VARIANTS OI3 VAL-203 AND SER-821</scope>
    <scope>VARIANTS OI4 ARG-257 AND SER-683</scope>
</reference>
<reference key="103">
    <citation type="journal article" date="2006" name="Hum. Mutat.">
        <title>Mutational spectrum of type I collagen genes in Korean patients with osteogenesis imperfecta.</title>
        <authorList>
            <person name="Lee K.S."/>
            <person name="Song H.R."/>
            <person name="Cho T.J."/>
            <person name="Kim H.J."/>
            <person name="Lee T.M."/>
            <person name="Jin H.S."/>
            <person name="Park H.Y."/>
            <person name="Kang S."/>
            <person name="Jung S.C."/>
            <person name="Koo S.K."/>
        </authorList>
    </citation>
    <scope>VARIANTS OI1/OI3/OI4 ARG-194; ASP-242; ARG-257; SER-722; SER-767; SER-821 AND SER-1058</scope>
</reference>
<reference key="104">
    <citation type="journal article" date="2006" name="Hum. Mutat.">
        <title>Mutation analysis of COL1A1 and COL1A2 in patients diagnosed with osteogenesis imperfecta type I-IV.</title>
        <authorList>
            <person name="Pollitt R."/>
            <person name="McMahon R."/>
            <person name="Nunn J."/>
            <person name="Bamford R."/>
            <person name="Afifi A."/>
            <person name="Bishop N."/>
            <person name="Dalton A."/>
        </authorList>
    </citation>
    <scope>VARIANTS OI2 ARG-22; ARG-581; VAL-734 AND ASN-1413</scope>
    <scope>VARIANTS OI4 ARG-197 AND CYS-338</scope>
    <scope>VARIANTS OI1 VAL-320; ARG-555; SER-647 AND GLU-1219</scope>
    <scope>VARIANTS ALA-205; LYS-288; SER-906 AND HIS-1356</scope>
</reference>
<reference key="105">
    <citation type="journal article" date="2006" name="Prenat. Diagn.">
        <title>Prenatal diagnosis of type II osteogenesis imperfecta, describing a new mutation in the COL1A1 gene.</title>
        <authorList>
            <person name="Aerts M."/>
            <person name="Van Holsbeke C."/>
            <person name="de Ravel T."/>
            <person name="Devlieger R."/>
        </authorList>
    </citation>
    <scope>VARIANT OI2 ASP-833</scope>
</reference>
<reference key="106">
    <citation type="journal article" date="2006" name="Zhonghua Yi Xue Za Zhi">
        <title>A new mutation in COL1A1 gene in a family with osteogenesis imperfecta.</title>
        <authorList>
            <person name="Wang Z."/>
            <person name="Xu D.L."/>
            <person name="Chen Z."/>
            <person name="Hu J.Y."/>
            <person name="Yang Z."/>
            <person name="Wang L.T."/>
        </authorList>
    </citation>
    <scope>VARIANT OI1 ASP-1157</scope>
</reference>
<reference key="107">
    <citation type="journal article" date="2007" name="Hum. Mutat.">
        <title>Consortium for osteogenesis imperfecta mutations in the helical domain of type I collagen: regions rich in lethal mutations align with collagen binding sites for integrins and proteoglycans.</title>
        <authorList>
            <person name="Marini J.C."/>
            <person name="Forlino A."/>
            <person name="Cabral W.A."/>
            <person name="Barnes A.M."/>
            <person name="San Antonio J.D."/>
            <person name="Milgrom S."/>
            <person name="Hyland J.C."/>
            <person name="Koerkkoe J."/>
            <person name="Prockop D.J."/>
            <person name="De Paepe A."/>
            <person name="Coucke P."/>
            <person name="Symoens S."/>
            <person name="Glorieux F.H."/>
            <person name="Roughley P.J."/>
            <person name="Lund A.M."/>
            <person name="Kuurila-Svahn K."/>
            <person name="Hartikka H."/>
            <person name="Cohn D.H."/>
            <person name="Krakow D."/>
            <person name="Mottes M."/>
            <person name="Schwarze U."/>
            <person name="Chen D."/>
            <person name="Yang K."/>
            <person name="Kuslich C."/>
            <person name="Troendle J."/>
            <person name="Dalgleish R."/>
            <person name="Byers P.H."/>
        </authorList>
    </citation>
    <scope>VARIANTS OI2 CYS-383; ASP-737 AND SER-1142</scope>
    <scope>VARIANT OI1 CYS-224</scope>
    <scope>VARIANT OI3 CYS-383</scope>
</reference>
<reference key="108">
    <citation type="journal article" date="2007" name="Hum. Mutat.">
        <title>Three arginine to cysteine substitutions in the pro-alpha (I)-collagen chain cause Ehlers-Danlos syndrome with a propensity to arterial rupture in early adulthood.</title>
        <authorList>
            <person name="Malfait F."/>
            <person name="Symoens S."/>
            <person name="De Backer J."/>
            <person name="Hermanns-Le T."/>
            <person name="Sakalihasan N."/>
            <person name="Lapiere C.M."/>
            <person name="Coucke P."/>
            <person name="De Paepe A."/>
        </authorList>
    </citation>
    <scope>VARIANT EDSCL1 CYS-312</scope>
    <scope>VARIANTS CYS-574 AND CYS-1093</scope>
</reference>
<reference key="109">
    <citation type="journal article" date="2007" name="Hum. Mutat.">
        <title>Y-position cysteine substitution in type I collagen (alpha1(I) R888C/p.R1066C) is associated with osteogenesis imperfecta/Ehlers-Danlos syndrome phenotype.</title>
        <authorList>
            <person name="Cabral W.A."/>
            <person name="Makareeva E."/>
            <person name="Letocha A.D."/>
            <person name="Scribanu N."/>
            <person name="Fertala A."/>
            <person name="Steplewski A."/>
            <person name="Keene D.R."/>
            <person name="Persikov A.V."/>
            <person name="Leikin S."/>
            <person name="Marini J.C."/>
        </authorList>
    </citation>
    <scope>VARIANT OIEDS1 CYS-1066</scope>
    <scope>INVOLVEMENT IN OIEDS1</scope>
</reference>
<reference key="110">
    <citation type="journal article" date="2007" name="Pediatr. Int.">
        <title>Mutations in type I collagen genes in Japanese osteogenesis imperfecta patients.</title>
        <authorList>
            <person name="Kataoka K."/>
            <person name="Ogura E."/>
            <person name="Hasegawa K."/>
            <person name="Inoue M."/>
            <person name="Seino Y."/>
            <person name="Morishima T."/>
            <person name="Tanaka H."/>
        </authorList>
    </citation>
    <scope>VARIANTS OI1 GLU-266 AND SER-287</scope>
    <scope>VARIANT OI4 SER-353</scope>
</reference>
<reference key="111">
    <citation type="journal article" date="2008" name="Genomics">
        <title>Natural variation in four human collagen genes across an ethnically diverse population.</title>
        <authorList>
            <person name="Chan T.F."/>
            <person name="Poon A."/>
            <person name="Basu A."/>
            <person name="Addleman N.R."/>
            <person name="Chen J."/>
            <person name="Phong A."/>
            <person name="Byers P.H."/>
            <person name="Klein T.E."/>
            <person name="Kwok P.Y."/>
        </authorList>
    </citation>
    <scope>VARIANTS GLN-1141 AND ILE-1177</scope>
</reference>
<reference key="112">
    <citation type="journal article" date="2008" name="J. Appl. Genet.">
        <title>Two novel COL1A1 mutations in patients with osteogenesis imperfecta (OI) affect the stability of the collagen type I triple-helix.</title>
        <authorList>
            <person name="Witecka J."/>
            <person name="Augusciak-Duma A.M."/>
            <person name="Kruczek A."/>
            <person name="Szydlo A."/>
            <person name="Lesiak M."/>
            <person name="Krzak M."/>
            <person name="Pietrzyk J.J."/>
            <person name="Mannikko M."/>
            <person name="Sieron A.L."/>
        </authorList>
    </citation>
    <scope>VARIANTS OI1 VAL-200 AND PHE-349</scope>
    <scope>VARIANT OI2 SER-866</scope>
    <scope>VARIANT OI3 SER-1040</scope>
</reference>
<reference key="113">
    <citation type="journal article" date="2009" name="Hum. Mol. Genet.">
        <title>Mutation and polymorphism spectrum in osteogenesis imperfecta type II: implications for genotype-phenotype relationships.</title>
        <authorList>
            <person name="Bodian D.L."/>
            <person name="Chan T.F."/>
            <person name="Poon A."/>
            <person name="Schwarze U."/>
            <person name="Yang K."/>
            <person name="Byers P.H."/>
            <person name="Kwok P.Y."/>
            <person name="Klein T.E."/>
        </authorList>
    </citation>
    <scope>VARIANTS OI2 THR-146; VAL-288; ASP-353; VAL-368; THR-390; SER-425; ASP-455; VAL-470; VAL-509; ALA-548; ARG-602; ASP-605; ARG-614; ARG-740; SER-809; ARG-824; ARG-845; ARG-848; HIS-855; SER-866; SER-875; SER-884; ASP-896; CYS-947; ASP-977; CYS-1001; VAL-1022; ALA-PRO-GLY-1052 INS; ASP-1055; SER-1094; ASP-1100 AND ASN-1413</scope>
</reference>
<reference key="114">
    <citation type="journal article" date="2011" name="Genet. Med.">
        <title>Recurrence of perinatal lethal osteogenesis imperfecta in sibships: parsing the risk between parental mosaicism for dominant mutations and autosomal recessive inheritance.</title>
        <authorList>
            <person name="Pyott S.M."/>
            <person name="Pepin M.G."/>
            <person name="Schwarze U."/>
            <person name="Yang K."/>
            <person name="Smith G."/>
            <person name="Byers P.H."/>
        </authorList>
    </citation>
    <scope>VARIANTS OI2 ARG-476 AND ASP-851</scope>
</reference>
<reference key="115">
    <citation type="journal article" date="2011" name="Hum. Mutat.">
        <title>COL1 C-propeptide cleavage site mutations cause high bone mass osteogenesis imperfecta.</title>
        <authorList>
            <person name="Lindahl K."/>
            <person name="Barnes A.M."/>
            <person name="Fratzl-Zelman N."/>
            <person name="Whyte M.P."/>
            <person name="Hefferan T.E."/>
            <person name="Makareeva E."/>
            <person name="Brusel M."/>
            <person name="Yaszemski M.J."/>
            <person name="Rubin C.J."/>
            <person name="Kindmark A."/>
            <person name="Roschger P."/>
            <person name="Klaushofer K."/>
            <person name="McAlister W.H."/>
            <person name="Mumm S."/>
            <person name="Leikin S."/>
            <person name="Kessler E."/>
            <person name="Boskey A.L."/>
            <person name="Ljunggren O."/>
            <person name="Marini J.C."/>
        </authorList>
    </citation>
    <scope>VARIANT ASN-1219</scope>
    <scope>CHARACTERIZATION OF VARIANT ASN-1219</scope>
</reference>
<reference key="116">
    <citation type="journal article" date="2013" name="Orphanet J. Rare Dis.">
        <title>Helical mutations in type I collagen that affect the processing of the amino-propeptide result in an Osteogenesis Imperfecta/Ehlers-Danlos Syndrome overlap syndrome.</title>
        <authorList>
            <person name="Malfait F."/>
            <person name="Symoens S."/>
            <person name="Goemans N."/>
            <person name="Gyftodimou Y."/>
            <person name="Holmberg E."/>
            <person name="Lopez-Gonzalez V."/>
            <person name="Mortier G."/>
            <person name="Nampoothiri S."/>
            <person name="Petersen M.B."/>
            <person name="De Paepe A."/>
        </authorList>
    </citation>
    <scope>VARIANTS OIEDS1 ASP-188 AND CYS-203</scope>
    <scope>INVOLVEMENT IN OIEDS1</scope>
    <scope>CHARACTERIZATION OF VARIANT OIEDS1 ASP-188</scope>
</reference>
<reference key="117">
    <citation type="journal article" date="2014" name="Calcif. Tissue Int.">
        <title>Targeted sequencing of a pediatric metabolic bone gene panel using a desktop semiconductor next-generation sequencer.</title>
        <authorList>
            <person name="Rauch F."/>
            <person name="Lalic L."/>
            <person name="Glorieux F.H."/>
            <person name="Moffatt P."/>
            <person name="Roughley P."/>
        </authorList>
    </citation>
    <scope>VARIANT OI3 SER-1151</scope>
</reference>
<reference key="118">
    <citation type="journal article" date="2014" name="Mol. Med. Report.">
        <title>A novel mild variant of osteogenesis imperfecta type I caused by a Gly1088Glu mutation in COL1A1.</title>
        <authorList>
            <person name="Xia X.Y."/>
            <person name="Li W.W."/>
            <person name="Li N."/>
            <person name="Wu Q.Y."/>
            <person name="Cui Y.X."/>
            <person name="Li X.J."/>
        </authorList>
    </citation>
    <scope>VARIANT OI1 GLU-1088</scope>
</reference>
<reference key="119">
    <citation type="journal article" date="2015" name="Hum. Genomics">
        <title>Whole-exome sequencing identifies de novo mutation in the COL1A1 gene to underlie the severe osteogenesis imperfecta.</title>
        <authorList>
            <person name="Maasalu K."/>
            <person name="Nikopensius T."/>
            <person name="Koks S."/>
            <person name="Noukas M."/>
            <person name="Kals M."/>
            <person name="Prans E."/>
            <person name="Zhytnik L."/>
            <person name="Metspalu A."/>
            <person name="Maertson A."/>
        </authorList>
    </citation>
    <scope>VARIANT OI2 CYS-773</scope>
</reference>
<reference key="120">
    <citation type="journal article" date="2016" name="Hum. Genomics">
        <title>Mutation analysis of the COL1A1 and COL1A2 genes in Vietnamese patients with osteogenesis imperfecta.</title>
        <authorList>
            <person name="Ho Duy B."/>
            <person name="Zhytnik L."/>
            <person name="Maasalu K."/>
            <person name="Kaendla I."/>
            <person name="Prans E."/>
            <person name="Reimann E."/>
            <person name="Maertson A."/>
            <person name="Koks S."/>
        </authorList>
    </citation>
    <scope>VARIANTS OI1 ASP-197; ASP-326; CYS-389; SER-767; SER-821 AND PRO-1464</scope>
    <scope>VARIANTS OI4 SER-317; ASP-320; SER-368; SER-761; SER-821 AND SER-1076</scope>
    <scope>VARIANTS OI3 VAL-311; SER-389; ASP-450; SER-767 AND SER-866</scope>
</reference>
<reference key="121">
    <citation type="journal article" date="2016" name="Osteoporos. Int.">
        <title>DNA sequence analysis in 598 individuals with a clinical diagnosis of osteogenesis imperfecta: diagnostic yield and mutation spectrum.</title>
        <authorList>
            <person name="Bardai G."/>
            <person name="Moffatt P."/>
            <person name="Glorieux F.H."/>
            <person name="Rauch F."/>
        </authorList>
    </citation>
    <scope>VARIANT OI4 CYS-560</scope>
</reference>
<comment type="function">
    <text>Type I collagen is a member of group I collagen (fibrillar forming collagen).</text>
</comment>
<comment type="subunit">
    <text evidence="2 3 16">Trimers of one alpha 2(I) and two alpha 1(I) chains. Interacts with MRC2 (By similarity). Interacts with TRAM2 (PubMed:14749390). Interacts with MFAP4 in a Ca (2+)-dependent manner (By similarity).</text>
</comment>
<comment type="interaction">
    <interactant intactId="EBI-982999">
        <id>P02452</id>
    </interactant>
    <interactant intactId="EBI-983038">
        <id>P08123</id>
        <label>COL1A2</label>
    </interactant>
    <organismsDiffer>false</organismsDiffer>
    <experiments>5</experiments>
</comment>
<comment type="interaction">
    <interactant intactId="EBI-982999">
        <id>P02452</id>
    </interactant>
    <interactant intactId="EBI-1220319">
        <id>P02751</id>
        <label>FN1</label>
    </interactant>
    <organismsDiffer>false</organismsDiffer>
    <experiments>3</experiments>
</comment>
<comment type="interaction">
    <interactant intactId="EBI-982999">
        <id>P02452</id>
    </interactant>
    <interactant intactId="EBI-751001">
        <id>Q14145</id>
        <label>KEAP1</label>
    </interactant>
    <organismsDiffer>false</organismsDiffer>
    <experiments>3</experiments>
</comment>
<comment type="interaction">
    <interactant intactId="EBI-982999">
        <id>P02452</id>
    </interactant>
    <interactant intactId="EBI-16769620">
        <id>Q8TBP6</id>
        <label>SLC25A40</label>
    </interactant>
    <organismsDiffer>false</organismsDiffer>
    <experiments>2</experiments>
</comment>
<comment type="interaction">
    <interactant intactId="EBI-982999">
        <id>P02452</id>
    </interactant>
    <interactant intactId="EBI-7685554">
        <id>O01949</id>
        <label>AAEL010235</label>
    </interactant>
    <organismsDiffer>true</organismsDiffer>
    <experiments>5</experiments>
</comment>
<comment type="subcellular location">
    <subcellularLocation>
        <location evidence="8">Secreted</location>
        <location evidence="8">Extracellular space</location>
        <location evidence="8">Extracellular matrix</location>
    </subcellularLocation>
</comment>
<comment type="tissue specificity">
    <text>Forms the fibrils of tendon, ligaments and bones. In bones the fibrils are mineralized with calcium hydroxyapatite.</text>
</comment>
<comment type="domain">
    <text evidence="1">The C-terminal propeptide, also known as COLFI domain, have crucial roles in tissue growth and repair by controlling both the intracellular assembly of procollagen molecules and the extracellular assembly of collagen fibrils. It binds a calcium ion which is essential for its function (By similarity).</text>
</comment>
<comment type="PTM">
    <text evidence="71">Contains mostly 4-hydroxyproline. Proline residues at the third position of the tripeptide repeating unit (G-X-Y) are hydroxylated in some or all of the chains.</text>
</comment>
<comment type="PTM">
    <text evidence="5">Contains 3-hydroxyproline at a few sites. This modification occurs on the first proline residue in the sequence motif Gly-Pro-Hyp, where Hyp is 4-hydroxyproline.</text>
</comment>
<comment type="PTM">
    <text evidence="71">Lysine residues at the third position of the tripeptide repeating unit (G-X-Y) are 5-hydroxylated in some or all of the chains.</text>
</comment>
<comment type="PTM">
    <text evidence="71">O-glycosylated on hydroxylated lysine residues. The O-linked glycan consists of a Glc-Gal disaccharide.</text>
</comment>
<comment type="disease" evidence="20">
    <disease id="DI-01310">
        <name>Caffey disease</name>
        <acronym>CAFYD</acronym>
        <description>An autosomal dominant disorder characterized by an infantile episode of massive subperiosteal new bone formation that typically involves the diaphyses of the long bones, mandible, and clavicles. The involved bones may also appear inflamed, with painful swelling and systemic fever often accompanying the illness. The bone changes usually begin before 5 months of age and resolve before 2 years of age.</description>
        <dbReference type="MIM" id="114000"/>
    </disease>
    <text>The disease is caused by variants affecting the gene represented in this entry.</text>
</comment>
<comment type="disease" evidence="12 31">
    <disease id="DI-00436">
        <name>Ehlers-Danlos syndrome, classic type, 1</name>
        <acronym>EDSCL1</acronym>
        <description>A form of Ehlers-Danlos syndrome, a group of connective tissue disorders characterized by skin hyperextensibility, articular hypermobility, and tissue fragility. The main features of classic Ehlers-Danlos syndrome are joint hypermobility and dislocation, and fragile, bruisable skin. EDSCL1 inheritance is autosomal dominant.</description>
        <dbReference type="MIM" id="130000"/>
    </disease>
    <text>The disease may be caused by variants affecting the gene represented in this entry.</text>
</comment>
<comment type="disease" evidence="36 99">
    <disease id="DI-00442">
        <name>Ehlers-Danlos syndrome, arthrochalasia type, 1</name>
        <acronym>EDSARTH1</acronym>
        <description>A form of Ehlers-Danlos syndrome, a connective tissue disorder characterized by hyperextensible skin, atrophic cutaneous scars due to tissue fragility and joint hyperlaxity. EDSARTH1 is an autosomal dominant form characterized by frequent congenital hip dislocation and extreme joint laxity with recurrent joint subluxations and minimal skin involvement.</description>
        <dbReference type="MIM" id="130060"/>
    </disease>
    <text>The disease is caused by variants affecting the gene represented in this entry.</text>
</comment>
<comment type="disease" evidence="22 24 25 26 28 29 32 34 37 53 60 62 67 85">
    <disease id="DI-02106">
        <name>Osteogenesis imperfecta 1</name>
        <acronym>OI1</acronym>
        <description>An autosomal dominant form of osteogenesis imperfecta, a disorder of bone formation characterized by bone low bone mass, bone fragility and susceptibility to fractures after minimal trauma. Disease severity ranges from very mild forms without fractures to intrauterine fractures and perinatal lethality. Extraskeletal manifestations, which affect a variable number of patients, are dentinogenesis imperfecta, hearing loss, and blue sclerae. OI1 is a non-deforming form with normal height or mild short stature, and no dentinogenesis imperfecta.</description>
        <dbReference type="MIM" id="166200"/>
    </disease>
    <text>The disease is caused by variants affecting the gene represented in this entry.</text>
</comment>
<comment type="disease" evidence="11 13 14 15 17 21 23 26 28 37 39 40 41 42 44 45 46 47 48 50 51 54 57 61 62 63 64 65 69 70 74 75 76 77 78 80 84 87 88 89 90 94 95 98 104 105">
    <disease id="DI-02107">
        <name>Osteogenesis imperfecta 2</name>
        <acronym>OI2</acronym>
        <description>An autosomal dominant form of osteogenesis imperfecta, a disorder of bone formation characterized by low bone mass, bone fragility and susceptibility to fractures after minimal trauma. Disease severity ranges from very mild forms without fractures to intrauterine fractures and perinatal lethality. Extraskeletal manifestations, which affect a variable number of patients, are dentinogenesis imperfecta, hearing loss, and blue sclerae. OI2 is characterized by bone fragility, with many perinatal fractures, severe bowing of long bones, undermineralization, and death in the perinatal period due to respiratory insufficiency.</description>
        <dbReference type="MIM" id="166210"/>
    </disease>
    <text>The disease is caused by variants affecting the gene represented in this entry.</text>
</comment>
<comment type="disease" evidence="10 13 27 28 33 37 46 55 56 60 62 77 79 82 89 91 92 93 97">
    <disease id="DI-02108">
        <name>Osteogenesis imperfecta 3</name>
        <acronym>OI3</acronym>
        <description>An autosomal dominant form of osteogenesis imperfecta, a disorder of bone formation characterized by low bone mass, bone fragility and susceptibility to fractures after minimal trauma. Disease severity ranges from very mild forms without fractures to intrauterine fractures and perinatal lethality. Extraskeletal manifestations, which affect a variable number of patients, are dentinogenesis imperfecta, hearing loss, and blue sclerae. OI3 is characterized by progressively deforming bones, very short stature, a triangular face, severe scoliosis, grayish sclera and dentinogenesis imperfecta.</description>
        <dbReference type="MIM" id="259420"/>
    </disease>
    <text>The disease is caused by variants affecting the gene represented in this entry.</text>
</comment>
<comment type="disease" evidence="13 26 27 33 34 43 58 59 60 77 81 83 86 102">
    <disease id="DI-02103">
        <name>Osteogenesis imperfecta 4</name>
        <acronym>OI4</acronym>
        <description>An autosomal dominant form of osteogenesis imperfecta, a disorder of bone formation characterized by low bone mass, bone fragility and susceptibility to fractures after minimal trauma. Disease severity ranges from very mild forms without fractures to intrauterine fractures and perinatal lethality. Extraskeletal manifestations, which affect a variable number of patients, are dentinogenesis imperfecta, hearing loss, and blue sclerae. OI4 is characterized by moderately short stature, mild to moderate scoliosis, grayish or white sclera and dentinogenesis imperfecta.</description>
        <dbReference type="MIM" id="166220"/>
    </disease>
    <text>The disease is caused by variants affecting the gene represented in this entry.</text>
</comment>
<comment type="disease" evidence="19 30 52">
    <disease id="DI-05986">
        <name>Combined osteogenesis imperfecta and Ehlers-Danlos syndrome 1</name>
        <acronym>OIEDS1</acronym>
        <description>An autosomal dominant connective tissue disorder characterized by osteopenia, bone fragility, long bone fractures, blue sclerae, joint hyperextensibility, soft and hyperextensible skin, abnormal wound healing, easy bruising, and vascular fragility.</description>
        <dbReference type="MIM" id="619115"/>
    </disease>
    <text>The disease is caused by variants affecting the gene represented in this entry.</text>
</comment>
<comment type="disease" evidence="96 101">
    <disease id="DI-02659">
        <name>Osteoporosis</name>
        <acronym>OSTEOP</acronym>
        <description>A systemic skeletal disorder characterized by decreased bone mass and deterioration of bone microarchitecture without alteration in the composition of bone. The result is fragile bones and an increased risk of fractures, even after minimal trauma. Osteoporosis is a chronic condition of multifactorial etiology and is usually clinically silent until a fracture occurs.</description>
        <dbReference type="MIM" id="166710"/>
    </disease>
    <text>Disease susceptibility is associated with variants affecting the gene represented in this entry.</text>
</comment>
<comment type="disease">
    <text>A chromosomal aberration involving COL1A1 is found in dermatofibrosarcoma protuberans. Translocation t(17;22)(q22;q13) with PDGF.</text>
</comment>
<comment type="similarity">
    <text evidence="8">Belongs to the fibrillar collagen family.</text>
</comment>
<comment type="sequence caution" evidence="106">
    <conflict type="erroneous initiation">
        <sequence resource="EMBL-CDS" id="BAD92834"/>
    </conflict>
    <text>Extended N-terminus.</text>
</comment>
<comment type="online information" name="Osteogenesis imperfecta variant database">
    <link uri="https://www.LOVD.nl/COL1A1"/>
    <text>The COL1A1 gene homepage</text>
</comment>
<comment type="online information" name="Atlas of Genetics and Cytogenetics in Oncology and Haematology">
    <link uri="https://atlasgeneticsoncology.org/gene/186/COL1A1"/>
</comment>
<comment type="online information" name="Wikipedia">
    <link uri="https://en.wikipedia.org/wiki/Type-I_collagen"/>
    <text>Type-I collagen entry</text>
</comment>
<proteinExistence type="evidence at protein level"/>
<accession>P02452</accession>
<accession>O76045</accession>
<accession>P78441</accession>
<accession>Q13896</accession>
<accession>Q13902</accession>
<accession>Q13903</accession>
<accession>Q14037</accession>
<accession>Q14992</accession>
<accession>Q15176</accession>
<accession>Q15201</accession>
<accession>Q16050</accession>
<accession>Q59F64</accession>
<accession>Q7KZ30</accession>
<accession>Q7KZ34</accession>
<accession>Q8IVI5</accession>
<accession>Q8N473</accession>
<accession>Q9UML6</accession>
<accession>Q9UMM7</accession>
<evidence type="ECO:0000250" key="1"/>
<evidence type="ECO:0000250" key="2">
    <source>
        <dbReference type="UniProtKB" id="P02453"/>
    </source>
</evidence>
<evidence type="ECO:0000250" key="3">
    <source>
        <dbReference type="UniProtKB" id="P02454"/>
    </source>
</evidence>
<evidence type="ECO:0000250" key="4">
    <source>
        <dbReference type="UniProtKB" id="P02457"/>
    </source>
</evidence>
<evidence type="ECO:0000250" key="5">
    <source>
        <dbReference type="UniProtKB" id="P11087"/>
    </source>
</evidence>
<evidence type="ECO:0000255" key="6"/>
<evidence type="ECO:0000255" key="7">
    <source>
        <dbReference type="PROSITE-ProRule" id="PRU00220"/>
    </source>
</evidence>
<evidence type="ECO:0000255" key="8">
    <source>
        <dbReference type="PROSITE-ProRule" id="PRU00793"/>
    </source>
</evidence>
<evidence type="ECO:0000256" key="9">
    <source>
        <dbReference type="SAM" id="MobiDB-lite"/>
    </source>
</evidence>
<evidence type="ECO:0000269" key="10">
    <source>
    </source>
</evidence>
<evidence type="ECO:0000269" key="11">
    <source>
    </source>
</evidence>
<evidence type="ECO:0000269" key="12">
    <source>
    </source>
</evidence>
<evidence type="ECO:0000269" key="13">
    <source>
    </source>
</evidence>
<evidence type="ECO:0000269" key="14">
    <source>
    </source>
</evidence>
<evidence type="ECO:0000269" key="15">
    <source>
    </source>
</evidence>
<evidence type="ECO:0000269" key="16">
    <source>
    </source>
</evidence>
<evidence type="ECO:0000269" key="17">
    <source>
    </source>
</evidence>
<evidence type="ECO:0000269" key="18">
    <source>
    </source>
</evidence>
<evidence type="ECO:0000269" key="19">
    <source>
    </source>
</evidence>
<evidence type="ECO:0000269" key="20">
    <source>
    </source>
</evidence>
<evidence type="ECO:0000269" key="21">
    <source>
    </source>
</evidence>
<evidence type="ECO:0000269" key="22">
    <source>
    </source>
</evidence>
<evidence type="ECO:0000269" key="23">
    <source>
    </source>
</evidence>
<evidence type="ECO:0000269" key="24">
    <source>
    </source>
</evidence>
<evidence type="ECO:0000269" key="25">
    <source>
    </source>
</evidence>
<evidence type="ECO:0000269" key="26">
    <source>
    </source>
</evidence>
<evidence type="ECO:0000269" key="27">
    <source>
    </source>
</evidence>
<evidence type="ECO:0000269" key="28">
    <source>
    </source>
</evidence>
<evidence type="ECO:0000269" key="29">
    <source>
    </source>
</evidence>
<evidence type="ECO:0000269" key="30">
    <source>
    </source>
</evidence>
<evidence type="ECO:0000269" key="31">
    <source>
    </source>
</evidence>
<evidence type="ECO:0000269" key="32">
    <source>
    </source>
</evidence>
<evidence type="ECO:0000269" key="33">
    <source>
    </source>
</evidence>
<evidence type="ECO:0000269" key="34">
    <source>
    </source>
</evidence>
<evidence type="ECO:0000269" key="35">
    <source>
    </source>
</evidence>
<evidence type="ECO:0000269" key="36">
    <source>
    </source>
</evidence>
<evidence type="ECO:0000269" key="37">
    <source>
    </source>
</evidence>
<evidence type="ECO:0000269" key="38">
    <source>
    </source>
</evidence>
<evidence type="ECO:0000269" key="39">
    <source>
    </source>
</evidence>
<evidence type="ECO:0000269" key="40">
    <source>
    </source>
</evidence>
<evidence type="ECO:0000269" key="41">
    <source>
    </source>
</evidence>
<evidence type="ECO:0000269" key="42">
    <source>
    </source>
</evidence>
<evidence type="ECO:0000269" key="43">
    <source>
    </source>
</evidence>
<evidence type="ECO:0000269" key="44">
    <source>
    </source>
</evidence>
<evidence type="ECO:0000269" key="45">
    <source>
    </source>
</evidence>
<evidence type="ECO:0000269" key="46">
    <source>
    </source>
</evidence>
<evidence type="ECO:0000269" key="47">
    <source>
    </source>
</evidence>
<evidence type="ECO:0000269" key="48">
    <source>
    </source>
</evidence>
<evidence type="ECO:0000269" key="49">
    <source>
    </source>
</evidence>
<evidence type="ECO:0000269" key="50">
    <source>
    </source>
</evidence>
<evidence type="ECO:0000269" key="51">
    <source>
    </source>
</evidence>
<evidence type="ECO:0000269" key="52">
    <source>
    </source>
</evidence>
<evidence type="ECO:0000269" key="53">
    <source>
    </source>
</evidence>
<evidence type="ECO:0000269" key="54">
    <source>
    </source>
</evidence>
<evidence type="ECO:0000269" key="55">
    <source>
    </source>
</evidence>
<evidence type="ECO:0000269" key="56">
    <source>
    </source>
</evidence>
<evidence type="ECO:0000269" key="57">
    <source>
    </source>
</evidence>
<evidence type="ECO:0000269" key="58">
    <source>
    </source>
</evidence>
<evidence type="ECO:0000269" key="59">
    <source>
    </source>
</evidence>
<evidence type="ECO:0000269" key="60">
    <source>
    </source>
</evidence>
<evidence type="ECO:0000269" key="61">
    <source>
    </source>
</evidence>
<evidence type="ECO:0000269" key="62">
    <source>
    </source>
</evidence>
<evidence type="ECO:0000269" key="63">
    <source>
    </source>
</evidence>
<evidence type="ECO:0000269" key="64">
    <source>
    </source>
</evidence>
<evidence type="ECO:0000269" key="65">
    <source>
    </source>
</evidence>
<evidence type="ECO:0000269" key="66">
    <source>
    </source>
</evidence>
<evidence type="ECO:0000269" key="67">
    <source>
    </source>
</evidence>
<evidence type="ECO:0000269" key="68">
    <source>
    </source>
</evidence>
<evidence type="ECO:0000269" key="69">
    <source>
    </source>
</evidence>
<evidence type="ECO:0000269" key="70">
    <source>
    </source>
</evidence>
<evidence type="ECO:0000269" key="71">
    <source>
    </source>
</evidence>
<evidence type="ECO:0000269" key="72">
    <source>
    </source>
</evidence>
<evidence type="ECO:0000269" key="73">
    <source>
    </source>
</evidence>
<evidence type="ECO:0000269" key="74">
    <source>
    </source>
</evidence>
<evidence type="ECO:0000269" key="75">
    <source>
    </source>
</evidence>
<evidence type="ECO:0000269" key="76">
    <source>
    </source>
</evidence>
<evidence type="ECO:0000269" key="77">
    <source>
    </source>
</evidence>
<evidence type="ECO:0000269" key="78">
    <source>
    </source>
</evidence>
<evidence type="ECO:0000269" key="79">
    <source>
    </source>
</evidence>
<evidence type="ECO:0000269" key="80">
    <source>
    </source>
</evidence>
<evidence type="ECO:0000269" key="81">
    <source>
    </source>
</evidence>
<evidence type="ECO:0000269" key="82">
    <source>
    </source>
</evidence>
<evidence type="ECO:0000269" key="83">
    <source>
    </source>
</evidence>
<evidence type="ECO:0000269" key="84">
    <source>
    </source>
</evidence>
<evidence type="ECO:0000269" key="85">
    <source>
    </source>
</evidence>
<evidence type="ECO:0000269" key="86">
    <source>
    </source>
</evidence>
<evidence type="ECO:0000269" key="87">
    <source>
    </source>
</evidence>
<evidence type="ECO:0000269" key="88">
    <source>
    </source>
</evidence>
<evidence type="ECO:0000269" key="89">
    <source>
    </source>
</evidence>
<evidence type="ECO:0000269" key="90">
    <source>
    </source>
</evidence>
<evidence type="ECO:0000269" key="91">
    <source>
    </source>
</evidence>
<evidence type="ECO:0000269" key="92">
    <source>
    </source>
</evidence>
<evidence type="ECO:0000269" key="93">
    <source>
    </source>
</evidence>
<evidence type="ECO:0000269" key="94">
    <source>
    </source>
</evidence>
<evidence type="ECO:0000269" key="95">
    <source>
    </source>
</evidence>
<evidence type="ECO:0000269" key="96">
    <source>
    </source>
</evidence>
<evidence type="ECO:0000269" key="97">
    <source>
    </source>
</evidence>
<evidence type="ECO:0000269" key="98">
    <source>
    </source>
</evidence>
<evidence type="ECO:0000269" key="99">
    <source>
    </source>
</evidence>
<evidence type="ECO:0000269" key="100">
    <source>
    </source>
</evidence>
<evidence type="ECO:0000269" key="101">
    <source>
    </source>
</evidence>
<evidence type="ECO:0000269" key="102">
    <source>
    </source>
</evidence>
<evidence type="ECO:0000269" key="103">
    <source ref="1"/>
</evidence>
<evidence type="ECO:0000269" key="104">
    <source ref="49"/>
</evidence>
<evidence type="ECO:0000269" key="105">
    <source ref="52"/>
</evidence>
<evidence type="ECO:0000305" key="106"/>
<evidence type="ECO:0007829" key="107">
    <source>
        <dbReference type="PDB" id="3EJH"/>
    </source>
</evidence>
<evidence type="ECO:0007829" key="108">
    <source>
        <dbReference type="PDB" id="3GXE"/>
    </source>
</evidence>
<evidence type="ECO:0007829" key="109">
    <source>
        <dbReference type="PDB" id="5K31"/>
    </source>
</evidence>
<organism>
    <name type="scientific">Homo sapiens</name>
    <name type="common">Human</name>
    <dbReference type="NCBI Taxonomy" id="9606"/>
    <lineage>
        <taxon>Eukaryota</taxon>
        <taxon>Metazoa</taxon>
        <taxon>Chordata</taxon>
        <taxon>Craniata</taxon>
        <taxon>Vertebrata</taxon>
        <taxon>Euteleostomi</taxon>
        <taxon>Mammalia</taxon>
        <taxon>Eutheria</taxon>
        <taxon>Euarchontoglires</taxon>
        <taxon>Primates</taxon>
        <taxon>Haplorrhini</taxon>
        <taxon>Catarrhini</taxon>
        <taxon>Hominidae</taxon>
        <taxon>Homo</taxon>
    </lineage>
</organism>
<keyword id="KW-0002">3D-structure</keyword>
<keyword id="KW-0106">Calcium</keyword>
<keyword id="KW-0160">Chromosomal rearrangement</keyword>
<keyword id="KW-0176">Collagen</keyword>
<keyword id="KW-0903">Direct protein sequencing</keyword>
<keyword id="KW-0225">Disease variant</keyword>
<keyword id="KW-1015">Disulfide bond</keyword>
<keyword id="KW-0242">Dwarfism</keyword>
<keyword id="KW-0248">Ehlers-Danlos syndrome</keyword>
<keyword id="KW-0272">Extracellular matrix</keyword>
<keyword id="KW-0325">Glycoprotein</keyword>
<keyword id="KW-0379">Hydroxylation</keyword>
<keyword id="KW-0479">Metal-binding</keyword>
<keyword id="KW-1065">Osteogenesis imperfecta</keyword>
<keyword id="KW-1285">Osteoporosis</keyword>
<keyword id="KW-0597">Phosphoprotein</keyword>
<keyword id="KW-1267">Proteomics identification</keyword>
<keyword id="KW-0873">Pyrrolidone carboxylic acid</keyword>
<keyword id="KW-1185">Reference proteome</keyword>
<keyword id="KW-0677">Repeat</keyword>
<keyword id="KW-0964">Secreted</keyword>
<keyword id="KW-0732">Signal</keyword>
<name>CO1A1_HUMAN</name>
<sequence length="1464" mass="138911">MFSFVDLRLLLLLAATALLTHGQEEGQVEGQDEDIPPITCVQNGLRYHDRDVWKPEPCRICVCDNGKVLCDDVICDETKNCPGAEVPEGECCPVCPDGSESPTDQETTGVEGPKGDTGPRGPRGPAGPPGRDGIPGQPGLPGPPGPPGPPGPPGLGGNFAPQLSYGYDEKSTGGISVPGPMGPSGPRGLPGPPGAPGPQGFQGPPGEPGEPGASGPMGPRGPPGPPGKNGDDGEAGKPGRPGERGPPGPQGARGLPGTAGLPGMKGHRGFSGLDGAKGDAGPAGPKGEPGSPGENGAPGQMGPRGLPGERGRPGAPGPAGARGNDGATGAAGPPGPTGPAGPPGFPGAVGAKGEAGPQGPRGSEGPQGVRGEPGPPGPAGAAGPAGNPGADGQPGAKGANGAPGIAGAPGFPGARGPSGPQGPGGPPGPKGNSGEPGAPGSKGDTGAKGEPGPVGVQGPPGPAGEEGKRGARGEPGPTGLPGPPGERGGPGSRGFPGADGVAGPKGPAGERGSPGPAGPKGSPGEAGRPGEAGLPGAKGLTGSPGSPGPDGKTGPPGPAGQDGRPGPPGPPGARGQAGVMGFPGPKGAAGEPGKAGERGVPGPPGAVGPAGKDGEAGAQGPPGPAGPAGERGEQGPAGSPGFQGLPGPAGPPGEAGKPGEQGVPGDLGAPGPSGARGERGFPGERGVQGPPGPAGPRGANGAPGNDGAKGDAGAPGAPGSQGAPGLQGMPGERGAAGLPGPKGDRGDAGPKGADGSPGKDGVRGLTGPIGPPGPAGAPGDKGESGPSGPAGPTGARGAPGDRGEPGPPGPAGFAGPPGADGQPGAKGEPGDAGAKGDAGPPGPAGPAGPPGPIGNVGAPGAKGARGSAGPPGATGFPGAAGRVGPPGPSGNAGPPGPPGPAGKEGGKGPRGETGPAGRPGEVGPPGPPGPAGEKGSPGADGPAGAPGTPGPQGIAGQRGVVGLPGQRGERGFPGLPGPSGEPGKQGPSGASGERGPPGPMGPPGLAGPPGESGREGAPGAEGSPGRDGSPGAKGDRGETGPAGPPGAPGAPGAPGPVGPAGKSGDRGETGPAGPAGPVGPVGARGPAGPQGPRGDKGETGEQGDRGIKGHRGFSGLQGPPGPPGSPGEQGPSGASGPAGPRGPPGSAGAPGKDGLNGLPGPIGPPGPRGRTGDAGPVGPPGPPGPPGPPGPPSAGFDFSFLPQPPQEKAHDGGRYYRADDANVVRDRDLEVDTTLKSLSQQIENIRSPEGSRKNPARTCRDLKMCHSDWKSGEYWIDPNQGCNLDAIKVFCNMETGETCVYPTQPSVAQKNWYISKNPKDKRHVWFGESMTDGFQFEYGGQGSDPADVAIQLTFLRLMSTEASQNITYHCKNSVAYMDQQTGNLKKALLLQGSNEIEIRAEGNSRFTYSVTVDGCTSHTGAWGKTVIEYKTTKTSRLPIIDVAPLDVGAPDQEFGFDVGPVCFL</sequence>
<gene>
    <name type="primary">COL1A1</name>
</gene>
<protein>
    <recommendedName>
        <fullName>Collagen alpha-1(I) chain</fullName>
    </recommendedName>
    <alternativeName>
        <fullName>Alpha-1 type I collagen</fullName>
    </alternativeName>
</protein>